<dbReference type="EMBL" id="X00090">
    <property type="protein sequence ID" value="CAA24952.1"/>
    <property type="molecule type" value="Genomic_DNA"/>
</dbReference>
<dbReference type="EMBL" id="M26150">
    <property type="protein sequence ID" value="AAA52651.1"/>
    <property type="molecule type" value="Genomic_DNA"/>
</dbReference>
<dbReference type="EMBL" id="M60746">
    <property type="protein sequence ID" value="AAA63185.1"/>
    <property type="molecule type" value="Genomic_DNA"/>
</dbReference>
<dbReference type="EMBL" id="X57128">
    <property type="protein sequence ID" value="CAA40407.1"/>
    <property type="molecule type" value="Genomic_DNA"/>
</dbReference>
<dbReference type="EMBL" id="Z46261">
    <property type="protein sequence ID" value="CAA86403.1"/>
    <property type="molecule type" value="Genomic_DNA"/>
</dbReference>
<dbReference type="EMBL" id="X83550">
    <property type="protein sequence ID" value="CAA58540.1"/>
    <property type="molecule type" value="Genomic_DNA"/>
</dbReference>
<dbReference type="EMBL" id="Z80784">
    <property type="protein sequence ID" value="CAB02546.1"/>
    <property type="molecule type" value="Genomic_DNA"/>
</dbReference>
<dbReference type="EMBL" id="Z80785">
    <property type="protein sequence ID" value="CAB02547.1"/>
    <property type="molecule type" value="Genomic_DNA"/>
</dbReference>
<dbReference type="EMBL" id="Z80786">
    <property type="protein sequence ID" value="CAB02548.1"/>
    <property type="molecule type" value="Genomic_DNA"/>
</dbReference>
<dbReference type="EMBL" id="Z83735">
    <property type="protein sequence ID" value="CAB06030.1"/>
    <property type="molecule type" value="Genomic_DNA"/>
</dbReference>
<dbReference type="EMBL" id="Z83737">
    <property type="protein sequence ID" value="CAB06032.1"/>
    <property type="molecule type" value="Genomic_DNA"/>
</dbReference>
<dbReference type="EMBL" id="AF531274">
    <property type="protein sequence ID" value="AAN10051.1"/>
    <property type="molecule type" value="Genomic_DNA"/>
</dbReference>
<dbReference type="EMBL" id="AF531275">
    <property type="protein sequence ID" value="AAN10052.1"/>
    <property type="molecule type" value="Genomic_DNA"/>
</dbReference>
<dbReference type="EMBL" id="AF531276">
    <property type="protein sequence ID" value="AAN10053.1"/>
    <property type="molecule type" value="Genomic_DNA"/>
</dbReference>
<dbReference type="EMBL" id="AF531277">
    <property type="protein sequence ID" value="AAN10054.1"/>
    <property type="molecule type" value="Genomic_DNA"/>
</dbReference>
<dbReference type="EMBL" id="AF531278">
    <property type="protein sequence ID" value="AAN10055.1"/>
    <property type="molecule type" value="Genomic_DNA"/>
</dbReference>
<dbReference type="EMBL" id="AF531279">
    <property type="protein sequence ID" value="AAN10056.1"/>
    <property type="molecule type" value="Genomic_DNA"/>
</dbReference>
<dbReference type="EMBL" id="AF531280">
    <property type="protein sequence ID" value="AAN10057.1"/>
    <property type="molecule type" value="Genomic_DNA"/>
</dbReference>
<dbReference type="EMBL" id="AF531281">
    <property type="protein sequence ID" value="AAN10058.1"/>
    <property type="molecule type" value="Genomic_DNA"/>
</dbReference>
<dbReference type="EMBL" id="AF531282">
    <property type="protein sequence ID" value="AAN10059.1"/>
    <property type="molecule type" value="Genomic_DNA"/>
</dbReference>
<dbReference type="EMBL" id="AF531283">
    <property type="protein sequence ID" value="AAN10060.1"/>
    <property type="molecule type" value="Genomic_DNA"/>
</dbReference>
<dbReference type="EMBL" id="AK311991">
    <property type="protein sequence ID" value="BAG34929.1"/>
    <property type="molecule type" value="mRNA"/>
</dbReference>
<dbReference type="EMBL" id="AK313905">
    <property type="protein sequence ID" value="BAG36628.1"/>
    <property type="molecule type" value="mRNA"/>
</dbReference>
<dbReference type="EMBL" id="AK314142">
    <property type="protein sequence ID" value="BAG36832.1"/>
    <property type="molecule type" value="mRNA"/>
</dbReference>
<dbReference type="EMBL" id="AK316611">
    <property type="protein sequence ID" value="BAG38198.1"/>
    <property type="molecule type" value="mRNA"/>
</dbReference>
<dbReference type="EMBL" id="CR542014">
    <property type="protein sequence ID" value="CAG46811.1"/>
    <property type="molecule type" value="mRNA"/>
</dbReference>
<dbReference type="EMBL" id="CR542011">
    <property type="protein sequence ID" value="CAG46808.1"/>
    <property type="molecule type" value="mRNA"/>
</dbReference>
<dbReference type="EMBL" id="CR541983">
    <property type="protein sequence ID" value="CAG46780.1"/>
    <property type="molecule type" value="mRNA"/>
</dbReference>
<dbReference type="EMBL" id="CR541858">
    <property type="protein sequence ID" value="CAG46656.1"/>
    <property type="molecule type" value="mRNA"/>
</dbReference>
<dbReference type="EMBL" id="Z98744">
    <property type="status" value="NOT_ANNOTATED_CDS"/>
    <property type="molecule type" value="Genomic_DNA"/>
</dbReference>
<dbReference type="EMBL" id="AL009179">
    <property type="status" value="NOT_ANNOTATED_CDS"/>
    <property type="molecule type" value="Genomic_DNA"/>
</dbReference>
<dbReference type="EMBL" id="AL031777">
    <property type="status" value="NOT_ANNOTATED_CDS"/>
    <property type="molecule type" value="Genomic_DNA"/>
</dbReference>
<dbReference type="EMBL" id="BC031333">
    <property type="protein sequence ID" value="AAH31333.1"/>
    <property type="molecule type" value="mRNA"/>
</dbReference>
<dbReference type="EMBL" id="BC066245">
    <property type="protein sequence ID" value="AAH66245.1"/>
    <property type="molecule type" value="mRNA"/>
</dbReference>
<dbReference type="EMBL" id="BC066246">
    <property type="protein sequence ID" value="AAH66246.1"/>
    <property type="molecule type" value="mRNA"/>
</dbReference>
<dbReference type="EMBL" id="BC066247">
    <property type="protein sequence ID" value="AAH66247.1"/>
    <property type="molecule type" value="mRNA"/>
</dbReference>
<dbReference type="EMBL" id="BC066884">
    <property type="protein sequence ID" value="AAH66884.1"/>
    <property type="molecule type" value="mRNA"/>
</dbReference>
<dbReference type="EMBL" id="BC067490">
    <property type="protein sequence ID" value="AAH67490.1"/>
    <property type="molecule type" value="mRNA"/>
</dbReference>
<dbReference type="EMBL" id="BC067491">
    <property type="protein sequence ID" value="AAH67491.1"/>
    <property type="molecule type" value="mRNA"/>
</dbReference>
<dbReference type="EMBL" id="BC067492">
    <property type="protein sequence ID" value="AAH67492.1"/>
    <property type="molecule type" value="mRNA"/>
</dbReference>
<dbReference type="EMBL" id="BC067493">
    <property type="protein sequence ID" value="AAH67493.1"/>
    <property type="molecule type" value="mRNA"/>
</dbReference>
<dbReference type="EMBL" id="BC069133">
    <property type="protein sequence ID" value="AAH69133.1"/>
    <property type="molecule type" value="mRNA"/>
</dbReference>
<dbReference type="EMBL" id="BC069303">
    <property type="protein sequence ID" value="AAH69303.1"/>
    <property type="molecule type" value="mRNA"/>
</dbReference>
<dbReference type="EMBL" id="BC069305">
    <property type="protein sequence ID" value="AAH69305.2"/>
    <property type="molecule type" value="mRNA"/>
</dbReference>
<dbReference type="EMBL" id="BC069818">
    <property type="protein sequence ID" value="AAH69818.1"/>
    <property type="molecule type" value="mRNA"/>
</dbReference>
<dbReference type="EMBL" id="BC096128">
    <property type="protein sequence ID" value="AAH96128.1"/>
    <property type="molecule type" value="mRNA"/>
</dbReference>
<dbReference type="EMBL" id="BC096129">
    <property type="protein sequence ID" value="AAH96129.1"/>
    <property type="molecule type" value="mRNA"/>
</dbReference>
<dbReference type="EMBL" id="BC096130">
    <property type="protein sequence ID" value="AAH96130.1"/>
    <property type="molecule type" value="mRNA"/>
</dbReference>
<dbReference type="EMBL" id="BC096131">
    <property type="protein sequence ID" value="AAH96131.1"/>
    <property type="molecule type" value="mRNA"/>
</dbReference>
<dbReference type="EMBL" id="BC096132">
    <property type="protein sequence ID" value="AAH96132.1"/>
    <property type="molecule type" value="mRNA"/>
</dbReference>
<dbReference type="EMBL" id="BC096133">
    <property type="protein sequence ID" value="AAH96133.1"/>
    <property type="molecule type" value="mRNA"/>
</dbReference>
<dbReference type="EMBL" id="BC096134">
    <property type="protein sequence ID" value="AAH96134.1"/>
    <property type="molecule type" value="mRNA"/>
</dbReference>
<dbReference type="EMBL" id="BC099630">
    <property type="protein sequence ID" value="AAH99630.1"/>
    <property type="molecule type" value="mRNA"/>
</dbReference>
<dbReference type="EMBL" id="BC127610">
    <property type="protein sequence ID" value="AAI27611.1"/>
    <property type="molecule type" value="mRNA"/>
</dbReference>
<dbReference type="EMBL" id="BC143046">
    <property type="protein sequence ID" value="AAI43047.1"/>
    <property type="molecule type" value="mRNA"/>
</dbReference>
<dbReference type="EMBL" id="BC148243">
    <property type="protein sequence ID" value="AAI48244.1"/>
    <property type="molecule type" value="mRNA"/>
</dbReference>
<dbReference type="EMBL" id="BC148250">
    <property type="protein sequence ID" value="AAI48251.1"/>
    <property type="molecule type" value="mRNA"/>
</dbReference>
<dbReference type="CCDS" id="CCDS4570.1"/>
<dbReference type="CCDS" id="CCDS4573.1"/>
<dbReference type="CCDS" id="CCDS4576.1"/>
<dbReference type="CCDS" id="CCDS4590.1"/>
<dbReference type="CCDS" id="CCDS4596.1"/>
<dbReference type="CCDS" id="CCDS4600.1"/>
<dbReference type="CCDS" id="CCDS4602.1"/>
<dbReference type="CCDS" id="CCDS4627.1"/>
<dbReference type="CCDS" id="CCDS4636.1"/>
<dbReference type="CCDS" id="CCDS4638.1"/>
<dbReference type="PIR" id="I37446">
    <property type="entry name" value="HSHU3"/>
</dbReference>
<dbReference type="RefSeq" id="NP_003520.1">
    <property type="nucleotide sequence ID" value="NM_003529.3"/>
</dbReference>
<dbReference type="RefSeq" id="NP_003521.2">
    <property type="nucleotide sequence ID" value="NM_003530.4"/>
</dbReference>
<dbReference type="RefSeq" id="NP_003522.1">
    <property type="nucleotide sequence ID" value="NM_003531.2"/>
</dbReference>
<dbReference type="RefSeq" id="NP_003523.1">
    <property type="nucleotide sequence ID" value="NM_003532.2"/>
</dbReference>
<dbReference type="RefSeq" id="NP_003524.1">
    <property type="nucleotide sequence ID" value="NM_003533.2"/>
</dbReference>
<dbReference type="RefSeq" id="NP_003525.1">
    <property type="nucleotide sequence ID" value="NM_003534.2"/>
</dbReference>
<dbReference type="RefSeq" id="NP_003526.1">
    <property type="nucleotide sequence ID" value="NM_003535.2"/>
</dbReference>
<dbReference type="RefSeq" id="NP_003527.1">
    <property type="nucleotide sequence ID" value="NM_003536.2"/>
</dbReference>
<dbReference type="RefSeq" id="NP_003528.1">
    <property type="nucleotide sequence ID" value="NM_003537.3"/>
</dbReference>
<dbReference type="RefSeq" id="NP_066298.1">
    <property type="nucleotide sequence ID" value="NM_021018.2"/>
</dbReference>
<dbReference type="PDB" id="1CS9">
    <property type="method" value="NMR"/>
    <property type="chains" value="A=131-136"/>
</dbReference>
<dbReference type="PDB" id="1CT6">
    <property type="method" value="NMR"/>
    <property type="chains" value="A=131-136"/>
</dbReference>
<dbReference type="PDB" id="1O9S">
    <property type="method" value="X-ray"/>
    <property type="resolution" value="1.75 A"/>
    <property type="chains" value="K/L=2-10"/>
</dbReference>
<dbReference type="PDB" id="1Q3L">
    <property type="method" value="X-ray"/>
    <property type="resolution" value="1.64 A"/>
    <property type="chains" value="P=2-16"/>
</dbReference>
<dbReference type="PDB" id="2B2T">
    <property type="method" value="X-ray"/>
    <property type="resolution" value="2.45 A"/>
    <property type="chains" value="D=2-20"/>
</dbReference>
<dbReference type="PDB" id="2B2U">
    <property type="method" value="X-ray"/>
    <property type="resolution" value="2.95 A"/>
    <property type="chains" value="D=2-16"/>
</dbReference>
<dbReference type="PDB" id="2B2V">
    <property type="method" value="X-ray"/>
    <property type="resolution" value="2.65 A"/>
    <property type="chains" value="D=2-16"/>
</dbReference>
<dbReference type="PDB" id="2B2W">
    <property type="method" value="X-ray"/>
    <property type="resolution" value="2.40 A"/>
    <property type="chains" value="D=2-20"/>
</dbReference>
<dbReference type="PDB" id="2C1J">
    <property type="method" value="X-ray"/>
    <property type="resolution" value="2.60 A"/>
    <property type="chains" value="C/D=8-15"/>
</dbReference>
<dbReference type="PDB" id="2C1N">
    <property type="method" value="X-ray"/>
    <property type="resolution" value="2.00 A"/>
    <property type="chains" value="C/E=8-15"/>
</dbReference>
<dbReference type="PDB" id="2CO0">
    <property type="method" value="X-ray"/>
    <property type="resolution" value="2.25 A"/>
    <property type="chains" value="B/D=2-16"/>
</dbReference>
<dbReference type="PDB" id="2CV5">
    <property type="method" value="X-ray"/>
    <property type="resolution" value="2.50 A"/>
    <property type="chains" value="A/E=1-136"/>
</dbReference>
<dbReference type="PDB" id="2FSA">
    <property type="method" value="X-ray"/>
    <property type="resolution" value="1.90 A"/>
    <property type="chains" value="P=2-16"/>
</dbReference>
<dbReference type="PDB" id="2KWJ">
    <property type="method" value="NMR"/>
    <property type="chains" value="B=2-21"/>
</dbReference>
<dbReference type="PDB" id="2KWK">
    <property type="method" value="NMR"/>
    <property type="chains" value="B=2-21"/>
</dbReference>
<dbReference type="PDB" id="2L75">
    <property type="method" value="NMR"/>
    <property type="chains" value="B=2-14"/>
</dbReference>
<dbReference type="PDB" id="2LBM">
    <property type="method" value="NMR"/>
    <property type="chains" value="C=2-16"/>
</dbReference>
<dbReference type="PDB" id="2LGG">
    <property type="method" value="NMR"/>
    <property type="chains" value="B=2-13"/>
</dbReference>
<dbReference type="PDB" id="2M0O">
    <property type="method" value="NMR"/>
    <property type="chains" value="B=32-42"/>
</dbReference>
<dbReference type="PDB" id="2NDF">
    <property type="method" value="NMR"/>
    <property type="chains" value="B=13-25"/>
</dbReference>
<dbReference type="PDB" id="2NDG">
    <property type="method" value="NMR"/>
    <property type="chains" value="B=13-25"/>
</dbReference>
<dbReference type="PDB" id="2OQ6">
    <property type="method" value="X-ray"/>
    <property type="resolution" value="2.00 A"/>
    <property type="chains" value="C/D=8-15"/>
</dbReference>
<dbReference type="PDB" id="2OT7">
    <property type="method" value="X-ray"/>
    <property type="resolution" value="2.14 A"/>
    <property type="chains" value="C/D=8-15"/>
</dbReference>
<dbReference type="PDB" id="2OX0">
    <property type="method" value="X-ray"/>
    <property type="resolution" value="1.95 A"/>
    <property type="chains" value="C/D=8-15"/>
</dbReference>
<dbReference type="PDB" id="2RI7">
    <property type="method" value="X-ray"/>
    <property type="resolution" value="1.45 A"/>
    <property type="chains" value="P=2-10"/>
</dbReference>
<dbReference type="PDB" id="2RR4">
    <property type="method" value="NMR"/>
    <property type="chains" value="B=2-11"/>
</dbReference>
<dbReference type="PDB" id="2UXN">
    <property type="method" value="X-ray"/>
    <property type="resolution" value="2.72 A"/>
    <property type="chains" value="E=2-22"/>
</dbReference>
<dbReference type="PDB" id="2V85">
    <property type="method" value="X-ray"/>
    <property type="resolution" value="2.00 A"/>
    <property type="chains" value="D/E=2-13"/>
</dbReference>
<dbReference type="PDB" id="2V89">
    <property type="method" value="X-ray"/>
    <property type="resolution" value="1.10 A"/>
    <property type="chains" value="D/E=2-10"/>
</dbReference>
<dbReference type="PDB" id="2VNF">
    <property type="method" value="X-ray"/>
    <property type="resolution" value="1.76 A"/>
    <property type="chains" value="B/D=2-11"/>
</dbReference>
<dbReference type="PDB" id="2VPG">
    <property type="method" value="X-ray"/>
    <property type="resolution" value="1.60 A"/>
    <property type="chains" value="P/R=2-19"/>
</dbReference>
<dbReference type="PDB" id="2X0L">
    <property type="method" value="X-ray"/>
    <property type="resolution" value="3.00 A"/>
    <property type="chains" value="C=6-17"/>
</dbReference>
<dbReference type="PDB" id="3A1B">
    <property type="method" value="X-ray"/>
    <property type="resolution" value="2.29 A"/>
    <property type="chains" value="A=2-21"/>
</dbReference>
<dbReference type="PDB" id="3AFA">
    <property type="method" value="X-ray"/>
    <property type="resolution" value="2.50 A"/>
    <property type="chains" value="A/E=1-136"/>
</dbReference>
<dbReference type="PDB" id="3AVR">
    <property type="method" value="X-ray"/>
    <property type="resolution" value="1.80 A"/>
    <property type="chains" value="B=18-39"/>
</dbReference>
<dbReference type="PDB" id="3AYW">
    <property type="method" value="X-ray"/>
    <property type="resolution" value="2.90 A"/>
    <property type="chains" value="A/E=1-136"/>
</dbReference>
<dbReference type="PDB" id="3AZE">
    <property type="method" value="X-ray"/>
    <property type="resolution" value="3.00 A"/>
    <property type="chains" value="A/E=1-136"/>
</dbReference>
<dbReference type="PDB" id="3AZF">
    <property type="method" value="X-ray"/>
    <property type="resolution" value="2.70 A"/>
    <property type="chains" value="A/E=1-136"/>
</dbReference>
<dbReference type="PDB" id="3AZG">
    <property type="method" value="X-ray"/>
    <property type="resolution" value="2.40 A"/>
    <property type="chains" value="A/E=1-136"/>
</dbReference>
<dbReference type="PDB" id="3AZH">
    <property type="method" value="X-ray"/>
    <property type="resolution" value="3.49 A"/>
    <property type="chains" value="A/E=1-136"/>
</dbReference>
<dbReference type="PDB" id="3AZI">
    <property type="method" value="X-ray"/>
    <property type="resolution" value="2.70 A"/>
    <property type="chains" value="A/E=1-136"/>
</dbReference>
<dbReference type="PDB" id="3AZJ">
    <property type="method" value="X-ray"/>
    <property type="resolution" value="2.89 A"/>
    <property type="chains" value="A/E=1-136"/>
</dbReference>
<dbReference type="PDB" id="3AZK">
    <property type="method" value="X-ray"/>
    <property type="resolution" value="3.20 A"/>
    <property type="chains" value="A/E=1-136"/>
</dbReference>
<dbReference type="PDB" id="3AZL">
    <property type="method" value="X-ray"/>
    <property type="resolution" value="2.70 A"/>
    <property type="chains" value="A/E=1-136"/>
</dbReference>
<dbReference type="PDB" id="3AZM">
    <property type="method" value="X-ray"/>
    <property type="resolution" value="2.89 A"/>
    <property type="chains" value="A/E=1-136"/>
</dbReference>
<dbReference type="PDB" id="3AZN">
    <property type="method" value="X-ray"/>
    <property type="resolution" value="3.00 A"/>
    <property type="chains" value="A/E=1-136"/>
</dbReference>
<dbReference type="PDB" id="3B95">
    <property type="method" value="X-ray"/>
    <property type="resolution" value="2.99 A"/>
    <property type="chains" value="P=2-16"/>
</dbReference>
<dbReference type="PDB" id="3FDT">
    <property type="method" value="X-ray"/>
    <property type="resolution" value="2.00 A"/>
    <property type="chains" value="T=2-16"/>
</dbReference>
<dbReference type="PDB" id="3KMT">
    <property type="method" value="X-ray"/>
    <property type="resolution" value="1.78 A"/>
    <property type="chains" value="G/H/I=26-33"/>
</dbReference>
<dbReference type="PDB" id="3KQI">
    <property type="method" value="X-ray"/>
    <property type="resolution" value="1.78 A"/>
    <property type="chains" value="B=2-13"/>
</dbReference>
<dbReference type="PDB" id="3LQI">
    <property type="method" value="X-ray"/>
    <property type="resolution" value="1.92 A"/>
    <property type="chains" value="R/S/T=2-10"/>
</dbReference>
<dbReference type="PDB" id="3LQJ">
    <property type="method" value="X-ray"/>
    <property type="resolution" value="1.90 A"/>
    <property type="chains" value="Q/T=2-10"/>
</dbReference>
<dbReference type="PDB" id="3MP1">
    <property type="method" value="X-ray"/>
    <property type="resolution" value="2.60 A"/>
    <property type="chains" value="P=2-6"/>
</dbReference>
<dbReference type="PDB" id="3O34">
    <property type="method" value="X-ray"/>
    <property type="resolution" value="1.90 A"/>
    <property type="chains" value="B=14-33"/>
</dbReference>
<dbReference type="PDB" id="3O35">
    <property type="method" value="X-ray"/>
    <property type="resolution" value="1.76 A"/>
    <property type="chains" value="D/E=24-32"/>
</dbReference>
<dbReference type="PDB" id="3O37">
    <property type="method" value="X-ray"/>
    <property type="resolution" value="2.00 A"/>
    <property type="chains" value="E/F/G/H=2-11"/>
</dbReference>
<dbReference type="PDB" id="3QJ6">
    <property type="method" value="X-ray"/>
    <property type="resolution" value="2.30 A"/>
    <property type="chains" value="T=74-84"/>
</dbReference>
<dbReference type="PDB" id="3RIG">
    <property type="method" value="X-ray"/>
    <property type="resolution" value="2.00 A"/>
    <property type="chains" value="C/D=5-16"/>
</dbReference>
<dbReference type="PDB" id="3RIY">
    <property type="method" value="X-ray"/>
    <property type="resolution" value="1.55 A"/>
    <property type="chains" value="C/D=5-16"/>
</dbReference>
<dbReference type="PDB" id="3SOU">
    <property type="method" value="X-ray"/>
    <property type="resolution" value="1.80 A"/>
    <property type="chains" value="D/E=2-10"/>
</dbReference>
<dbReference type="PDB" id="3SOW">
    <property type="method" value="X-ray"/>
    <property type="resolution" value="1.95 A"/>
    <property type="chains" value="C/D=2-10"/>
</dbReference>
<dbReference type="PDB" id="3U31">
    <property type="method" value="X-ray"/>
    <property type="resolution" value="2.20 A"/>
    <property type="chains" value="B=5-14"/>
</dbReference>
<dbReference type="PDB" id="3U3D">
    <property type="method" value="X-ray"/>
    <property type="resolution" value="2.40 A"/>
    <property type="chains" value="B=5-14"/>
</dbReference>
<dbReference type="PDB" id="3U4S">
    <property type="method" value="X-ray"/>
    <property type="resolution" value="2.15 A"/>
    <property type="chains" value="C/D=8-15"/>
</dbReference>
<dbReference type="PDB" id="3U5N">
    <property type="method" value="X-ray"/>
    <property type="resolution" value="1.95 A"/>
    <property type="chains" value="C/D=2-21"/>
</dbReference>
<dbReference type="PDB" id="3U5O">
    <property type="method" value="X-ray"/>
    <property type="resolution" value="2.70 A"/>
    <property type="chains" value="I/J/K/L/M/N/O/P=2-23"/>
</dbReference>
<dbReference type="PDB" id="3U5P">
    <property type="method" value="X-ray"/>
    <property type="resolution" value="2.80 A"/>
    <property type="chains" value="I/J/K/L/M/N/O/P=2-29"/>
</dbReference>
<dbReference type="PDB" id="3UEE">
    <property type="method" value="X-ray"/>
    <property type="resolution" value="2.61 A"/>
    <property type="chains" value="B/D=2-13"/>
</dbReference>
<dbReference type="PDB" id="3UEF">
    <property type="method" value="X-ray"/>
    <property type="resolution" value="2.45 A"/>
    <property type="chains" value="B/D=2-13"/>
</dbReference>
<dbReference type="PDB" id="3UIG">
    <property type="method" value="X-ray"/>
    <property type="resolution" value="2.40 A"/>
    <property type="chains" value="P/Q=2-16"/>
</dbReference>
<dbReference type="PDB" id="3UII">
    <property type="method" value="X-ray"/>
    <property type="resolution" value="2.60 A"/>
    <property type="chains" value="P/Q=2-11"/>
</dbReference>
<dbReference type="PDB" id="3UIK">
    <property type="method" value="X-ray"/>
    <property type="resolution" value="2.70 A"/>
    <property type="chains" value="P/Q=2-11"/>
</dbReference>
<dbReference type="PDB" id="3V43">
    <property type="method" value="X-ray"/>
    <property type="resolution" value="1.47 A"/>
    <property type="chains" value="Q=2-19"/>
</dbReference>
<dbReference type="PDB" id="3W96">
    <property type="method" value="X-ray"/>
    <property type="resolution" value="3.00 A"/>
    <property type="chains" value="A/E=1-136"/>
</dbReference>
<dbReference type="PDB" id="3W97">
    <property type="method" value="X-ray"/>
    <property type="resolution" value="3.20 A"/>
    <property type="chains" value="A/E=1-136"/>
</dbReference>
<dbReference type="PDB" id="3W98">
    <property type="method" value="X-ray"/>
    <property type="resolution" value="3.42 A"/>
    <property type="chains" value="A/E=29-136"/>
</dbReference>
<dbReference type="PDB" id="3W99">
    <property type="method" value="X-ray"/>
    <property type="resolution" value="3.00 A"/>
    <property type="chains" value="A/E=1-136"/>
</dbReference>
<dbReference type="PDB" id="3WA9">
    <property type="method" value="X-ray"/>
    <property type="resolution" value="3.07 A"/>
    <property type="chains" value="A/E=1-136"/>
</dbReference>
<dbReference type="PDB" id="3WAA">
    <property type="method" value="X-ray"/>
    <property type="resolution" value="3.20 A"/>
    <property type="chains" value="A/E=1-136"/>
</dbReference>
<dbReference type="PDB" id="3WKJ">
    <property type="method" value="X-ray"/>
    <property type="resolution" value="2.80 A"/>
    <property type="chains" value="A/E=1-136"/>
</dbReference>
<dbReference type="PDB" id="3X1S">
    <property type="method" value="X-ray"/>
    <property type="resolution" value="2.81 A"/>
    <property type="chains" value="A/E=2-136"/>
</dbReference>
<dbReference type="PDB" id="3X1T">
    <property type="method" value="X-ray"/>
    <property type="resolution" value="2.81 A"/>
    <property type="chains" value="A/E=2-136"/>
</dbReference>
<dbReference type="PDB" id="3X1U">
    <property type="method" value="X-ray"/>
    <property type="resolution" value="3.25 A"/>
    <property type="chains" value="A/E=2-136"/>
</dbReference>
<dbReference type="PDB" id="3X1V">
    <property type="method" value="X-ray"/>
    <property type="resolution" value="2.92 A"/>
    <property type="chains" value="A/E=2-136"/>
</dbReference>
<dbReference type="PDB" id="3ZG6">
    <property type="method" value="X-ray"/>
    <property type="resolution" value="2.20 A"/>
    <property type="chains" value="F=5-14"/>
</dbReference>
<dbReference type="PDB" id="3ZVY">
    <property type="method" value="X-ray"/>
    <property type="resolution" value="1.95 A"/>
    <property type="chains" value="C/D=2-9"/>
</dbReference>
<dbReference type="PDB" id="4A0J">
    <property type="method" value="X-ray"/>
    <property type="resolution" value="2.80 A"/>
    <property type="chains" value="C/D=2-7"/>
</dbReference>
<dbReference type="PDB" id="4A0N">
    <property type="method" value="X-ray"/>
    <property type="resolution" value="2.74 A"/>
    <property type="chains" value="C=2-7"/>
</dbReference>
<dbReference type="PDB" id="4A7J">
    <property type="method" value="X-ray"/>
    <property type="resolution" value="1.90 A"/>
    <property type="chains" value="B=1-16"/>
</dbReference>
<dbReference type="PDB" id="4BD3">
    <property type="method" value="NMR"/>
    <property type="chains" value="B=32-42"/>
</dbReference>
<dbReference type="PDB" id="4C1Q">
    <property type="method" value="X-ray"/>
    <property type="resolution" value="2.30 A"/>
    <property type="chains" value="C=2-10"/>
</dbReference>
<dbReference type="PDB" id="4F4U">
    <property type="method" value="X-ray"/>
    <property type="resolution" value="2.00 A"/>
    <property type="chains" value="C/D=5-16"/>
</dbReference>
<dbReference type="PDB" id="4F56">
    <property type="method" value="X-ray"/>
    <property type="resolution" value="1.70 A"/>
    <property type="chains" value="C/D=5-16"/>
</dbReference>
<dbReference type="PDB" id="4FWF">
    <property type="method" value="X-ray"/>
    <property type="resolution" value="2.70 A"/>
    <property type="chains" value="E=2-21"/>
</dbReference>
<dbReference type="PDB" id="4HON">
    <property type="method" value="X-ray"/>
    <property type="resolution" value="1.80 A"/>
    <property type="chains" value="F/G=7-16"/>
</dbReference>
<dbReference type="PDB" id="4I51">
    <property type="method" value="X-ray"/>
    <property type="resolution" value="1.90 A"/>
    <property type="chains" value="C/D=4-12"/>
</dbReference>
<dbReference type="PDB" id="4L7X">
    <property type="method" value="X-ray"/>
    <property type="resolution" value="1.35 A"/>
    <property type="chains" value="U=2-13"/>
</dbReference>
<dbReference type="PDB" id="4LK9">
    <property type="method" value="X-ray"/>
    <property type="resolution" value="1.60 A"/>
    <property type="chains" value="B=2-22"/>
</dbReference>
<dbReference type="PDB" id="4LKA">
    <property type="method" value="X-ray"/>
    <property type="resolution" value="1.61 A"/>
    <property type="chains" value="B=2-22"/>
</dbReference>
<dbReference type="PDB" id="4LLB">
    <property type="method" value="X-ray"/>
    <property type="resolution" value="2.50 A"/>
    <property type="chains" value="C/D=2-22"/>
</dbReference>
<dbReference type="PDB" id="4LXL">
    <property type="method" value="X-ray"/>
    <property type="resolution" value="1.87 A"/>
    <property type="chains" value="D=8-15"/>
</dbReference>
<dbReference type="PDB" id="4N4H">
    <property type="method" value="X-ray"/>
    <property type="resolution" value="2.30 A"/>
    <property type="chains" value="B=22-43"/>
</dbReference>
<dbReference type="PDB" id="4QBQ">
    <property type="method" value="X-ray"/>
    <property type="resolution" value="2.41 A"/>
    <property type="chains" value="P=2-9"/>
</dbReference>
<dbReference type="PDB" id="4QBR">
    <property type="method" value="X-ray"/>
    <property type="resolution" value="1.90 A"/>
    <property type="chains" value="E/P=2-8"/>
</dbReference>
<dbReference type="PDB" id="4QBS">
    <property type="method" value="X-ray"/>
    <property type="resolution" value="1.80 A"/>
    <property type="chains" value="P=2-8"/>
</dbReference>
<dbReference type="PDB" id="4TN7">
    <property type="method" value="X-ray"/>
    <property type="resolution" value="2.20 A"/>
    <property type="chains" value="E/F=30-44"/>
</dbReference>
<dbReference type="PDB" id="4U68">
    <property type="method" value="X-ray"/>
    <property type="resolution" value="1.80 A"/>
    <property type="chains" value="D/E/F=5-15"/>
</dbReference>
<dbReference type="PDB" id="4UP0">
    <property type="method" value="X-ray"/>
    <property type="resolution" value="1.28 A"/>
    <property type="chains" value="F=2-16"/>
</dbReference>
<dbReference type="PDB" id="4UY4">
    <property type="method" value="X-ray"/>
    <property type="resolution" value="1.86 A"/>
    <property type="chains" value="C/D=2-7"/>
</dbReference>
<dbReference type="PDB" id="4X3K">
    <property type="method" value="X-ray"/>
    <property type="resolution" value="1.45 A"/>
    <property type="chains" value="C/D=24-30"/>
</dbReference>
<dbReference type="PDB" id="4Y6L">
    <property type="method" value="X-ray"/>
    <property type="resolution" value="1.60 A"/>
    <property type="chains" value="C/D=7-13"/>
</dbReference>
<dbReference type="PDB" id="4YHP">
    <property type="method" value="X-ray"/>
    <property type="resolution" value="2.53 A"/>
    <property type="chains" value="P/Q=2-17"/>
</dbReference>
<dbReference type="PDB" id="4YHZ">
    <property type="method" value="X-ray"/>
    <property type="resolution" value="2.30 A"/>
    <property type="chains" value="P=2-13"/>
</dbReference>
<dbReference type="PDB" id="4YM5">
    <property type="method" value="X-ray"/>
    <property type="resolution" value="4.00 A"/>
    <property type="chains" value="A/E=1-136"/>
</dbReference>
<dbReference type="PDB" id="4YM6">
    <property type="method" value="X-ray"/>
    <property type="resolution" value="3.51 A"/>
    <property type="chains" value="A/E=1-136"/>
</dbReference>
<dbReference type="PDB" id="4Z0R">
    <property type="method" value="X-ray"/>
    <property type="resolution" value="1.75 A"/>
    <property type="chains" value="D=2-16"/>
</dbReference>
<dbReference type="PDB" id="4Z2M">
    <property type="method" value="X-ray"/>
    <property type="resolution" value="2.98 A"/>
    <property type="chains" value="G/I=35-136"/>
</dbReference>
<dbReference type="PDB" id="5AV5">
    <property type="method" value="X-ray"/>
    <property type="resolution" value="2.40 A"/>
    <property type="chains" value="A/E=1-136"/>
</dbReference>
<dbReference type="PDB" id="5AV6">
    <property type="method" value="X-ray"/>
    <property type="resolution" value="2.20 A"/>
    <property type="chains" value="A/E=1-136"/>
</dbReference>
<dbReference type="PDB" id="5AV8">
    <property type="method" value="X-ray"/>
    <property type="resolution" value="2.20 A"/>
    <property type="chains" value="A/E=1-136"/>
</dbReference>
<dbReference type="PDB" id="5AV9">
    <property type="method" value="X-ray"/>
    <property type="resolution" value="2.20 A"/>
    <property type="chains" value="A/E=1-136"/>
</dbReference>
<dbReference type="PDB" id="5AVB">
    <property type="method" value="X-ray"/>
    <property type="resolution" value="2.40 A"/>
    <property type="chains" value="A/E=1-136"/>
</dbReference>
<dbReference type="PDB" id="5AVC">
    <property type="method" value="X-ray"/>
    <property type="resolution" value="2.40 A"/>
    <property type="chains" value="A/E=1-136"/>
</dbReference>
<dbReference type="PDB" id="5B24">
    <property type="method" value="X-ray"/>
    <property type="resolution" value="3.60 A"/>
    <property type="chains" value="A/E=1-136"/>
</dbReference>
<dbReference type="PDB" id="5B2I">
    <property type="method" value="X-ray"/>
    <property type="resolution" value="3.00 A"/>
    <property type="chains" value="A/E=1-136"/>
</dbReference>
<dbReference type="PDB" id="5B2J">
    <property type="method" value="X-ray"/>
    <property type="resolution" value="2.60 A"/>
    <property type="chains" value="A/E=1-136"/>
</dbReference>
<dbReference type="PDB" id="5B31">
    <property type="method" value="X-ray"/>
    <property type="resolution" value="2.20 A"/>
    <property type="chains" value="A/E=1-136"/>
</dbReference>
<dbReference type="PDB" id="5C11">
    <property type="method" value="X-ray"/>
    <property type="resolution" value="2.80 A"/>
    <property type="chains" value="B=2-11"/>
</dbReference>
<dbReference type="PDB" id="5C13">
    <property type="method" value="X-ray"/>
    <property type="resolution" value="2.10 A"/>
    <property type="chains" value="D/F/H/P=2-11"/>
</dbReference>
<dbReference type="PDB" id="5C3I">
    <property type="method" value="X-ray"/>
    <property type="resolution" value="3.50 A"/>
    <property type="chains" value="B/F/J/N/R/V=1-136"/>
</dbReference>
<dbReference type="PDB" id="5CPI">
    <property type="method" value="X-ray"/>
    <property type="resolution" value="2.90 A"/>
    <property type="chains" value="A/E=1-136"/>
</dbReference>
<dbReference type="PDB" id="5CPJ">
    <property type="method" value="X-ray"/>
    <property type="resolution" value="3.15 A"/>
    <property type="chains" value="A/E=1-136"/>
</dbReference>
<dbReference type="PDB" id="5CPK">
    <property type="method" value="X-ray"/>
    <property type="resolution" value="2.63 A"/>
    <property type="chains" value="A/E=1-136"/>
</dbReference>
<dbReference type="PDB" id="5D6Y">
    <property type="method" value="X-ray"/>
    <property type="resolution" value="2.29 A"/>
    <property type="chains" value="a/b/c/d=20-29"/>
</dbReference>
<dbReference type="PDB" id="5DAH">
    <property type="method" value="X-ray"/>
    <property type="resolution" value="2.61 A"/>
    <property type="chains" value="C/D=20-30"/>
</dbReference>
<dbReference type="PDB" id="5FB0">
    <property type="method" value="X-ray"/>
    <property type="resolution" value="2.70 A"/>
    <property type="chains" value="D/F=2-16"/>
</dbReference>
<dbReference type="PDB" id="5FB1">
    <property type="method" value="X-ray"/>
    <property type="resolution" value="2.10 A"/>
    <property type="chains" value="C=2-16"/>
</dbReference>
<dbReference type="PDB" id="5FFV">
    <property type="method" value="X-ray"/>
    <property type="resolution" value="1.30 A"/>
    <property type="chains" value="C/D=10-20"/>
</dbReference>
<dbReference type="PDB" id="5GH9">
    <property type="method" value="X-ray"/>
    <property type="resolution" value="1.45 A"/>
    <property type="chains" value="B=45-58"/>
</dbReference>
<dbReference type="PDB" id="5GSE">
    <property type="method" value="X-ray"/>
    <property type="resolution" value="3.14 A"/>
    <property type="chains" value="A/E/K/O=1-136"/>
</dbReference>
<dbReference type="PDB" id="5GSU">
    <property type="method" value="X-ray"/>
    <property type="resolution" value="3.10 A"/>
    <property type="chains" value="A/E=2-136"/>
</dbReference>
<dbReference type="PDB" id="5GT0">
    <property type="method" value="X-ray"/>
    <property type="resolution" value="2.82 A"/>
    <property type="chains" value="A/E=2-136"/>
</dbReference>
<dbReference type="PDB" id="5GT3">
    <property type="method" value="X-ray"/>
    <property type="resolution" value="2.91 A"/>
    <property type="chains" value="A/E=2-136"/>
</dbReference>
<dbReference type="PDB" id="5GTC">
    <property type="method" value="X-ray"/>
    <property type="resolution" value="2.70 A"/>
    <property type="chains" value="A/E=1-136"/>
</dbReference>
<dbReference type="PDB" id="5H6Q">
    <property type="method" value="X-ray"/>
    <property type="resolution" value="2.53 A"/>
    <property type="chains" value="C=2-21"/>
</dbReference>
<dbReference type="PDB" id="5H6R">
    <property type="method" value="X-ray"/>
    <property type="resolution" value="2.60 A"/>
    <property type="chains" value="C=2-21"/>
</dbReference>
<dbReference type="PDB" id="5HJB">
    <property type="method" value="X-ray"/>
    <property type="resolution" value="2.70 A"/>
    <property type="chains" value="B=4-9"/>
</dbReference>
<dbReference type="PDB" id="5HJC">
    <property type="method" value="X-ray"/>
    <property type="resolution" value="2.60 A"/>
    <property type="chains" value="B=16-24"/>
</dbReference>
<dbReference type="PDB" id="5HJD">
    <property type="method" value="X-ray"/>
    <property type="resolution" value="2.81 A"/>
    <property type="chains" value="B/D/F/H/I/J/L/M=15-21"/>
</dbReference>
<dbReference type="PDB" id="5HYN">
    <property type="method" value="X-ray"/>
    <property type="resolution" value="2.95 A"/>
    <property type="chains" value="D/I/O/T=22-34"/>
</dbReference>
<dbReference type="PDB" id="5IQL">
    <property type="method" value="X-ray"/>
    <property type="resolution" value="2.10 A"/>
    <property type="chains" value="B=25-32"/>
</dbReference>
<dbReference type="PDB" id="5J3V">
    <property type="method" value="X-ray"/>
    <property type="resolution" value="3.05 A"/>
    <property type="chains" value="C/D=12-28"/>
</dbReference>
<dbReference type="PDB" id="5J9S">
    <property type="method" value="X-ray"/>
    <property type="resolution" value="2.70 A"/>
    <property type="chains" value="B=16-40"/>
</dbReference>
<dbReference type="PDB" id="5JHN">
    <property type="method" value="X-ray"/>
    <property type="resolution" value="1.67 A"/>
    <property type="chains" value="F/G=4-14"/>
</dbReference>
<dbReference type="PDB" id="5JIN">
    <property type="method" value="X-ray"/>
    <property type="resolution" value="1.85 A"/>
    <property type="chains" value="F/G=4-14"/>
</dbReference>
<dbReference type="PDB" id="5JIY">
    <property type="method" value="X-ray"/>
    <property type="resolution" value="1.48 A"/>
    <property type="chains" value="F/G=4-14"/>
</dbReference>
<dbReference type="PDB" id="5JJ0">
    <property type="method" value="X-ray"/>
    <property type="resolution" value="1.72 A"/>
    <property type="chains" value="F/G=4-14"/>
</dbReference>
<dbReference type="PDB" id="5JRG">
    <property type="method" value="X-ray"/>
    <property type="resolution" value="2.50 A"/>
    <property type="chains" value="A/E=1-136"/>
</dbReference>
<dbReference type="PDB" id="5KJH">
    <property type="method" value="X-ray"/>
    <property type="resolution" value="2.27 A"/>
    <property type="chains" value="D=23-33, E=19-38"/>
</dbReference>
<dbReference type="PDB" id="5KJI">
    <property type="method" value="X-ray"/>
    <property type="resolution" value="2.71 A"/>
    <property type="chains" value="E=19-38"/>
</dbReference>
<dbReference type="PDB" id="5KKL">
    <property type="method" value="X-ray"/>
    <property type="resolution" value="2.94 A"/>
    <property type="chains" value="B=23-27"/>
</dbReference>
<dbReference type="PDB" id="5LUG">
    <property type="method" value="X-ray"/>
    <property type="resolution" value="1.70 A"/>
    <property type="chains" value="E/F/G/H=2-11"/>
</dbReference>
<dbReference type="PDB" id="5M5G">
    <property type="method" value="X-ray"/>
    <property type="resolution" value="2.27 A"/>
    <property type="chains" value="D=23-33"/>
</dbReference>
<dbReference type="PDB" id="5MR8">
    <property type="method" value="X-ray"/>
    <property type="resolution" value="1.74 A"/>
    <property type="chains" value="C=2-10"/>
</dbReference>
<dbReference type="PDB" id="5NNC">
    <property type="method" value="X-ray"/>
    <property type="resolution" value="2.22 A"/>
    <property type="chains" value="C/D=5-21"/>
</dbReference>
<dbReference type="PDB" id="5NND">
    <property type="method" value="X-ray"/>
    <property type="resolution" value="1.82 A"/>
    <property type="chains" value="D/E=5-21"/>
</dbReference>
<dbReference type="PDB" id="5OY3">
    <property type="method" value="X-ray"/>
    <property type="resolution" value="2.14 A"/>
    <property type="chains" value="B=18-34"/>
</dbReference>
<dbReference type="PDB" id="5SVX">
    <property type="method" value="X-ray"/>
    <property type="resolution" value="1.56 A"/>
    <property type="chains" value="B=2-12"/>
</dbReference>
<dbReference type="PDB" id="5SVY">
    <property type="method" value="X-ray"/>
    <property type="resolution" value="1.05 A"/>
    <property type="chains" value="B=2-12"/>
</dbReference>
<dbReference type="PDB" id="5SZB">
    <property type="method" value="X-ray"/>
    <property type="resolution" value="1.20 A"/>
    <property type="chains" value="H=2-19"/>
</dbReference>
<dbReference type="PDB" id="5SZC">
    <property type="method" value="X-ray"/>
    <property type="resolution" value="1.19 A"/>
    <property type="chains" value="H=2-19"/>
</dbReference>
<dbReference type="PDB" id="5T0K">
    <property type="method" value="X-ray"/>
    <property type="resolution" value="1.70 A"/>
    <property type="chains" value="P/Q=2-16"/>
</dbReference>
<dbReference type="PDB" id="5T0M">
    <property type="method" value="X-ray"/>
    <property type="resolution" value="1.90 A"/>
    <property type="chains" value="C/P=2-16"/>
</dbReference>
<dbReference type="PDB" id="5T1G">
    <property type="method" value="X-ray"/>
    <property type="resolution" value="1.90 A"/>
    <property type="chains" value="B=39-53"/>
</dbReference>
<dbReference type="PDB" id="5T1I">
    <property type="method" value="X-ray"/>
    <property type="resolution" value="1.60 A"/>
    <property type="chains" value="C=39-53"/>
</dbReference>
<dbReference type="PDB" id="5T8R">
    <property type="method" value="X-ray"/>
    <property type="resolution" value="2.40 A"/>
    <property type="chains" value="E/G=2-11"/>
</dbReference>
<dbReference type="PDB" id="5TBN">
    <property type="method" value="NMR"/>
    <property type="chains" value="C=2-12"/>
</dbReference>
<dbReference type="PDB" id="5TDR">
    <property type="method" value="X-ray"/>
    <property type="resolution" value="1.42 A"/>
    <property type="chains" value="B=2-12"/>
</dbReference>
<dbReference type="PDB" id="5TDW">
    <property type="method" value="X-ray"/>
    <property type="resolution" value="1.70 A"/>
    <property type="chains" value="B=2-12"/>
</dbReference>
<dbReference type="PDB" id="5U2J">
    <property type="method" value="X-ray"/>
    <property type="resolution" value="1.60 A"/>
    <property type="chains" value="C/D=2-17"/>
</dbReference>
<dbReference type="PDB" id="5V21">
    <property type="method" value="X-ray"/>
    <property type="resolution" value="2.42 A"/>
    <property type="chains" value="B=30-44"/>
</dbReference>
<dbReference type="PDB" id="5V22">
    <property type="method" value="X-ray"/>
    <property type="resolution" value="2.40 A"/>
    <property type="chains" value="B=30-44"/>
</dbReference>
<dbReference type="PDB" id="5VA6">
    <property type="method" value="X-ray"/>
    <property type="resolution" value="2.40 A"/>
    <property type="chains" value="C/D=20-37"/>
</dbReference>
<dbReference type="PDB" id="5VAB">
    <property type="method" value="X-ray"/>
    <property type="resolution" value="1.70 A"/>
    <property type="chains" value="F=2-11"/>
</dbReference>
<dbReference type="PDB" id="5VGE">
    <property type="method" value="X-ray"/>
    <property type="resolution" value="2.60 A"/>
    <property type="chains" value="C=41-49"/>
</dbReference>
<dbReference type="PDB" id="5VNB">
    <property type="method" value="X-ray"/>
    <property type="resolution" value="2.40 A"/>
    <property type="chains" value="K=22-31"/>
</dbReference>
<dbReference type="PDB" id="5WFC">
    <property type="method" value="X-ray"/>
    <property type="resolution" value="2.28 A"/>
    <property type="chains" value="D=23-33"/>
</dbReference>
<dbReference type="PDB" id="5WLE">
    <property type="method" value="X-ray"/>
    <property type="resolution" value="1.95 A"/>
    <property type="chains" value="C=2-13"/>
</dbReference>
<dbReference type="PDB" id="5WVO">
    <property type="method" value="X-ray"/>
    <property type="resolution" value="2.00 A"/>
    <property type="chains" value="D=2-37"/>
</dbReference>
<dbReference type="PDB" id="5WXG">
    <property type="method" value="X-ray"/>
    <property type="resolution" value="1.70 A"/>
    <property type="chains" value="P=2-8"/>
</dbReference>
<dbReference type="PDB" id="5WXH">
    <property type="method" value="X-ray"/>
    <property type="resolution" value="1.30 A"/>
    <property type="chains" value="D/P=2-8"/>
</dbReference>
<dbReference type="PDB" id="5WYI">
    <property type="method" value="X-ray"/>
    <property type="resolution" value="2.00 A"/>
    <property type="chains" value="E=120-127"/>
</dbReference>
<dbReference type="PDB" id="5X60">
    <property type="method" value="X-ray"/>
    <property type="resolution" value="2.69 A"/>
    <property type="chains" value="C=2-21"/>
</dbReference>
<dbReference type="PDB" id="5XF3">
    <property type="method" value="X-ray"/>
    <property type="resolution" value="2.60 A"/>
    <property type="chains" value="A/E=1-136"/>
</dbReference>
<dbReference type="PDB" id="5XF4">
    <property type="method" value="X-ray"/>
    <property type="resolution" value="2.87 A"/>
    <property type="chains" value="A/E=1-136"/>
</dbReference>
<dbReference type="PDB" id="5XF5">
    <property type="method" value="X-ray"/>
    <property type="resolution" value="2.82 A"/>
    <property type="chains" value="A/E=1-136"/>
</dbReference>
<dbReference type="PDB" id="5XFQ">
    <property type="method" value="X-ray"/>
    <property type="resolution" value="2.40 A"/>
    <property type="chains" value="E/F=30-42"/>
</dbReference>
<dbReference type="PDB" id="5XFR">
    <property type="method" value="X-ray"/>
    <property type="resolution" value="2.25 A"/>
    <property type="chains" value="C/D=34-41"/>
</dbReference>
<dbReference type="PDB" id="5XNV">
    <property type="method" value="X-ray"/>
    <property type="resolution" value="2.70 A"/>
    <property type="chains" value="B=25-32"/>
</dbReference>
<dbReference type="PDB" id="5XTZ">
    <property type="method" value="X-ray"/>
    <property type="resolution" value="2.10 A"/>
    <property type="chains" value="E=23-32"/>
</dbReference>
<dbReference type="PDB" id="5Y0C">
    <property type="method" value="X-ray"/>
    <property type="resolution" value="2.09 A"/>
    <property type="chains" value="A/E=1-136"/>
</dbReference>
<dbReference type="PDB" id="5Y0D">
    <property type="method" value="X-ray"/>
    <property type="resolution" value="1.99 A"/>
    <property type="chains" value="A/E=1-136"/>
</dbReference>
<dbReference type="PDB" id="5Y20">
    <property type="method" value="X-ray"/>
    <property type="resolution" value="2.41 A"/>
    <property type="chains" value="P=2-8"/>
</dbReference>
<dbReference type="PDB" id="5Y2F">
    <property type="method" value="X-ray"/>
    <property type="resolution" value="2.53 A"/>
    <property type="chains" value="C=6-14"/>
</dbReference>
<dbReference type="PDB" id="5Z23">
    <property type="method" value="X-ray"/>
    <property type="resolution" value="2.73 A"/>
    <property type="chains" value="A/E=1-75, A/E=116-136"/>
</dbReference>
<dbReference type="PDB" id="5Z30">
    <property type="method" value="X-ray"/>
    <property type="resolution" value="2.45 A"/>
    <property type="chains" value="A/E=1-136"/>
</dbReference>
<dbReference type="PDB" id="6AXJ">
    <property type="method" value="X-ray"/>
    <property type="resolution" value="2.38 A"/>
    <property type="chains" value="E/F/G/H=22-32"/>
</dbReference>
<dbReference type="PDB" id="6AZE">
    <property type="method" value="X-ray"/>
    <property type="resolution" value="2.45 A"/>
    <property type="chains" value="P=2-7"/>
</dbReference>
<dbReference type="PDB" id="6BHD">
    <property type="method" value="X-ray"/>
    <property type="resolution" value="1.25 A"/>
    <property type="chains" value="B=4-20"/>
</dbReference>
<dbReference type="PDB" id="6BHE">
    <property type="method" value="X-ray"/>
    <property type="resolution" value="1.35 A"/>
    <property type="chains" value="B=4-20"/>
</dbReference>
<dbReference type="PDB" id="6BHG">
    <property type="method" value="X-ray"/>
    <property type="resolution" value="1.45 A"/>
    <property type="chains" value="B=4-20"/>
</dbReference>
<dbReference type="PDB" id="6BHH">
    <property type="method" value="X-ray"/>
    <property type="resolution" value="1.85 A"/>
    <property type="chains" value="B=4-20"/>
</dbReference>
<dbReference type="PDB" id="6BHI">
    <property type="method" value="X-ray"/>
    <property type="resolution" value="1.40 A"/>
    <property type="chains" value="B=5-20"/>
</dbReference>
<dbReference type="PDB" id="6D07">
    <property type="method" value="X-ray"/>
    <property type="resolution" value="2.10 A"/>
    <property type="chains" value="C/D=2-16"/>
</dbReference>
<dbReference type="PDB" id="6D08">
    <property type="method" value="X-ray"/>
    <property type="resolution" value="2.10 A"/>
    <property type="chains" value="C/D=2-16"/>
</dbReference>
<dbReference type="PDB" id="6E83">
    <property type="method" value="NMR"/>
    <property type="chains" value="A=2-13"/>
</dbReference>
<dbReference type="PDB" id="6E86">
    <property type="method" value="NMR"/>
    <property type="chains" value="A=2-9"/>
</dbReference>
<dbReference type="PDB" id="6F6D">
    <property type="method" value="X-ray"/>
    <property type="resolution" value="1.82 A"/>
    <property type="chains" value="B=18-34"/>
</dbReference>
<dbReference type="PDB" id="6HKT">
    <property type="method" value="X-ray"/>
    <property type="resolution" value="9.70 A"/>
    <property type="chains" value="A/E/K/O/U/Y/a/e/k/o/u/y=1-136"/>
</dbReference>
<dbReference type="PDB" id="6HTS">
    <property type="method" value="EM"/>
    <property type="resolution" value="4.80 A"/>
    <property type="chains" value="I/M=1-136"/>
</dbReference>
<dbReference type="PDB" id="6IEU">
    <property type="method" value="X-ray"/>
    <property type="resolution" value="1.79 A"/>
    <property type="chains" value="C=2-13"/>
</dbReference>
<dbReference type="PDB" id="6IIS">
    <property type="method" value="X-ray"/>
    <property type="resolution" value="2.36 A"/>
    <property type="chains" value="E/F=34-41"/>
</dbReference>
<dbReference type="PDB" id="6IIT">
    <property type="method" value="X-ray"/>
    <property type="resolution" value="2.10 A"/>
    <property type="chains" value="E/F=34-41"/>
</dbReference>
<dbReference type="PDB" id="6IPU">
    <property type="method" value="X-ray"/>
    <property type="resolution" value="1.99 A"/>
    <property type="chains" value="A/E=39-136"/>
</dbReference>
<dbReference type="PDB" id="6IQ4">
    <property type="method" value="X-ray"/>
    <property type="resolution" value="2.25 A"/>
    <property type="chains" value="A/E=39-136"/>
</dbReference>
<dbReference type="PDB" id="6JOU">
    <property type="method" value="X-ray"/>
    <property type="resolution" value="2.17 A"/>
    <property type="chains" value="A/E=1-136"/>
</dbReference>
<dbReference type="PDB" id="6JR0">
    <property type="method" value="X-ray"/>
    <property type="resolution" value="2.50 A"/>
    <property type="chains" value="A/E=1-136"/>
</dbReference>
<dbReference type="PDB" id="6JR1">
    <property type="method" value="X-ray"/>
    <property type="resolution" value="2.40 A"/>
    <property type="chains" value="A/E=1-136"/>
</dbReference>
<dbReference type="PDB" id="6JXD">
    <property type="method" value="X-ray"/>
    <property type="resolution" value="2.25 A"/>
    <property type="chains" value="A=39-136, E=39-135"/>
</dbReference>
<dbReference type="PDB" id="6K1I">
    <property type="method" value="X-ray"/>
    <property type="resolution" value="2.75 A"/>
    <property type="chains" value="A/E=1-136"/>
</dbReference>
<dbReference type="PDB" id="6K1J">
    <property type="method" value="X-ray"/>
    <property type="resolution" value="2.85 A"/>
    <property type="chains" value="A/E=1-136"/>
</dbReference>
<dbReference type="PDB" id="6K1K">
    <property type="method" value="X-ray"/>
    <property type="resolution" value="2.20 A"/>
    <property type="chains" value="A/E=1-136"/>
</dbReference>
<dbReference type="PDB" id="6KE9">
    <property type="method" value="X-ray"/>
    <property type="resolution" value="2.22 A"/>
    <property type="chains" value="A/E=41-136"/>
</dbReference>
<dbReference type="PDB" id="6KVD">
    <property type="method" value="X-ray"/>
    <property type="resolution" value="2.21 A"/>
    <property type="chains" value="A/E=1-136"/>
</dbReference>
<dbReference type="PDB" id="6L49">
    <property type="method" value="EM"/>
    <property type="resolution" value="18.90 A"/>
    <property type="chains" value="K/O/S/W=1-136"/>
</dbReference>
<dbReference type="PDB" id="6L4A">
    <property type="method" value="EM"/>
    <property type="resolution" value="12.30 A"/>
    <property type="chains" value="A/E/K/O/S/W=1-136"/>
</dbReference>
<dbReference type="PDB" id="6L9H">
    <property type="method" value="X-ray"/>
    <property type="resolution" value="2.60 A"/>
    <property type="chains" value="A/E=41-136"/>
</dbReference>
<dbReference type="PDB" id="6L9Z">
    <property type="method" value="X-ray"/>
    <property type="resolution" value="2.50 A"/>
    <property type="chains" value="A/E/K/O=1-136"/>
</dbReference>
<dbReference type="PDB" id="6LA2">
    <property type="method" value="X-ray"/>
    <property type="resolution" value="3.89 A"/>
    <property type="chains" value="A/E/K/O/U/Y/e/i=1-136"/>
</dbReference>
<dbReference type="PDB" id="6LA8">
    <property type="method" value="X-ray"/>
    <property type="resolution" value="3.40 A"/>
    <property type="chains" value="A/E/K/O=1-136"/>
</dbReference>
<dbReference type="PDB" id="6LA9">
    <property type="method" value="X-ray"/>
    <property type="resolution" value="3.70 A"/>
    <property type="chains" value="A/E/K/O=1-136"/>
</dbReference>
<dbReference type="PDB" id="6LAB">
    <property type="method" value="X-ray"/>
    <property type="resolution" value="3.20 A"/>
    <property type="chains" value="A/E/K/O=1-136"/>
</dbReference>
<dbReference type="PDB" id="6LE9">
    <property type="method" value="X-ray"/>
    <property type="resolution" value="2.60 A"/>
    <property type="chains" value="A/E=41-136"/>
</dbReference>
<dbReference type="PDB" id="6LER">
    <property type="method" value="X-ray"/>
    <property type="resolution" value="3.00 A"/>
    <property type="chains" value="A/E/K/O=1-136"/>
</dbReference>
<dbReference type="PDB" id="6LS6">
    <property type="method" value="X-ray"/>
    <property type="resolution" value="2.20 A"/>
    <property type="chains" value="C/D=4-11"/>
</dbReference>
<dbReference type="PDB" id="6LSD">
    <property type="method" value="X-ray"/>
    <property type="resolution" value="2.05 A"/>
    <property type="chains" value="C/D=25-32"/>
</dbReference>
<dbReference type="PDB" id="6M3V">
    <property type="method" value="X-ray"/>
    <property type="resolution" value="4.60 A"/>
    <property type="chains" value="A/E/K/O=1-136"/>
</dbReference>
<dbReference type="PDB" id="6M44">
    <property type="method" value="X-ray"/>
    <property type="resolution" value="3.81 A"/>
    <property type="chains" value="A/E/K/O=1-136"/>
</dbReference>
<dbReference type="PDB" id="6M4D">
    <property type="method" value="EM"/>
    <property type="resolution" value="4.40 A"/>
    <property type="chains" value="A/E=1-136"/>
</dbReference>
<dbReference type="PDB" id="6M4G">
    <property type="method" value="EM"/>
    <property type="resolution" value="2.80 A"/>
    <property type="chains" value="A/E=1-136"/>
</dbReference>
<dbReference type="PDB" id="6M4H">
    <property type="method" value="EM"/>
    <property type="resolution" value="3.90 A"/>
    <property type="chains" value="A/E=1-136"/>
</dbReference>
<dbReference type="PDB" id="6MIL">
    <property type="method" value="X-ray"/>
    <property type="resolution" value="1.93 A"/>
    <property type="chains" value="B/D=2-20"/>
</dbReference>
<dbReference type="PDB" id="6MIM">
    <property type="method" value="X-ray"/>
    <property type="resolution" value="2.52 A"/>
    <property type="chains" value="B/D=6-14"/>
</dbReference>
<dbReference type="PDB" id="6MIN">
    <property type="method" value="X-ray"/>
    <property type="resolution" value="1.90 A"/>
    <property type="chains" value="B=6-12"/>
</dbReference>
<dbReference type="PDB" id="6MIO">
    <property type="method" value="X-ray"/>
    <property type="resolution" value="1.85 A"/>
    <property type="chains" value="B=6-12"/>
</dbReference>
<dbReference type="PDB" id="6MIQ">
    <property type="method" value="X-ray"/>
    <property type="resolution" value="1.75 A"/>
    <property type="chains" value="C=6-12"/>
</dbReference>
<dbReference type="PDB" id="6PA1">
    <property type="method" value="X-ray"/>
    <property type="resolution" value="3.01 A"/>
    <property type="chains" value="C/G=41-49"/>
</dbReference>
<dbReference type="PDB" id="6PAG">
    <property type="method" value="X-ray"/>
    <property type="resolution" value="2.50 A"/>
    <property type="chains" value="C=41-49"/>
</dbReference>
<dbReference type="PDB" id="6R8Y">
    <property type="method" value="EM"/>
    <property type="resolution" value="4.30 A"/>
    <property type="chains" value="A/E=1-136"/>
</dbReference>
<dbReference type="PDB" id="6R8Z">
    <property type="method" value="EM"/>
    <property type="resolution" value="3.90 A"/>
    <property type="chains" value="A/E=1-136"/>
</dbReference>
<dbReference type="PDB" id="6R90">
    <property type="method" value="EM"/>
    <property type="resolution" value="4.50 A"/>
    <property type="chains" value="A/E=1-136"/>
</dbReference>
<dbReference type="PDB" id="6R91">
    <property type="method" value="EM"/>
    <property type="resolution" value="4.10 A"/>
    <property type="chains" value="A/E=1-136"/>
</dbReference>
<dbReference type="PDB" id="6R92">
    <property type="method" value="EM"/>
    <property type="resolution" value="4.80 A"/>
    <property type="chains" value="A/E=1-136"/>
</dbReference>
<dbReference type="PDB" id="6R93">
    <property type="method" value="EM"/>
    <property type="resolution" value="4.00 A"/>
    <property type="chains" value="A/E=1-136"/>
</dbReference>
<dbReference type="PDB" id="6R94">
    <property type="method" value="EM"/>
    <property type="resolution" value="3.50 A"/>
    <property type="chains" value="A/E=1-136"/>
</dbReference>
<dbReference type="PDB" id="6T90">
    <property type="method" value="EM"/>
    <property type="resolution" value="3.05 A"/>
    <property type="chains" value="A=1-136, E=1-134"/>
</dbReference>
<dbReference type="PDB" id="6T93">
    <property type="method" value="EM"/>
    <property type="resolution" value="3.49 A"/>
    <property type="chains" value="A/E=1-136"/>
</dbReference>
<dbReference type="PDB" id="6UPK">
    <property type="method" value="EM"/>
    <property type="resolution" value="4.90 A"/>
    <property type="chains" value="A/E=1-136"/>
</dbReference>
<dbReference type="PDB" id="6UPL">
    <property type="method" value="EM"/>
    <property type="resolution" value="7.40 A"/>
    <property type="chains" value="A/E=1-136"/>
</dbReference>
<dbReference type="PDB" id="6USJ">
    <property type="method" value="EM"/>
    <property type="resolution" value="10.50 A"/>
    <property type="chains" value="A/E/K/O=1-136"/>
</dbReference>
<dbReference type="PDB" id="6V2H">
    <property type="method" value="X-ray"/>
    <property type="resolution" value="2.60 A"/>
    <property type="chains" value="B/D/F/H/J/L=22-33"/>
</dbReference>
<dbReference type="PDB" id="6V2K">
    <property type="method" value="X-ray"/>
    <property type="resolution" value="2.60 A"/>
    <property type="chains" value="A/E=1-136"/>
</dbReference>
<dbReference type="PDB" id="6V3N">
    <property type="method" value="X-ray"/>
    <property type="resolution" value="2.70 A"/>
    <property type="chains" value="C/D=20-33"/>
</dbReference>
<dbReference type="PDB" id="6V41">
    <property type="method" value="X-ray"/>
    <property type="resolution" value="1.60 A"/>
    <property type="chains" value="QQQ=2-16"/>
</dbReference>
<dbReference type="PDB" id="6V92">
    <property type="method" value="EM"/>
    <property type="resolution" value="20.00 A"/>
    <property type="chains" value="a/e=1-136"/>
</dbReference>
<dbReference type="PDB" id="6VIL">
    <property type="method" value="X-ray"/>
    <property type="resolution" value="3.30 A"/>
    <property type="chains" value="I/J/L/M=22-34"/>
</dbReference>
<dbReference type="PDB" id="6WAV">
    <property type="method" value="X-ray"/>
    <property type="resolution" value="1.70 A"/>
    <property type="chains" value="E/F/G/H=32-43"/>
</dbReference>
<dbReference type="PDB" id="6WW4">
    <property type="method" value="X-ray"/>
    <property type="resolution" value="2.25 A"/>
    <property type="chains" value="A/B=2-7"/>
</dbReference>
<dbReference type="PDB" id="6YIF">
    <property type="method" value="X-ray"/>
    <property type="resolution" value="1.81 A"/>
    <property type="chains" value="D=2-13"/>
</dbReference>
<dbReference type="PDB" id="6YIH">
    <property type="method" value="X-ray"/>
    <property type="resolution" value="2.55 A"/>
    <property type="chains" value="D=2-13"/>
</dbReference>
<dbReference type="PDB" id="6YOV">
    <property type="method" value="EM"/>
    <property type="resolution" value="3.42 A"/>
    <property type="chains" value="A=1-136, E=1-134"/>
</dbReference>
<dbReference type="PDB" id="7BWD">
    <property type="method" value="EM"/>
    <property type="resolution" value="4.32 A"/>
    <property type="chains" value="A/E=2-136"/>
</dbReference>
<dbReference type="PDB" id="7C0M">
    <property type="method" value="EM"/>
    <property type="resolution" value="3.90 A"/>
    <property type="chains" value="A/E/a/e=2-136"/>
</dbReference>
<dbReference type="PDB" id="7CCQ">
    <property type="method" value="EM"/>
    <property type="resolution" value="3.80 A"/>
    <property type="chains" value="A/E=39-136"/>
</dbReference>
<dbReference type="PDB" id="7CCR">
    <property type="method" value="EM"/>
    <property type="resolution" value="4.90 A"/>
    <property type="chains" value="A/E/L/P=39-136"/>
</dbReference>
<dbReference type="PDB" id="7CFP">
    <property type="method" value="X-ray"/>
    <property type="resolution" value="1.60 A"/>
    <property type="chains" value="B=2-15"/>
</dbReference>
<dbReference type="PDB" id="7CFQ">
    <property type="method" value="X-ray"/>
    <property type="resolution" value="1.60 A"/>
    <property type="chains" value="B=2-15"/>
</dbReference>
<dbReference type="PDB" id="7COW">
    <property type="method" value="X-ray"/>
    <property type="resolution" value="2.86 A"/>
    <property type="chains" value="A/E/K/O=1-136"/>
</dbReference>
<dbReference type="PDB" id="7D1Z">
    <property type="method" value="EM"/>
    <property type="resolution" value="3.15 A"/>
    <property type="chains" value="A/E=2-136"/>
</dbReference>
<dbReference type="PDB" id="7DBP">
    <property type="method" value="EM"/>
    <property type="resolution" value="4.50 A"/>
    <property type="chains" value="A/E=1-136"/>
</dbReference>
<dbReference type="PDB" id="7E8D">
    <property type="method" value="EM"/>
    <property type="resolution" value="2.80 A"/>
    <property type="chains" value="A/E=2-136"/>
</dbReference>
<dbReference type="PDB" id="7EBK">
    <property type="method" value="X-ray"/>
    <property type="resolution" value="1.74 A"/>
    <property type="chains" value="B=2-25"/>
</dbReference>
<dbReference type="PDB" id="7K5X">
    <property type="method" value="EM"/>
    <property type="resolution" value="2.93 A"/>
    <property type="chains" value="A/E=1-136"/>
</dbReference>
<dbReference type="PDB" id="7K5Y">
    <property type="method" value="EM"/>
    <property type="resolution" value="2.76 A"/>
    <property type="chains" value="A/E=1-136"/>
</dbReference>
<dbReference type="PDB" id="7K60">
    <property type="method" value="EM"/>
    <property type="resolution" value="3.12 A"/>
    <property type="chains" value="A/E=1-136"/>
</dbReference>
<dbReference type="PDB" id="7K61">
    <property type="method" value="EM"/>
    <property type="resolution" value="2.85 A"/>
    <property type="chains" value="A/E=1-136"/>
</dbReference>
<dbReference type="PDB" id="7K63">
    <property type="method" value="EM"/>
    <property type="resolution" value="3.03 A"/>
    <property type="chains" value="A/E=1-136"/>
</dbReference>
<dbReference type="PDB" id="7KLR">
    <property type="method" value="NMR"/>
    <property type="chains" value="B=2-11"/>
</dbReference>
<dbReference type="PDB" id="7LBK">
    <property type="method" value="X-ray"/>
    <property type="resolution" value="2.70 A"/>
    <property type="chains" value="C/D=2-13"/>
</dbReference>
<dbReference type="PDB" id="7LBO">
    <property type="method" value="X-ray"/>
    <property type="resolution" value="2.50 A"/>
    <property type="chains" value="C/F=2-13"/>
</dbReference>
<dbReference type="PDB" id="7LBP">
    <property type="method" value="X-ray"/>
    <property type="resolution" value="2.60 A"/>
    <property type="chains" value="B/D=2-13"/>
</dbReference>
<dbReference type="PDB" id="7LBQ">
    <property type="method" value="X-ray"/>
    <property type="resolution" value="2.69 A"/>
    <property type="chains" value="E=2-13"/>
</dbReference>
<dbReference type="PDB" id="7LYA">
    <property type="method" value="EM"/>
    <property type="resolution" value="2.91 A"/>
    <property type="chains" value="A/E=1-136"/>
</dbReference>
<dbReference type="PDB" id="7LYB">
    <property type="method" value="EM"/>
    <property type="resolution" value="3.28 A"/>
    <property type="chains" value="A/E=1-136"/>
</dbReference>
<dbReference type="PDB" id="7LYC">
    <property type="method" value="EM"/>
    <property type="resolution" value="2.94 A"/>
    <property type="chains" value="A/E=1-136"/>
</dbReference>
<dbReference type="PDB" id="7MJU">
    <property type="method" value="X-ray"/>
    <property type="resolution" value="2.10 A"/>
    <property type="chains" value="A=2-14"/>
</dbReference>
<dbReference type="PDB" id="7NL0">
    <property type="method" value="EM"/>
    <property type="resolution" value="3.50 A"/>
    <property type="chains" value="A/E=1-136"/>
</dbReference>
<dbReference type="PDB" id="7SCY">
    <property type="method" value="EM"/>
    <property type="resolution" value="4.10 A"/>
    <property type="chains" value="A/E=1-136"/>
</dbReference>
<dbReference type="PDB" id="7SCZ">
    <property type="method" value="EM"/>
    <property type="resolution" value="3.50 A"/>
    <property type="chains" value="A/E=1-136"/>
</dbReference>
<dbReference type="PDB" id="7TD5">
    <property type="method" value="X-ray"/>
    <property type="resolution" value="2.99 A"/>
    <property type="chains" value="D/E/I/J=23-32"/>
</dbReference>
<dbReference type="PDB" id="7U0G">
    <property type="method" value="EM"/>
    <property type="resolution" value="2.60 A"/>
    <property type="chains" value="A/E=1-136"/>
</dbReference>
<dbReference type="PDB" id="7U0I">
    <property type="method" value="EM"/>
    <property type="resolution" value="2.60 A"/>
    <property type="chains" value="A/E=1-136"/>
</dbReference>
<dbReference type="PDB" id="7U0J">
    <property type="method" value="EM"/>
    <property type="resolution" value="2.70 A"/>
    <property type="chains" value="A/E=1-136"/>
</dbReference>
<dbReference type="PDB" id="7V6Q">
    <property type="method" value="X-ray"/>
    <property type="resolution" value="3.00 A"/>
    <property type="chains" value="B/F=1-136"/>
</dbReference>
<dbReference type="PDB" id="7V90">
    <property type="method" value="EM"/>
    <property type="resolution" value="3.50 A"/>
    <property type="chains" value="A/E=1-136"/>
</dbReference>
<dbReference type="PDB" id="7V96">
    <property type="method" value="EM"/>
    <property type="resolution" value="3.92 A"/>
    <property type="chains" value="A/E/K/O=1-136"/>
</dbReference>
<dbReference type="PDB" id="7V9C">
    <property type="method" value="EM"/>
    <property type="resolution" value="4.50 A"/>
    <property type="chains" value="A/E/K/O=1-136"/>
</dbReference>
<dbReference type="PDB" id="7V9J">
    <property type="method" value="EM"/>
    <property type="resolution" value="8.00 A"/>
    <property type="chains" value="A/E/K/O/S/W=1-136"/>
</dbReference>
<dbReference type="PDB" id="7V9K">
    <property type="method" value="EM"/>
    <property type="resolution" value="8.10 A"/>
    <property type="chains" value="A/E/K/O/S/W/a/e=1-136"/>
</dbReference>
<dbReference type="PDB" id="7V9S">
    <property type="method" value="EM"/>
    <property type="resolution" value="11.00 A"/>
    <property type="chains" value="A/E/K/O/S/W=1-136"/>
</dbReference>
<dbReference type="PDB" id="7VA4">
    <property type="method" value="EM"/>
    <property type="resolution" value="14.00 A"/>
    <property type="chains" value="A/E/K/O/S/W/a/e=1-136"/>
</dbReference>
<dbReference type="PDB" id="7VZ4">
    <property type="method" value="EM"/>
    <property type="resolution" value="1.89 A"/>
    <property type="chains" value="A/E=2-136"/>
</dbReference>
<dbReference type="PDB" id="7W9V">
    <property type="method" value="EM"/>
    <property type="resolution" value="3.95 A"/>
    <property type="chains" value="A/E=2-136"/>
</dbReference>
<dbReference type="PDB" id="7X57">
    <property type="method" value="EM"/>
    <property type="resolution" value="3.63 A"/>
    <property type="chains" value="A/C/E/G=2-136"/>
</dbReference>
<dbReference type="PDB" id="7X58">
    <property type="method" value="EM"/>
    <property type="resolution" value="3.93 A"/>
    <property type="chains" value="A/C/E/G=2-136"/>
</dbReference>
<dbReference type="PDB" id="7XD1">
    <property type="method" value="EM"/>
    <property type="resolution" value="3.20 A"/>
    <property type="chains" value="A/E=38-135"/>
</dbReference>
<dbReference type="PDB" id="7XVL">
    <property type="method" value="X-ray"/>
    <property type="resolution" value="3.51 A"/>
    <property type="chains" value="A/E/K/O/U/Y/e/i=1-136"/>
</dbReference>
<dbReference type="PDB" id="7XVM">
    <property type="method" value="X-ray"/>
    <property type="resolution" value="2.84 A"/>
    <property type="chains" value="A/E/K/O=1-136"/>
</dbReference>
<dbReference type="PDB" id="7XX5">
    <property type="method" value="X-ray"/>
    <property type="resolution" value="3.19 A"/>
    <property type="chains" value="A/E/K/O=1-136"/>
</dbReference>
<dbReference type="PDB" id="7XX6">
    <property type="method" value="X-ray"/>
    <property type="resolution" value="3.39 A"/>
    <property type="chains" value="A/E/K/O/U/Y/e/i=1-136"/>
</dbReference>
<dbReference type="PDB" id="7XZX">
    <property type="method" value="EM"/>
    <property type="resolution" value="4.53 A"/>
    <property type="chains" value="A/E=2-136"/>
</dbReference>
<dbReference type="PDB" id="7XZY">
    <property type="method" value="EM"/>
    <property type="resolution" value="3.97 A"/>
    <property type="chains" value="A/E=2-136"/>
</dbReference>
<dbReference type="PDB" id="7XZZ">
    <property type="method" value="EM"/>
    <property type="resolution" value="4.07 A"/>
    <property type="chains" value="A/E=2-136"/>
</dbReference>
<dbReference type="PDB" id="7Y00">
    <property type="method" value="EM"/>
    <property type="resolution" value="3.96 A"/>
    <property type="chains" value="A/E=2-136"/>
</dbReference>
<dbReference type="PDB" id="7Y5U">
    <property type="method" value="EM"/>
    <property type="resolution" value="3.80 A"/>
    <property type="chains" value="D=1-136"/>
</dbReference>
<dbReference type="PDB" id="7Y5V">
    <property type="method" value="EM"/>
    <property type="resolution" value="6.10 A"/>
    <property type="chains" value="D/I=1-136"/>
</dbReference>
<dbReference type="PDB" id="7Y5W">
    <property type="method" value="EM"/>
    <property type="resolution" value="3.50 A"/>
    <property type="chains" value="A/C/E/G=1-136"/>
</dbReference>
<dbReference type="PDB" id="7Y60">
    <property type="method" value="EM"/>
    <property type="resolution" value="3.80 A"/>
    <property type="chains" value="A/C/E/G=1-136"/>
</dbReference>
<dbReference type="PDB" id="7Y61">
    <property type="method" value="EM"/>
    <property type="resolution" value="5.60 A"/>
    <property type="chains" value="A/C/E/G=1-136"/>
</dbReference>
<dbReference type="PDB" id="7Y7I">
    <property type="method" value="EM"/>
    <property type="resolution" value="3.42 A"/>
    <property type="chains" value="A/E=1-64"/>
</dbReference>
<dbReference type="PDB" id="7Y8R">
    <property type="method" value="EM"/>
    <property type="resolution" value="4.40 A"/>
    <property type="chains" value="A/E=2-136"/>
</dbReference>
<dbReference type="PDB" id="7YOZ">
    <property type="method" value="EM"/>
    <property type="resolution" value="4.30 A"/>
    <property type="chains" value="A/C/E/G=2-136"/>
</dbReference>
<dbReference type="PDB" id="7YQK">
    <property type="method" value="EM"/>
    <property type="resolution" value="3.38 A"/>
    <property type="chains" value="A/E=37-136"/>
</dbReference>
<dbReference type="PDB" id="7ZI4">
    <property type="method" value="EM"/>
    <property type="resolution" value="3.20 A"/>
    <property type="chains" value="I/M=1-136"/>
</dbReference>
<dbReference type="PDB" id="8DK5">
    <property type="method" value="EM"/>
    <property type="resolution" value="2.71 A"/>
    <property type="chains" value="A/E=1-136"/>
</dbReference>
<dbReference type="PDB" id="8DS8">
    <property type="method" value="X-ray"/>
    <property type="resolution" value="1.84 A"/>
    <property type="chains" value="C/D=2-24"/>
</dbReference>
<dbReference type="PDB" id="8EVG">
    <property type="method" value="EM"/>
    <property type="resolution" value="2.75 A"/>
    <property type="chains" value="A/E=1-136"/>
</dbReference>
<dbReference type="PDB" id="8EVH">
    <property type="method" value="EM"/>
    <property type="resolution" value="2.85 A"/>
    <property type="chains" value="A/E=1-136"/>
</dbReference>
<dbReference type="PDB" id="8EVI">
    <property type="method" value="EM"/>
    <property type="resolution" value="2.64 A"/>
    <property type="chains" value="A/E=1-136"/>
</dbReference>
<dbReference type="PDB" id="8EVJ">
    <property type="method" value="EM"/>
    <property type="resolution" value="4.10 A"/>
    <property type="chains" value="A/E=1-136"/>
</dbReference>
<dbReference type="PDB" id="8GE0">
    <property type="method" value="X-ray"/>
    <property type="resolution" value="2.40 A"/>
    <property type="chains" value="A/B/C=2-14"/>
</dbReference>
<dbReference type="PDB" id="8GRM">
    <property type="method" value="EM"/>
    <property type="resolution" value="3.05 A"/>
    <property type="chains" value="A/E=38-135"/>
</dbReference>
<dbReference type="PDB" id="8GUI">
    <property type="method" value="EM"/>
    <property type="resolution" value="2.81 A"/>
    <property type="chains" value="A/E=1-136"/>
</dbReference>
<dbReference type="PDB" id="8GUJ">
    <property type="method" value="EM"/>
    <property type="resolution" value="2.80 A"/>
    <property type="chains" value="A/E=1-136"/>
</dbReference>
<dbReference type="PDB" id="8GUK">
    <property type="method" value="EM"/>
    <property type="resolution" value="2.51 A"/>
    <property type="chains" value="A/E=1-136"/>
</dbReference>
<dbReference type="PDB" id="8H0V">
    <property type="method" value="EM"/>
    <property type="resolution" value="3.80 A"/>
    <property type="chains" value="a/e=2-136"/>
</dbReference>
<dbReference type="PDB" id="8H0W">
    <property type="method" value="EM"/>
    <property type="resolution" value="4.60 A"/>
    <property type="chains" value="a/e=2-136"/>
</dbReference>
<dbReference type="PDB" id="8H1T">
    <property type="method" value="EM"/>
    <property type="resolution" value="3.00 A"/>
    <property type="chains" value="A/E=1-136"/>
</dbReference>
<dbReference type="PDB" id="8HAG">
    <property type="method" value="EM"/>
    <property type="resolution" value="3.20 A"/>
    <property type="chains" value="A/E=2-136"/>
</dbReference>
<dbReference type="PDB" id="8HAH">
    <property type="method" value="EM"/>
    <property type="resolution" value="3.90 A"/>
    <property type="chains" value="A/E=2-136"/>
</dbReference>
<dbReference type="PDB" id="8HAI">
    <property type="method" value="EM"/>
    <property type="resolution" value="4.70 A"/>
    <property type="chains" value="A/E=2-136"/>
</dbReference>
<dbReference type="PDB" id="8HAJ">
    <property type="method" value="EM"/>
    <property type="resolution" value="4.80 A"/>
    <property type="chains" value="A/E=2-136"/>
</dbReference>
<dbReference type="PDB" id="8HAK">
    <property type="method" value="EM"/>
    <property type="resolution" value="4.50 A"/>
    <property type="chains" value="A/E=2-136"/>
</dbReference>
<dbReference type="PDB" id="8HAL">
    <property type="method" value="EM"/>
    <property type="resolution" value="4.40 A"/>
    <property type="chains" value="A/E=2-136"/>
</dbReference>
<dbReference type="PDB" id="8HAM">
    <property type="method" value="EM"/>
    <property type="resolution" value="4.50 A"/>
    <property type="chains" value="A/E=2-136"/>
</dbReference>
<dbReference type="PDB" id="8HAN">
    <property type="method" value="EM"/>
    <property type="resolution" value="4.20 A"/>
    <property type="chains" value="A/E=2-136"/>
</dbReference>
<dbReference type="PDB" id="8HE5">
    <property type="method" value="EM"/>
    <property type="resolution" value="6.95 A"/>
    <property type="chains" value="a/e=1-136"/>
</dbReference>
<dbReference type="PDB" id="8HLY">
    <property type="method" value="X-ray"/>
    <property type="resolution" value="2.00 A"/>
    <property type="chains" value="B=22-27"/>
</dbReference>
<dbReference type="PDB" id="8HMX">
    <property type="method" value="X-ray"/>
    <property type="resolution" value="1.70 A"/>
    <property type="chains" value="B=2-6"/>
</dbReference>
<dbReference type="PDB" id="8I60">
    <property type="method" value="X-ray"/>
    <property type="resolution" value="2.30 A"/>
    <property type="chains" value="A/B=22-34"/>
</dbReference>
<dbReference type="PDB" id="8IEG">
    <property type="method" value="EM"/>
    <property type="resolution" value="3.44 A"/>
    <property type="chains" value="E/K=38-135"/>
</dbReference>
<dbReference type="PDB" id="8IEJ">
    <property type="method" value="EM"/>
    <property type="resolution" value="3.12 A"/>
    <property type="chains" value="E/K=38-135"/>
</dbReference>
<dbReference type="PDB" id="8IHL">
    <property type="method" value="EM"/>
    <property type="resolution" value="7.64 A"/>
    <property type="chains" value="A/E/K/M/Q/U=2-136"/>
</dbReference>
<dbReference type="PDB" id="8IIY">
    <property type="method" value="X-ray"/>
    <property type="resolution" value="2.15 A"/>
    <property type="chains" value="B/C=2-20"/>
</dbReference>
<dbReference type="PDB" id="8IIZ">
    <property type="method" value="X-ray"/>
    <property type="resolution" value="2.10 A"/>
    <property type="chains" value="B/C=2-33"/>
</dbReference>
<dbReference type="PDB" id="8IJ0">
    <property type="method" value="X-ray"/>
    <property type="resolution" value="1.52 A"/>
    <property type="chains" value="C/D=2-12"/>
</dbReference>
<dbReference type="PDB" id="8IQF">
    <property type="method" value="EM"/>
    <property type="resolution" value="4.60 A"/>
    <property type="chains" value="D/I=1-136"/>
</dbReference>
<dbReference type="PDB" id="8IQG">
    <property type="method" value="EM"/>
    <property type="resolution" value="3.50 A"/>
    <property type="chains" value="D=1-136"/>
</dbReference>
<dbReference type="PDB" id="8J6S">
    <property type="method" value="EM"/>
    <property type="resolution" value="3.80 A"/>
    <property type="chains" value="A/C/E/G=1-136"/>
</dbReference>
<dbReference type="PDB" id="8J6T">
    <property type="method" value="EM"/>
    <property type="resolution" value="6.60 A"/>
    <property type="chains" value="A/C/E/G=1-136"/>
</dbReference>
<dbReference type="PDB" id="8JBX">
    <property type="method" value="EM"/>
    <property type="resolution" value="3.35 A"/>
    <property type="chains" value="A/E=2-136"/>
</dbReference>
<dbReference type="PDB" id="8JCC">
    <property type="method" value="EM"/>
    <property type="resolution" value="3.42 A"/>
    <property type="chains" value="A/E=2-136"/>
</dbReference>
<dbReference type="PDB" id="8JCD">
    <property type="method" value="EM"/>
    <property type="resolution" value="3.14 A"/>
    <property type="chains" value="A/E=2-136"/>
</dbReference>
<dbReference type="PDB" id="8JHF">
    <property type="method" value="EM"/>
    <property type="resolution" value="3.68 A"/>
    <property type="chains" value="A/E=1-136"/>
</dbReference>
<dbReference type="PDB" id="8JHG">
    <property type="method" value="EM"/>
    <property type="resolution" value="3.58 A"/>
    <property type="chains" value="A/E=1-136"/>
</dbReference>
<dbReference type="PDB" id="8JL9">
    <property type="method" value="EM"/>
    <property type="resolution" value="2.65 A"/>
    <property type="chains" value="A/E=1-136"/>
</dbReference>
<dbReference type="PDB" id="8JLA">
    <property type="method" value="EM"/>
    <property type="resolution" value="3.44 A"/>
    <property type="chains" value="A/E=29-136"/>
</dbReference>
<dbReference type="PDB" id="8JND">
    <property type="method" value="EM"/>
    <property type="resolution" value="3.66 A"/>
    <property type="chains" value="A/E=1-136"/>
</dbReference>
<dbReference type="PDB" id="8JNE">
    <property type="method" value="EM"/>
    <property type="resolution" value="4.68 A"/>
    <property type="chains" value="A/E=1-136"/>
</dbReference>
<dbReference type="PDB" id="8JNF">
    <property type="method" value="EM"/>
    <property type="resolution" value="6.91 A"/>
    <property type="chains" value="A/E=1-136"/>
</dbReference>
<dbReference type="PDB" id="8KCY">
    <property type="method" value="EM"/>
    <property type="resolution" value="2.80 A"/>
    <property type="chains" value="A/E=1-136"/>
</dbReference>
<dbReference type="PDB" id="8KD1">
    <property type="method" value="EM"/>
    <property type="resolution" value="3.20 A"/>
    <property type="chains" value="A/E=1-136"/>
</dbReference>
<dbReference type="PDB" id="8KE0">
    <property type="method" value="EM"/>
    <property type="resolution" value="4.00 A"/>
    <property type="chains" value="A/E=1-136"/>
</dbReference>
<dbReference type="PDB" id="8OFF">
    <property type="method" value="EM"/>
    <property type="resolution" value="3.40 A"/>
    <property type="chains" value="Ca/Cb=1-135"/>
</dbReference>
<dbReference type="PDB" id="8OO7">
    <property type="method" value="EM"/>
    <property type="resolution" value="2.80 A"/>
    <property type="chains" value="M/Q=2-136"/>
</dbReference>
<dbReference type="PDB" id="8OOA">
    <property type="method" value="EM"/>
    <property type="resolution" value="3.18 A"/>
    <property type="chains" value="M/Q=2-136"/>
</dbReference>
<dbReference type="PDB" id="8OOP">
    <property type="method" value="EM"/>
    <property type="resolution" value="2.70 A"/>
    <property type="chains" value="M/Q=2-136"/>
</dbReference>
<dbReference type="PDB" id="8OOS">
    <property type="method" value="EM"/>
    <property type="resolution" value="3.29 A"/>
    <property type="chains" value="M/Q=2-136"/>
</dbReference>
<dbReference type="PDB" id="8OSJ">
    <property type="method" value="EM"/>
    <property type="resolution" value="6.20 A"/>
    <property type="chains" value="A/E=1-136"/>
</dbReference>
<dbReference type="PDB" id="8OSK">
    <property type="method" value="EM"/>
    <property type="resolution" value="3.60 A"/>
    <property type="chains" value="A/E=1-136"/>
</dbReference>
<dbReference type="PDB" id="8OSL">
    <property type="method" value="EM"/>
    <property type="resolution" value="4.90 A"/>
    <property type="chains" value="A/E=1-136"/>
</dbReference>
<dbReference type="PDB" id="8OTS">
    <property type="method" value="EM"/>
    <property type="resolution" value="3.30 A"/>
    <property type="chains" value="A/E=1-136"/>
</dbReference>
<dbReference type="PDB" id="8OTT">
    <property type="method" value="EM"/>
    <property type="resolution" value="3.30 A"/>
    <property type="chains" value="A/E=40-134"/>
</dbReference>
<dbReference type="PDB" id="8OX0">
    <property type="method" value="EM"/>
    <property type="resolution" value="2.52 A"/>
    <property type="chains" value="A/E=1-136"/>
</dbReference>
<dbReference type="PDB" id="8OX1">
    <property type="method" value="EM"/>
    <property type="resolution" value="2.70 A"/>
    <property type="chains" value="A/E=1-136"/>
</dbReference>
<dbReference type="PDB" id="8Q36">
    <property type="method" value="X-ray"/>
    <property type="resolution" value="2.60 A"/>
    <property type="chains" value="AAA/EEE=39-136"/>
</dbReference>
<dbReference type="PDB" id="8Q3E">
    <property type="method" value="X-ray"/>
    <property type="resolution" value="2.17 A"/>
    <property type="chains" value="AAA/EEE=39-136"/>
</dbReference>
<dbReference type="PDB" id="8Q3M">
    <property type="method" value="X-ray"/>
    <property type="resolution" value="2.50 A"/>
    <property type="chains" value="AAA/EEE=39-136"/>
</dbReference>
<dbReference type="PDB" id="8Q3X">
    <property type="method" value="X-ray"/>
    <property type="resolution" value="2.30 A"/>
    <property type="chains" value="AAA/EEE=39-136"/>
</dbReference>
<dbReference type="PDB" id="8QKT">
    <property type="method" value="X-ray"/>
    <property type="resolution" value="3.26 A"/>
    <property type="chains" value="AAA/EEE/KKK/OOO=39-136"/>
</dbReference>
<dbReference type="PDB" id="8RGM">
    <property type="method" value="EM"/>
    <property type="resolution" value="4.00 A"/>
    <property type="chains" value="A/E=2-136"/>
</dbReference>
<dbReference type="PDB" id="8SMW">
    <property type="method" value="EM"/>
    <property type="resolution" value="3.30 A"/>
    <property type="chains" value="A/E=1-136"/>
</dbReference>
<dbReference type="PDB" id="8SMX">
    <property type="method" value="EM"/>
    <property type="resolution" value="3.20 A"/>
    <property type="chains" value="A/E=1-136"/>
</dbReference>
<dbReference type="PDB" id="8SMY">
    <property type="method" value="EM"/>
    <property type="resolution" value="3.20 A"/>
    <property type="chains" value="A/E=1-136"/>
</dbReference>
<dbReference type="PDB" id="8SMZ">
    <property type="method" value="EM"/>
    <property type="resolution" value="3.20 A"/>
    <property type="chains" value="A/E=1-136"/>
</dbReference>
<dbReference type="PDB" id="8SN0">
    <property type="method" value="EM"/>
    <property type="resolution" value="3.20 A"/>
    <property type="chains" value="A/E=1-136"/>
</dbReference>
<dbReference type="PDB" id="8SN1">
    <property type="method" value="EM"/>
    <property type="resolution" value="3.30 A"/>
    <property type="chains" value="A/E=1-136"/>
</dbReference>
<dbReference type="PDB" id="8SN2">
    <property type="method" value="EM"/>
    <property type="resolution" value="3.60 A"/>
    <property type="chains" value="A/E=1-136"/>
</dbReference>
<dbReference type="PDB" id="8SN3">
    <property type="method" value="EM"/>
    <property type="resolution" value="3.80 A"/>
    <property type="chains" value="A/E=1-136"/>
</dbReference>
<dbReference type="PDB" id="8SN4">
    <property type="method" value="EM"/>
    <property type="resolution" value="3.70 A"/>
    <property type="chains" value="A/E=1-136"/>
</dbReference>
<dbReference type="PDB" id="8SN5">
    <property type="method" value="EM"/>
    <property type="resolution" value="3.90 A"/>
    <property type="chains" value="A/E=1-136"/>
</dbReference>
<dbReference type="PDB" id="8SN6">
    <property type="method" value="EM"/>
    <property type="resolution" value="3.70 A"/>
    <property type="chains" value="A/E=1-136"/>
</dbReference>
<dbReference type="PDB" id="8SN7">
    <property type="method" value="EM"/>
    <property type="resolution" value="3.70 A"/>
    <property type="chains" value="A/E=1-136"/>
</dbReference>
<dbReference type="PDB" id="8SN8">
    <property type="method" value="EM"/>
    <property type="resolution" value="3.70 A"/>
    <property type="chains" value="A/E=1-136"/>
</dbReference>
<dbReference type="PDB" id="8SN9">
    <property type="method" value="EM"/>
    <property type="resolution" value="3.90 A"/>
    <property type="chains" value="A/E=1-136"/>
</dbReference>
<dbReference type="PDB" id="8SNA">
    <property type="method" value="EM"/>
    <property type="resolution" value="4.00 A"/>
    <property type="chains" value="A/E=1-136"/>
</dbReference>
<dbReference type="PDB" id="8SPS">
    <property type="method" value="EM"/>
    <property type="resolution" value="3.00 A"/>
    <property type="chains" value="A/E=1-136"/>
</dbReference>
<dbReference type="PDB" id="8SPU">
    <property type="method" value="EM"/>
    <property type="resolution" value="2.80 A"/>
    <property type="chains" value="A/E=1-136"/>
</dbReference>
<dbReference type="PDB" id="8SWI">
    <property type="method" value="X-ray"/>
    <property type="resolution" value="3.00 A"/>
    <property type="chains" value="B=2-13"/>
</dbReference>
<dbReference type="PDB" id="8SYP">
    <property type="method" value="EM"/>
    <property type="resolution" value="2.60 A"/>
    <property type="chains" value="A/E=1-136"/>
</dbReference>
<dbReference type="PDB" id="8TXV">
    <property type="method" value="EM"/>
    <property type="resolution" value="3.80 A"/>
    <property type="chains" value="A/E=1-136"/>
</dbReference>
<dbReference type="PDB" id="8TXW">
    <property type="method" value="EM"/>
    <property type="resolution" value="3.60 A"/>
    <property type="chains" value="A/E=1-136"/>
</dbReference>
<dbReference type="PDB" id="8TXX">
    <property type="method" value="EM"/>
    <property type="resolution" value="3.70 A"/>
    <property type="chains" value="A/E=1-136"/>
</dbReference>
<dbReference type="PDB" id="8U13">
    <property type="method" value="EM"/>
    <property type="resolution" value="3.80 A"/>
    <property type="chains" value="A/E=1-136"/>
</dbReference>
<dbReference type="PDB" id="8U14">
    <property type="method" value="EM"/>
    <property type="resolution" value="3.90 A"/>
    <property type="chains" value="A/E=1-136"/>
</dbReference>
<dbReference type="PDB" id="8UPF">
    <property type="method" value="EM"/>
    <property type="resolution" value="3.20 A"/>
    <property type="chains" value="A/E=1-136"/>
</dbReference>
<dbReference type="PDB" id="8VFX">
    <property type="method" value="EM"/>
    <property type="resolution" value="2.65 A"/>
    <property type="chains" value="A/E=1-136"/>
</dbReference>
<dbReference type="PDB" id="8VFY">
    <property type="method" value="EM"/>
    <property type="resolution" value="2.89 A"/>
    <property type="chains" value="A/E=1-136"/>
</dbReference>
<dbReference type="PDB" id="8VFZ">
    <property type="method" value="EM"/>
    <property type="resolution" value="4.10 A"/>
    <property type="chains" value="A/E=1-136"/>
</dbReference>
<dbReference type="PDB" id="8VG0">
    <property type="method" value="EM"/>
    <property type="resolution" value="3.07 A"/>
    <property type="chains" value="A/E=1-136"/>
</dbReference>
<dbReference type="PDB" id="8VG1">
    <property type="method" value="EM"/>
    <property type="resolution" value="2.48 A"/>
    <property type="chains" value="A/E=1-136"/>
</dbReference>
<dbReference type="PDB" id="8VG2">
    <property type="method" value="EM"/>
    <property type="resolution" value="3.04 A"/>
    <property type="chains" value="A/E=1-136"/>
</dbReference>
<dbReference type="PDB" id="8VLR">
    <property type="method" value="EM"/>
    <property type="resolution" value="2.60 A"/>
    <property type="chains" value="A/E=39-136"/>
</dbReference>
<dbReference type="PDB" id="8VMI">
    <property type="method" value="EM"/>
    <property type="resolution" value="3.10 A"/>
    <property type="chains" value="B=2-7"/>
</dbReference>
<dbReference type="PDB" id="8VML">
    <property type="method" value="EM"/>
    <property type="resolution" value="3.50 A"/>
    <property type="chains" value="I=20-41"/>
</dbReference>
<dbReference type="PDB" id="8VNV">
    <property type="method" value="EM"/>
    <property type="resolution" value="3.10 A"/>
    <property type="chains" value="I=20-41"/>
</dbReference>
<dbReference type="PDB" id="8W9D">
    <property type="method" value="EM"/>
    <property type="resolution" value="3.90 A"/>
    <property type="chains" value="a/e=1-136"/>
</dbReference>
<dbReference type="PDB" id="8W9E">
    <property type="method" value="EM"/>
    <property type="resolution" value="3.60 A"/>
    <property type="chains" value="a/e=1-136"/>
</dbReference>
<dbReference type="PDB" id="8W9F">
    <property type="method" value="EM"/>
    <property type="resolution" value="4.40 A"/>
    <property type="chains" value="a/e=1-136"/>
</dbReference>
<dbReference type="PDB" id="8WG5">
    <property type="method" value="EM"/>
    <property type="resolution" value="3.05 A"/>
    <property type="chains" value="A/E=38-135"/>
</dbReference>
<dbReference type="PDB" id="8X15">
    <property type="method" value="EM"/>
    <property type="resolution" value="3.20 A"/>
    <property type="chains" value="C/G=1-136"/>
</dbReference>
<dbReference type="PDB" id="8X19">
    <property type="method" value="EM"/>
    <property type="resolution" value="3.20 A"/>
    <property type="chains" value="C/G=1-136"/>
</dbReference>
<dbReference type="PDB" id="8X1C">
    <property type="method" value="EM"/>
    <property type="resolution" value="3.20 A"/>
    <property type="chains" value="C/G=1-136"/>
</dbReference>
<dbReference type="PDB" id="8XBT">
    <property type="method" value="EM"/>
    <property type="resolution" value="4.12 A"/>
    <property type="chains" value="A/E=1-136"/>
</dbReference>
<dbReference type="PDB" id="8XBU">
    <property type="method" value="EM"/>
    <property type="resolution" value="4.24 A"/>
    <property type="chains" value="A/E=1-136"/>
</dbReference>
<dbReference type="PDB" id="8XBW">
    <property type="method" value="EM"/>
    <property type="resolution" value="2.89 A"/>
    <property type="chains" value="E=1-136"/>
</dbReference>
<dbReference type="PDB" id="8Y3C">
    <property type="method" value="EM"/>
    <property type="resolution" value="5.21 A"/>
    <property type="chains" value="A/E/K/O=1-136"/>
</dbReference>
<dbReference type="PDB" id="8Y3D">
    <property type="method" value="EM"/>
    <property type="resolution" value="5.10 A"/>
    <property type="chains" value="A/E/K/O=1-136"/>
</dbReference>
<dbReference type="PDB" id="8Y3E">
    <property type="method" value="EM"/>
    <property type="resolution" value="5.32 A"/>
    <property type="chains" value="A/E/K/O=1-136"/>
</dbReference>
<dbReference type="PDB" id="8Y3F">
    <property type="method" value="EM"/>
    <property type="resolution" value="4.54 A"/>
    <property type="chains" value="A/E/K/O=1-136"/>
</dbReference>
<dbReference type="PDB" id="8YBJ">
    <property type="method" value="EM"/>
    <property type="resolution" value="2.38 A"/>
    <property type="chains" value="A/E=1-136"/>
</dbReference>
<dbReference type="PDB" id="8YBK">
    <property type="method" value="EM"/>
    <property type="resolution" value="2.69 A"/>
    <property type="chains" value="A/E=1-136"/>
</dbReference>
<dbReference type="PDB" id="8YJF">
    <property type="method" value="X-ray"/>
    <property type="resolution" value="4.40 A"/>
    <property type="chains" value="C/E=56-136"/>
</dbReference>
<dbReference type="PDB" id="8YJM">
    <property type="method" value="X-ray"/>
    <property type="resolution" value="4.15 A"/>
    <property type="chains" value="C/E=56-136"/>
</dbReference>
<dbReference type="PDB" id="8YNY">
    <property type="method" value="EM"/>
    <property type="resolution" value="4.52 A"/>
    <property type="chains" value="A/E=1-136"/>
</dbReference>
<dbReference type="PDB" id="8YTI">
    <property type="method" value="X-ray"/>
    <property type="resolution" value="2.70 A"/>
    <property type="chains" value="A/E/K/O=1-136"/>
</dbReference>
<dbReference type="PDB" id="8YV8">
    <property type="method" value="EM"/>
    <property type="resolution" value="3.00 A"/>
    <property type="chains" value="A/E=2-136"/>
</dbReference>
<dbReference type="PDB" id="9FGQ">
    <property type="method" value="EM"/>
    <property type="resolution" value="2.50 A"/>
    <property type="chains" value="A/E=1-136"/>
</dbReference>
<dbReference type="PDB" id="9FH9">
    <property type="method" value="EM"/>
    <property type="resolution" value="2.50 A"/>
    <property type="chains" value="A/E=1-136"/>
</dbReference>
<dbReference type="PDB" id="9J8M">
    <property type="method" value="EM"/>
    <property type="resolution" value="3.82 A"/>
    <property type="chains" value="A/E=1-136"/>
</dbReference>
<dbReference type="PDB" id="9J8N">
    <property type="method" value="EM"/>
    <property type="resolution" value="7.14 A"/>
    <property type="chains" value="A/E/a/e=1-136"/>
</dbReference>
<dbReference type="PDB" id="9J8O">
    <property type="method" value="EM"/>
    <property type="resolution" value="4.05 A"/>
    <property type="chains" value="A/E/a/e=1-136"/>
</dbReference>
<dbReference type="PDBsum" id="1CS9"/>
<dbReference type="PDBsum" id="1CT6"/>
<dbReference type="PDBsum" id="1O9S"/>
<dbReference type="PDBsum" id="1Q3L"/>
<dbReference type="PDBsum" id="2B2T"/>
<dbReference type="PDBsum" id="2B2U"/>
<dbReference type="PDBsum" id="2B2V"/>
<dbReference type="PDBsum" id="2B2W"/>
<dbReference type="PDBsum" id="2C1J"/>
<dbReference type="PDBsum" id="2C1N"/>
<dbReference type="PDBsum" id="2CO0"/>
<dbReference type="PDBsum" id="2CV5"/>
<dbReference type="PDBsum" id="2FSA"/>
<dbReference type="PDBsum" id="2KWJ"/>
<dbReference type="PDBsum" id="2KWK"/>
<dbReference type="PDBsum" id="2L75"/>
<dbReference type="PDBsum" id="2LBM"/>
<dbReference type="PDBsum" id="2LGG"/>
<dbReference type="PDBsum" id="2M0O"/>
<dbReference type="PDBsum" id="2NDF"/>
<dbReference type="PDBsum" id="2NDG"/>
<dbReference type="PDBsum" id="2OQ6"/>
<dbReference type="PDBsum" id="2OT7"/>
<dbReference type="PDBsum" id="2OX0"/>
<dbReference type="PDBsum" id="2RI7"/>
<dbReference type="PDBsum" id="2RR4"/>
<dbReference type="PDBsum" id="2UXN"/>
<dbReference type="PDBsum" id="2V85"/>
<dbReference type="PDBsum" id="2V89"/>
<dbReference type="PDBsum" id="2VNF"/>
<dbReference type="PDBsum" id="2VPG"/>
<dbReference type="PDBsum" id="2X0L"/>
<dbReference type="PDBsum" id="3A1B"/>
<dbReference type="PDBsum" id="3AFA"/>
<dbReference type="PDBsum" id="3AVR"/>
<dbReference type="PDBsum" id="3AYW"/>
<dbReference type="PDBsum" id="3AZE"/>
<dbReference type="PDBsum" id="3AZF"/>
<dbReference type="PDBsum" id="3AZG"/>
<dbReference type="PDBsum" id="3AZH"/>
<dbReference type="PDBsum" id="3AZI"/>
<dbReference type="PDBsum" id="3AZJ"/>
<dbReference type="PDBsum" id="3AZK"/>
<dbReference type="PDBsum" id="3AZL"/>
<dbReference type="PDBsum" id="3AZM"/>
<dbReference type="PDBsum" id="3AZN"/>
<dbReference type="PDBsum" id="3B95"/>
<dbReference type="PDBsum" id="3FDT"/>
<dbReference type="PDBsum" id="3KMT"/>
<dbReference type="PDBsum" id="3KQI"/>
<dbReference type="PDBsum" id="3LQI"/>
<dbReference type="PDBsum" id="3LQJ"/>
<dbReference type="PDBsum" id="3MP1"/>
<dbReference type="PDBsum" id="3O34"/>
<dbReference type="PDBsum" id="3O35"/>
<dbReference type="PDBsum" id="3O37"/>
<dbReference type="PDBsum" id="3QJ6"/>
<dbReference type="PDBsum" id="3RIG"/>
<dbReference type="PDBsum" id="3RIY"/>
<dbReference type="PDBsum" id="3SOU"/>
<dbReference type="PDBsum" id="3SOW"/>
<dbReference type="PDBsum" id="3U31"/>
<dbReference type="PDBsum" id="3U3D"/>
<dbReference type="PDBsum" id="3U4S"/>
<dbReference type="PDBsum" id="3U5N"/>
<dbReference type="PDBsum" id="3U5O"/>
<dbReference type="PDBsum" id="3U5P"/>
<dbReference type="PDBsum" id="3UEE"/>
<dbReference type="PDBsum" id="3UEF"/>
<dbReference type="PDBsum" id="3UIG"/>
<dbReference type="PDBsum" id="3UII"/>
<dbReference type="PDBsum" id="3UIK"/>
<dbReference type="PDBsum" id="3V43"/>
<dbReference type="PDBsum" id="3W96"/>
<dbReference type="PDBsum" id="3W97"/>
<dbReference type="PDBsum" id="3W98"/>
<dbReference type="PDBsum" id="3W99"/>
<dbReference type="PDBsum" id="3WA9"/>
<dbReference type="PDBsum" id="3WAA"/>
<dbReference type="PDBsum" id="3WKJ"/>
<dbReference type="PDBsum" id="3X1S"/>
<dbReference type="PDBsum" id="3X1T"/>
<dbReference type="PDBsum" id="3X1U"/>
<dbReference type="PDBsum" id="3X1V"/>
<dbReference type="PDBsum" id="3ZG6"/>
<dbReference type="PDBsum" id="3ZVY"/>
<dbReference type="PDBsum" id="4A0J"/>
<dbReference type="PDBsum" id="4A0N"/>
<dbReference type="PDBsum" id="4A7J"/>
<dbReference type="PDBsum" id="4BD3"/>
<dbReference type="PDBsum" id="4C1Q"/>
<dbReference type="PDBsum" id="4F4U"/>
<dbReference type="PDBsum" id="4F56"/>
<dbReference type="PDBsum" id="4FWF"/>
<dbReference type="PDBsum" id="4HON"/>
<dbReference type="PDBsum" id="4I51"/>
<dbReference type="PDBsum" id="4L7X"/>
<dbReference type="PDBsum" id="4LK9"/>
<dbReference type="PDBsum" id="4LKA"/>
<dbReference type="PDBsum" id="4LLB"/>
<dbReference type="PDBsum" id="4LXL"/>
<dbReference type="PDBsum" id="4N4H"/>
<dbReference type="PDBsum" id="4QBQ"/>
<dbReference type="PDBsum" id="4QBR"/>
<dbReference type="PDBsum" id="4QBS"/>
<dbReference type="PDBsum" id="4TN7"/>
<dbReference type="PDBsum" id="4U68"/>
<dbReference type="PDBsum" id="4UP0"/>
<dbReference type="PDBsum" id="4UY4"/>
<dbReference type="PDBsum" id="4X3K"/>
<dbReference type="PDBsum" id="4Y6L"/>
<dbReference type="PDBsum" id="4YHP"/>
<dbReference type="PDBsum" id="4YHZ"/>
<dbReference type="PDBsum" id="4YM5"/>
<dbReference type="PDBsum" id="4YM6"/>
<dbReference type="PDBsum" id="4Z0R"/>
<dbReference type="PDBsum" id="4Z2M"/>
<dbReference type="PDBsum" id="5AV5"/>
<dbReference type="PDBsum" id="5AV6"/>
<dbReference type="PDBsum" id="5AV8"/>
<dbReference type="PDBsum" id="5AV9"/>
<dbReference type="PDBsum" id="5AVB"/>
<dbReference type="PDBsum" id="5AVC"/>
<dbReference type="PDBsum" id="5B24"/>
<dbReference type="PDBsum" id="5B2I"/>
<dbReference type="PDBsum" id="5B2J"/>
<dbReference type="PDBsum" id="5B31"/>
<dbReference type="PDBsum" id="5C11"/>
<dbReference type="PDBsum" id="5C13"/>
<dbReference type="PDBsum" id="5C3I"/>
<dbReference type="PDBsum" id="5CPI"/>
<dbReference type="PDBsum" id="5CPJ"/>
<dbReference type="PDBsum" id="5CPK"/>
<dbReference type="PDBsum" id="5D6Y"/>
<dbReference type="PDBsum" id="5DAH"/>
<dbReference type="PDBsum" id="5FB0"/>
<dbReference type="PDBsum" id="5FB1"/>
<dbReference type="PDBsum" id="5FFV"/>
<dbReference type="PDBsum" id="5GH9"/>
<dbReference type="PDBsum" id="5GSE"/>
<dbReference type="PDBsum" id="5GSU"/>
<dbReference type="PDBsum" id="5GT0"/>
<dbReference type="PDBsum" id="5GT3"/>
<dbReference type="PDBsum" id="5GTC"/>
<dbReference type="PDBsum" id="5H6Q"/>
<dbReference type="PDBsum" id="5H6R"/>
<dbReference type="PDBsum" id="5HJB"/>
<dbReference type="PDBsum" id="5HJC"/>
<dbReference type="PDBsum" id="5HJD"/>
<dbReference type="PDBsum" id="5HYN"/>
<dbReference type="PDBsum" id="5IQL"/>
<dbReference type="PDBsum" id="5J3V"/>
<dbReference type="PDBsum" id="5J9S"/>
<dbReference type="PDBsum" id="5JHN"/>
<dbReference type="PDBsum" id="5JIN"/>
<dbReference type="PDBsum" id="5JIY"/>
<dbReference type="PDBsum" id="5JJ0"/>
<dbReference type="PDBsum" id="5JRG"/>
<dbReference type="PDBsum" id="5KJH"/>
<dbReference type="PDBsum" id="5KJI"/>
<dbReference type="PDBsum" id="5KKL"/>
<dbReference type="PDBsum" id="5LUG"/>
<dbReference type="PDBsum" id="5M5G"/>
<dbReference type="PDBsum" id="5MR8"/>
<dbReference type="PDBsum" id="5NNC"/>
<dbReference type="PDBsum" id="5NND"/>
<dbReference type="PDBsum" id="5OY3"/>
<dbReference type="PDBsum" id="5SVX"/>
<dbReference type="PDBsum" id="5SVY"/>
<dbReference type="PDBsum" id="5SZB"/>
<dbReference type="PDBsum" id="5SZC"/>
<dbReference type="PDBsum" id="5T0K"/>
<dbReference type="PDBsum" id="5T0M"/>
<dbReference type="PDBsum" id="5T1G"/>
<dbReference type="PDBsum" id="5T1I"/>
<dbReference type="PDBsum" id="5T8R"/>
<dbReference type="PDBsum" id="5TBN"/>
<dbReference type="PDBsum" id="5TDR"/>
<dbReference type="PDBsum" id="5TDW"/>
<dbReference type="PDBsum" id="5U2J"/>
<dbReference type="PDBsum" id="5V21"/>
<dbReference type="PDBsum" id="5V22"/>
<dbReference type="PDBsum" id="5VA6"/>
<dbReference type="PDBsum" id="5VAB"/>
<dbReference type="PDBsum" id="5VGE"/>
<dbReference type="PDBsum" id="5VNB"/>
<dbReference type="PDBsum" id="5WFC"/>
<dbReference type="PDBsum" id="5WLE"/>
<dbReference type="PDBsum" id="5WVO"/>
<dbReference type="PDBsum" id="5WXG"/>
<dbReference type="PDBsum" id="5WXH"/>
<dbReference type="PDBsum" id="5WYI"/>
<dbReference type="PDBsum" id="5X60"/>
<dbReference type="PDBsum" id="5XF3"/>
<dbReference type="PDBsum" id="5XF4"/>
<dbReference type="PDBsum" id="5XF5"/>
<dbReference type="PDBsum" id="5XFQ"/>
<dbReference type="PDBsum" id="5XFR"/>
<dbReference type="PDBsum" id="5XNV"/>
<dbReference type="PDBsum" id="5XTZ"/>
<dbReference type="PDBsum" id="5Y0C"/>
<dbReference type="PDBsum" id="5Y0D"/>
<dbReference type="PDBsum" id="5Y20"/>
<dbReference type="PDBsum" id="5Y2F"/>
<dbReference type="PDBsum" id="5Z23"/>
<dbReference type="PDBsum" id="5Z30"/>
<dbReference type="PDBsum" id="6AXJ"/>
<dbReference type="PDBsum" id="6AZE"/>
<dbReference type="PDBsum" id="6BHD"/>
<dbReference type="PDBsum" id="6BHE"/>
<dbReference type="PDBsum" id="6BHG"/>
<dbReference type="PDBsum" id="6BHH"/>
<dbReference type="PDBsum" id="6BHI"/>
<dbReference type="PDBsum" id="6D07"/>
<dbReference type="PDBsum" id="6D08"/>
<dbReference type="PDBsum" id="6E83"/>
<dbReference type="PDBsum" id="6E86"/>
<dbReference type="PDBsum" id="6F6D"/>
<dbReference type="PDBsum" id="6HKT"/>
<dbReference type="PDBsum" id="6HTS"/>
<dbReference type="PDBsum" id="6IEU"/>
<dbReference type="PDBsum" id="6IIS"/>
<dbReference type="PDBsum" id="6IIT"/>
<dbReference type="PDBsum" id="6IPU"/>
<dbReference type="PDBsum" id="6IQ4"/>
<dbReference type="PDBsum" id="6JOU"/>
<dbReference type="PDBsum" id="6JR0"/>
<dbReference type="PDBsum" id="6JR1"/>
<dbReference type="PDBsum" id="6JXD"/>
<dbReference type="PDBsum" id="6K1I"/>
<dbReference type="PDBsum" id="6K1J"/>
<dbReference type="PDBsum" id="6K1K"/>
<dbReference type="PDBsum" id="6KE9"/>
<dbReference type="PDBsum" id="6KVD"/>
<dbReference type="PDBsum" id="6L49"/>
<dbReference type="PDBsum" id="6L4A"/>
<dbReference type="PDBsum" id="6L9H"/>
<dbReference type="PDBsum" id="6L9Z"/>
<dbReference type="PDBsum" id="6LA2"/>
<dbReference type="PDBsum" id="6LA8"/>
<dbReference type="PDBsum" id="6LA9"/>
<dbReference type="PDBsum" id="6LAB"/>
<dbReference type="PDBsum" id="6LE9"/>
<dbReference type="PDBsum" id="6LER"/>
<dbReference type="PDBsum" id="6LS6"/>
<dbReference type="PDBsum" id="6LSD"/>
<dbReference type="PDBsum" id="6M3V"/>
<dbReference type="PDBsum" id="6M44"/>
<dbReference type="PDBsum" id="6M4D"/>
<dbReference type="PDBsum" id="6M4G"/>
<dbReference type="PDBsum" id="6M4H"/>
<dbReference type="PDBsum" id="6MIL"/>
<dbReference type="PDBsum" id="6MIM"/>
<dbReference type="PDBsum" id="6MIN"/>
<dbReference type="PDBsum" id="6MIO"/>
<dbReference type="PDBsum" id="6MIQ"/>
<dbReference type="PDBsum" id="6PA1"/>
<dbReference type="PDBsum" id="6PAG"/>
<dbReference type="PDBsum" id="6R8Y"/>
<dbReference type="PDBsum" id="6R8Z"/>
<dbReference type="PDBsum" id="6R90"/>
<dbReference type="PDBsum" id="6R91"/>
<dbReference type="PDBsum" id="6R92"/>
<dbReference type="PDBsum" id="6R93"/>
<dbReference type="PDBsum" id="6R94"/>
<dbReference type="PDBsum" id="6T90"/>
<dbReference type="PDBsum" id="6T93"/>
<dbReference type="PDBsum" id="6UPK"/>
<dbReference type="PDBsum" id="6UPL"/>
<dbReference type="PDBsum" id="6USJ"/>
<dbReference type="PDBsum" id="6V2H"/>
<dbReference type="PDBsum" id="6V2K"/>
<dbReference type="PDBsum" id="6V3N"/>
<dbReference type="PDBsum" id="6V41"/>
<dbReference type="PDBsum" id="6V92"/>
<dbReference type="PDBsum" id="6VIL"/>
<dbReference type="PDBsum" id="6WAV"/>
<dbReference type="PDBsum" id="6WW4"/>
<dbReference type="PDBsum" id="6YIF"/>
<dbReference type="PDBsum" id="6YIH"/>
<dbReference type="PDBsum" id="6YOV"/>
<dbReference type="PDBsum" id="7BWD"/>
<dbReference type="PDBsum" id="7C0M"/>
<dbReference type="PDBsum" id="7CCQ"/>
<dbReference type="PDBsum" id="7CCR"/>
<dbReference type="PDBsum" id="7CFP"/>
<dbReference type="PDBsum" id="7CFQ"/>
<dbReference type="PDBsum" id="7COW"/>
<dbReference type="PDBsum" id="7D1Z"/>
<dbReference type="PDBsum" id="7DBP"/>
<dbReference type="PDBsum" id="7E8D"/>
<dbReference type="PDBsum" id="7EBK"/>
<dbReference type="PDBsum" id="7K5X"/>
<dbReference type="PDBsum" id="7K5Y"/>
<dbReference type="PDBsum" id="7K60"/>
<dbReference type="PDBsum" id="7K61"/>
<dbReference type="PDBsum" id="7K63"/>
<dbReference type="PDBsum" id="7KLR"/>
<dbReference type="PDBsum" id="7LBK"/>
<dbReference type="PDBsum" id="7LBO"/>
<dbReference type="PDBsum" id="7LBP"/>
<dbReference type="PDBsum" id="7LBQ"/>
<dbReference type="PDBsum" id="7LYA"/>
<dbReference type="PDBsum" id="7LYB"/>
<dbReference type="PDBsum" id="7LYC"/>
<dbReference type="PDBsum" id="7MJU"/>
<dbReference type="PDBsum" id="7NL0"/>
<dbReference type="PDBsum" id="7SCY"/>
<dbReference type="PDBsum" id="7SCZ"/>
<dbReference type="PDBsum" id="7TD5"/>
<dbReference type="PDBsum" id="7U0G"/>
<dbReference type="PDBsum" id="7U0I"/>
<dbReference type="PDBsum" id="7U0J"/>
<dbReference type="PDBsum" id="7V6Q"/>
<dbReference type="PDBsum" id="7V90"/>
<dbReference type="PDBsum" id="7V96"/>
<dbReference type="PDBsum" id="7V9C"/>
<dbReference type="PDBsum" id="7V9J"/>
<dbReference type="PDBsum" id="7V9K"/>
<dbReference type="PDBsum" id="7V9S"/>
<dbReference type="PDBsum" id="7VA4"/>
<dbReference type="PDBsum" id="7VZ4"/>
<dbReference type="PDBsum" id="7W9V"/>
<dbReference type="PDBsum" id="7X57"/>
<dbReference type="PDBsum" id="7X58"/>
<dbReference type="PDBsum" id="7XD1"/>
<dbReference type="PDBsum" id="7XVL"/>
<dbReference type="PDBsum" id="7XVM"/>
<dbReference type="PDBsum" id="7XX5"/>
<dbReference type="PDBsum" id="7XX6"/>
<dbReference type="PDBsum" id="7XZX"/>
<dbReference type="PDBsum" id="7XZY"/>
<dbReference type="PDBsum" id="7XZZ"/>
<dbReference type="PDBsum" id="7Y00"/>
<dbReference type="PDBsum" id="7Y5U"/>
<dbReference type="PDBsum" id="7Y5V"/>
<dbReference type="PDBsum" id="7Y5W"/>
<dbReference type="PDBsum" id="7Y60"/>
<dbReference type="PDBsum" id="7Y61"/>
<dbReference type="PDBsum" id="7Y7I"/>
<dbReference type="PDBsum" id="7Y8R"/>
<dbReference type="PDBsum" id="7YOZ"/>
<dbReference type="PDBsum" id="7YQK"/>
<dbReference type="PDBsum" id="7ZI4"/>
<dbReference type="PDBsum" id="8DK5"/>
<dbReference type="PDBsum" id="8DS8"/>
<dbReference type="PDBsum" id="8EVG"/>
<dbReference type="PDBsum" id="8EVH"/>
<dbReference type="PDBsum" id="8EVI"/>
<dbReference type="PDBsum" id="8EVJ"/>
<dbReference type="PDBsum" id="8GE0"/>
<dbReference type="PDBsum" id="8GRM"/>
<dbReference type="PDBsum" id="8GUI"/>
<dbReference type="PDBsum" id="8GUJ"/>
<dbReference type="PDBsum" id="8GUK"/>
<dbReference type="PDBsum" id="8H0V"/>
<dbReference type="PDBsum" id="8H0W"/>
<dbReference type="PDBsum" id="8H1T"/>
<dbReference type="PDBsum" id="8HAG"/>
<dbReference type="PDBsum" id="8HAH"/>
<dbReference type="PDBsum" id="8HAI"/>
<dbReference type="PDBsum" id="8HAJ"/>
<dbReference type="PDBsum" id="8HAK"/>
<dbReference type="PDBsum" id="8HAL"/>
<dbReference type="PDBsum" id="8HAM"/>
<dbReference type="PDBsum" id="8HAN"/>
<dbReference type="PDBsum" id="8HE5"/>
<dbReference type="PDBsum" id="8HLY"/>
<dbReference type="PDBsum" id="8HMX"/>
<dbReference type="PDBsum" id="8I60"/>
<dbReference type="PDBsum" id="8IEG"/>
<dbReference type="PDBsum" id="8IEJ"/>
<dbReference type="PDBsum" id="8IHL"/>
<dbReference type="PDBsum" id="8IIY"/>
<dbReference type="PDBsum" id="8IIZ"/>
<dbReference type="PDBsum" id="8IJ0"/>
<dbReference type="PDBsum" id="8IQF"/>
<dbReference type="PDBsum" id="8IQG"/>
<dbReference type="PDBsum" id="8J6S"/>
<dbReference type="PDBsum" id="8J6T"/>
<dbReference type="PDBsum" id="8JBX"/>
<dbReference type="PDBsum" id="8JCC"/>
<dbReference type="PDBsum" id="8JCD"/>
<dbReference type="PDBsum" id="8JHF"/>
<dbReference type="PDBsum" id="8JHG"/>
<dbReference type="PDBsum" id="8JL9"/>
<dbReference type="PDBsum" id="8JLA"/>
<dbReference type="PDBsum" id="8JND"/>
<dbReference type="PDBsum" id="8JNE"/>
<dbReference type="PDBsum" id="8JNF"/>
<dbReference type="PDBsum" id="8KCY"/>
<dbReference type="PDBsum" id="8KD1"/>
<dbReference type="PDBsum" id="8KE0"/>
<dbReference type="PDBsum" id="8OFF"/>
<dbReference type="PDBsum" id="8OO7"/>
<dbReference type="PDBsum" id="8OOA"/>
<dbReference type="PDBsum" id="8OOP"/>
<dbReference type="PDBsum" id="8OOS"/>
<dbReference type="PDBsum" id="8OSJ"/>
<dbReference type="PDBsum" id="8OSK"/>
<dbReference type="PDBsum" id="8OSL"/>
<dbReference type="PDBsum" id="8OTS"/>
<dbReference type="PDBsum" id="8OTT"/>
<dbReference type="PDBsum" id="8OX0"/>
<dbReference type="PDBsum" id="8OX1"/>
<dbReference type="PDBsum" id="8Q36"/>
<dbReference type="PDBsum" id="8Q3E"/>
<dbReference type="PDBsum" id="8Q3M"/>
<dbReference type="PDBsum" id="8Q3X"/>
<dbReference type="PDBsum" id="8QKT"/>
<dbReference type="PDBsum" id="8RGM"/>
<dbReference type="PDBsum" id="8SMW"/>
<dbReference type="PDBsum" id="8SMX"/>
<dbReference type="PDBsum" id="8SMY"/>
<dbReference type="PDBsum" id="8SMZ"/>
<dbReference type="PDBsum" id="8SN0"/>
<dbReference type="PDBsum" id="8SN1"/>
<dbReference type="PDBsum" id="8SN2"/>
<dbReference type="PDBsum" id="8SN3"/>
<dbReference type="PDBsum" id="8SN4"/>
<dbReference type="PDBsum" id="8SN5"/>
<dbReference type="PDBsum" id="8SN6"/>
<dbReference type="PDBsum" id="8SN7"/>
<dbReference type="PDBsum" id="8SN8"/>
<dbReference type="PDBsum" id="8SN9"/>
<dbReference type="PDBsum" id="8SNA"/>
<dbReference type="PDBsum" id="8SPS"/>
<dbReference type="PDBsum" id="8SPU"/>
<dbReference type="PDBsum" id="8SWI"/>
<dbReference type="PDBsum" id="8SYP"/>
<dbReference type="PDBsum" id="8TXV"/>
<dbReference type="PDBsum" id="8TXW"/>
<dbReference type="PDBsum" id="8TXX"/>
<dbReference type="PDBsum" id="8U13"/>
<dbReference type="PDBsum" id="8U14"/>
<dbReference type="PDBsum" id="8UPF"/>
<dbReference type="PDBsum" id="8VFX"/>
<dbReference type="PDBsum" id="8VFY"/>
<dbReference type="PDBsum" id="8VFZ"/>
<dbReference type="PDBsum" id="8VG0"/>
<dbReference type="PDBsum" id="8VG1"/>
<dbReference type="PDBsum" id="8VG2"/>
<dbReference type="PDBsum" id="8VLR"/>
<dbReference type="PDBsum" id="8VMI"/>
<dbReference type="PDBsum" id="8VML"/>
<dbReference type="PDBsum" id="8VNV"/>
<dbReference type="PDBsum" id="8W9D"/>
<dbReference type="PDBsum" id="8W9E"/>
<dbReference type="PDBsum" id="8W9F"/>
<dbReference type="PDBsum" id="8WG5"/>
<dbReference type="PDBsum" id="8X15"/>
<dbReference type="PDBsum" id="8X19"/>
<dbReference type="PDBsum" id="8X1C"/>
<dbReference type="PDBsum" id="8XBT"/>
<dbReference type="PDBsum" id="8XBU"/>
<dbReference type="PDBsum" id="8XBW"/>
<dbReference type="PDBsum" id="8Y3C"/>
<dbReference type="PDBsum" id="8Y3D"/>
<dbReference type="PDBsum" id="8Y3E"/>
<dbReference type="PDBsum" id="8Y3F"/>
<dbReference type="PDBsum" id="8YBJ"/>
<dbReference type="PDBsum" id="8YBK"/>
<dbReference type="PDBsum" id="8YJF"/>
<dbReference type="PDBsum" id="8YJM"/>
<dbReference type="PDBsum" id="8YNY"/>
<dbReference type="PDBsum" id="8YTI"/>
<dbReference type="PDBsum" id="8YV8"/>
<dbReference type="PDBsum" id="9FGQ"/>
<dbReference type="PDBsum" id="9FH9"/>
<dbReference type="PDBsum" id="9J8M"/>
<dbReference type="PDBsum" id="9J8N"/>
<dbReference type="PDBsum" id="9J8O"/>
<dbReference type="EMDB" id="EMD-10406"/>
<dbReference type="EMDB" id="EMD-10408"/>
<dbReference type="EMDB" id="EMD-10864"/>
<dbReference type="EMDB" id="EMD-12453"/>
<dbReference type="EMDB" id="EMD-14737"/>
<dbReference type="EMDB" id="EMD-16859"/>
<dbReference type="EMDB" id="EMD-17006"/>
<dbReference type="EMDB" id="EMD-17008"/>
<dbReference type="EMDB" id="EMD-17025"/>
<dbReference type="EMDB" id="EMD-17027"/>
<dbReference type="EMDB" id="EMD-17155"/>
<dbReference type="EMDB" id="EMD-17157"/>
<dbReference type="EMDB" id="EMD-17160"/>
<dbReference type="EMDB" id="EMD-17183"/>
<dbReference type="EMDB" id="EMD-17184"/>
<dbReference type="EMDB" id="EMD-17251"/>
<dbReference type="EMDB" id="EMD-17252"/>
<dbReference type="EMDB" id="EMD-17253"/>
<dbReference type="EMDB" id="EMD-19134"/>
<dbReference type="EMDB" id="EMD-20840"/>
<dbReference type="EMDB" id="EMD-20841"/>
<dbReference type="EMDB" id="EMD-20864"/>
<dbReference type="EMDB" id="EMD-21114"/>
<dbReference type="EMDB" id="EMD-22683"/>
<dbReference type="EMDB" id="EMD-22684"/>
<dbReference type="EMDB" id="EMD-22685"/>
<dbReference type="EMDB" id="EMD-22686"/>
<dbReference type="EMDB" id="EMD-22687"/>
<dbReference type="EMDB" id="EMD-22688"/>
<dbReference type="EMDB" id="EMD-23590"/>
<dbReference type="EMDB" id="EMD-23591"/>
<dbReference type="EMDB" id="EMD-23592"/>
<dbReference type="EMDB" id="EMD-25042"/>
<dbReference type="EMDB" id="EMD-25043"/>
<dbReference type="EMDB" id="EMD-26258"/>
<dbReference type="EMDB" id="EMD-26260"/>
<dbReference type="EMDB" id="EMD-26261"/>
<dbReference type="EMDB" id="EMD-27483"/>
<dbReference type="EMDB" id="EMD-28628"/>
<dbReference type="EMDB" id="EMD-28629"/>
<dbReference type="EMDB" id="EMD-28630"/>
<dbReference type="EMDB" id="EMD-28631"/>
<dbReference type="EMDB" id="EMD-30076"/>
<dbReference type="EMDB" id="EMD-30077"/>
<dbReference type="EMDB" id="EMD-30078"/>
<dbReference type="EMDB" id="EMD-30232"/>
<dbReference type="EMDB" id="EMD-30267"/>
<dbReference type="EMDB" id="EMD-30339"/>
<dbReference type="EMDB" id="EMD-30340"/>
<dbReference type="EMDB" id="EMD-30551"/>
<dbReference type="EMDB" id="EMD-31015"/>
<dbReference type="EMDB" id="EMD-31806"/>
<dbReference type="EMDB" id="EMD-31810"/>
<dbReference type="EMDB" id="EMD-31815"/>
<dbReference type="EMDB" id="EMD-31816"/>
<dbReference type="EMDB" id="EMD-31823"/>
<dbReference type="EMDB" id="EMD-31826"/>
<dbReference type="EMDB" id="EMD-31832"/>
<dbReference type="EMDB" id="EMD-32220"/>
<dbReference type="EMDB" id="EMD-32373"/>
<dbReference type="EMDB" id="EMD-33010"/>
<dbReference type="EMDB" id="EMD-33011"/>
<dbReference type="EMDB" id="EMD-33533"/>
<dbReference type="EMDB" id="EMD-33534"/>
<dbReference type="EMDB" id="EMD-33535"/>
<dbReference type="EMDB" id="EMD-33536"/>
<dbReference type="EMDB" id="EMD-33625"/>
<dbReference type="EMDB" id="EMD-33626"/>
<dbReference type="EMDB" id="EMD-33627"/>
<dbReference type="EMDB" id="EMD-33630"/>
<dbReference type="EMDB" id="EMD-33631"/>
<dbReference type="EMDB" id="EMD-33991"/>
<dbReference type="EMDB" id="EMD-34028"/>
<dbReference type="EMDB" id="EMD-34274"/>
<dbReference type="EMDB" id="EMD-34275"/>
<dbReference type="EMDB" id="EMD-34415"/>
<dbReference type="EMDB" id="EMD-34416"/>
<dbReference type="EMDB" id="EMD-34431"/>
<dbReference type="EMDB" id="EMD-34588"/>
<dbReference type="EMDB" id="EMD-34589"/>
<dbReference type="EMDB" id="EMD-34591"/>
<dbReference type="EMDB" id="EMD-34592"/>
<dbReference type="EMDB" id="EMD-34594"/>
<dbReference type="EMDB" id="EMD-34595"/>
<dbReference type="EMDB" id="EMD-34596"/>
<dbReference type="EMDB" id="EMD-34597"/>
<dbReference type="EMDB" id="EMD-34685"/>
<dbReference type="EMDB" id="EMD-35381"/>
<dbReference type="EMDB" id="EMD-35383"/>
<dbReference type="EMDB" id="EMD-35448"/>
<dbReference type="EMDB" id="EMD-35660"/>
<dbReference type="EMDB" id="EMD-35661"/>
<dbReference type="EMDB" id="EMD-36013"/>
<dbReference type="EMDB" id="EMD-36014"/>
<dbReference type="EMDB" id="EMD-36148"/>
<dbReference type="EMDB" id="EMD-36157"/>
<dbReference type="EMDB" id="EMD-36158"/>
<dbReference type="EMDB" id="EMD-36264"/>
<dbReference type="EMDB" id="EMD-36265"/>
<dbReference type="EMDB" id="EMD-36389"/>
<dbReference type="EMDB" id="EMD-36390"/>
<dbReference type="EMDB" id="EMD-36442"/>
<dbReference type="EMDB" id="EMD-36443"/>
<dbReference type="EMDB" id="EMD-36444"/>
<dbReference type="EMDB" id="EMD-37115"/>
<dbReference type="EMDB" id="EMD-37121"/>
<dbReference type="EMDB" id="EMD-37149"/>
<dbReference type="EMDB" id="EMD-37365"/>
<dbReference type="EMDB" id="EMD-37366"/>
<dbReference type="EMDB" id="EMD-37367"/>
<dbReference type="EMDB" id="EMD-37503"/>
<dbReference type="EMDB" id="EMD-37984"/>
<dbReference type="EMDB" id="EMD-37988"/>
<dbReference type="EMDB" id="EMD-37990"/>
<dbReference type="EMDB" id="EMD-38228"/>
<dbReference type="EMDB" id="EMD-38229"/>
<dbReference type="EMDB" id="EMD-38231"/>
<dbReference type="EMDB" id="EMD-38877"/>
<dbReference type="EMDB" id="EMD-38878"/>
<dbReference type="EMDB" id="EMD-38879"/>
<dbReference type="EMDB" id="EMD-38880"/>
<dbReference type="EMDB" id="EMD-39119"/>
<dbReference type="EMDB" id="EMD-39120"/>
<dbReference type="EMDB" id="EMD-39431"/>
<dbReference type="EMDB" id="EMD-3954"/>
<dbReference type="EMDB" id="EMD-39594"/>
<dbReference type="EMDB" id="EMD-40604"/>
<dbReference type="EMDB" id="EMD-40605"/>
<dbReference type="EMDB" id="EMD-40606"/>
<dbReference type="EMDB" id="EMD-40607"/>
<dbReference type="EMDB" id="EMD-40608"/>
<dbReference type="EMDB" id="EMD-40609"/>
<dbReference type="EMDB" id="EMD-40610"/>
<dbReference type="EMDB" id="EMD-40611"/>
<dbReference type="EMDB" id="EMD-40612"/>
<dbReference type="EMDB" id="EMD-40613"/>
<dbReference type="EMDB" id="EMD-40614"/>
<dbReference type="EMDB" id="EMD-40615"/>
<dbReference type="EMDB" id="EMD-40616"/>
<dbReference type="EMDB" id="EMD-40617"/>
<dbReference type="EMDB" id="EMD-40618"/>
<dbReference type="EMDB" id="EMD-40683"/>
<dbReference type="EMDB" id="EMD-40686"/>
<dbReference type="EMDB" id="EMD-40889"/>
<dbReference type="EMDB" id="EMD-41706"/>
<dbReference type="EMDB" id="EMD-41707"/>
<dbReference type="EMDB" id="EMD-41708"/>
<dbReference type="EMDB" id="EMD-41800"/>
<dbReference type="EMDB" id="EMD-41801"/>
<dbReference type="EMDB" id="EMD-42446"/>
<dbReference type="EMDB" id="EMD-43193"/>
<dbReference type="EMDB" id="EMD-43194"/>
<dbReference type="EMDB" id="EMD-43195"/>
<dbReference type="EMDB" id="EMD-43196"/>
<dbReference type="EMDB" id="EMD-43197"/>
<dbReference type="EMDB" id="EMD-43198"/>
<dbReference type="EMDB" id="EMD-43342"/>
<dbReference type="EMDB" id="EMD-43357"/>
<dbReference type="EMDB" id="EMD-43359"/>
<dbReference type="EMDB" id="EMD-43361"/>
<dbReference type="EMDB" id="EMD-4762"/>
<dbReference type="EMDB" id="EMD-4763"/>
<dbReference type="EMDB" id="EMD-4764"/>
<dbReference type="EMDB" id="EMD-4765"/>
<dbReference type="EMDB" id="EMD-4766"/>
<dbReference type="EMDB" id="EMD-4767"/>
<dbReference type="EMDB" id="EMD-4768"/>
<dbReference type="EMDB" id="EMD-50416"/>
<dbReference type="EMDB" id="EMD-50443"/>
<dbReference type="EMDB" id="EMD-61231"/>
<dbReference type="EMDB" id="EMD-61232"/>
<dbReference type="EMDB" id="EMD-61233"/>
<dbReference type="SASBDB" id="P68431"/>
<dbReference type="SMR" id="P68431"/>
<dbReference type="BioGRID" id="113946">
    <property type="interactions" value="955"/>
</dbReference>
<dbReference type="BioGRID" id="113947">
    <property type="interactions" value="18"/>
</dbReference>
<dbReference type="BioGRID" id="113948">
    <property type="interactions" value="498"/>
</dbReference>
<dbReference type="BioGRID" id="113949">
    <property type="interactions" value="233"/>
</dbReference>
<dbReference type="BioGRID" id="113950">
    <property type="interactions" value="53"/>
</dbReference>
<dbReference type="BioGRID" id="113951">
    <property type="interactions" value="38"/>
</dbReference>
<dbReference type="BioGRID" id="113952">
    <property type="interactions" value="51"/>
</dbReference>
<dbReference type="BioGRID" id="113953">
    <property type="interactions" value="39"/>
</dbReference>
<dbReference type="BioGRID" id="113954">
    <property type="interactions" value="69"/>
</dbReference>
<dbReference type="BioGRID" id="114458">
    <property type="interactions" value="78"/>
</dbReference>
<dbReference type="ComplexPortal" id="CPX-2556">
    <property type="entry name" value="Nucleosome, variant H3.1-H2A.2-H2B.1"/>
</dbReference>
<dbReference type="ComplexPortal" id="CPX-2558">
    <property type="entry name" value="Nucleosome complex, H2BC12 variant"/>
</dbReference>
<dbReference type="ComplexPortal" id="CPX-25754">
    <property type="entry name" value="Nucleosome complex, H2A type 1 variant"/>
</dbReference>
<dbReference type="ComplexPortal" id="CPX-25755">
    <property type="entry name" value="Hexasome complex"/>
</dbReference>
<dbReference type="ComplexPortal" id="CPX-5670">
    <property type="entry name" value="Nucleosome, variant H3.1-H2A.Z-H2B.1"/>
</dbReference>
<dbReference type="ComplexPortal" id="CPX-5671">
    <property type="entry name" value="Nucleosome, variant H3.1-H2A.V-H2B.1"/>
</dbReference>
<dbReference type="CORUM" id="P68431"/>
<dbReference type="DIP" id="DIP-29371N"/>
<dbReference type="ELM" id="P68431"/>
<dbReference type="FunCoup" id="P68431">
    <property type="interactions" value="1423"/>
</dbReference>
<dbReference type="IntAct" id="P68431">
    <property type="interactions" value="541"/>
</dbReference>
<dbReference type="MINT" id="P68431"/>
<dbReference type="STRING" id="9606.ENSP00000352252"/>
<dbReference type="BindingDB" id="P68431"/>
<dbReference type="GlyConnect" id="2886">
    <property type="glycosylation" value="1 O-GlcNAc glycan (1 site)"/>
</dbReference>
<dbReference type="GlyCosmos" id="P68431">
    <property type="glycosylation" value="4 sites, 1 glycan"/>
</dbReference>
<dbReference type="GlyGen" id="P68431">
    <property type="glycosylation" value="4 sites, 1 O-linked glycan (4 sites)"/>
</dbReference>
<dbReference type="iPTMnet" id="P68431"/>
<dbReference type="MetOSite" id="P68431"/>
<dbReference type="PhosphoSitePlus" id="P68431"/>
<dbReference type="SwissPalm" id="P68431"/>
<dbReference type="BioMuta" id="HIST1H3A"/>
<dbReference type="DMDM" id="55977055"/>
<dbReference type="jPOST" id="P68431"/>
<dbReference type="MassIVE" id="P68431"/>
<dbReference type="PaxDb" id="9606-ENSP00000352252"/>
<dbReference type="PeptideAtlas" id="P68431"/>
<dbReference type="ProteomicsDB" id="57541"/>
<dbReference type="Pumba" id="P68431"/>
<dbReference type="TopDownProteomics" id="P68431"/>
<dbReference type="ABCD" id="P68431">
    <property type="antibodies" value="8 sequenced antibodies"/>
</dbReference>
<dbReference type="Antibodypedia" id="58663">
    <property type="antibodies" value="2017 antibodies from 41 providers"/>
</dbReference>
<dbReference type="Antibodypedia" id="72733">
    <property type="antibodies" value="92 antibodies from 7 providers"/>
</dbReference>
<dbReference type="Antibodypedia" id="73461">
    <property type="antibodies" value="1894 antibodies from 23 providers"/>
</dbReference>
<dbReference type="Antibodypedia" id="74313">
    <property type="antibodies" value="1100 antibodies from 7 providers"/>
</dbReference>
<dbReference type="Antibodypedia" id="74370">
    <property type="antibodies" value="27 antibodies from 4 providers"/>
</dbReference>
<dbReference type="Antibodypedia" id="75549">
    <property type="antibodies" value="20 antibodies from 5 providers"/>
</dbReference>
<dbReference type="Antibodypedia" id="75930">
    <property type="antibodies" value="4 antibodies from 2 providers"/>
</dbReference>
<dbReference type="Antibodypedia" id="76506">
    <property type="antibodies" value="1 antibodies from 1 providers"/>
</dbReference>
<dbReference type="Antibodypedia" id="78635">
    <property type="antibodies" value="105 antibodies from 6 providers"/>
</dbReference>
<dbReference type="Antibodypedia" id="78652">
    <property type="antibodies" value="49 antibodies from 4 providers"/>
</dbReference>
<dbReference type="DNASU" id="8350"/>
<dbReference type="Ensembl" id="ENST00000356476.3">
    <property type="protein sequence ID" value="ENSP00000366999.2"/>
    <property type="gene ID" value="ENSG00000197409.9"/>
</dbReference>
<dbReference type="Ensembl" id="ENST00000359303.4">
    <property type="protein sequence ID" value="ENSP00000352252.3"/>
    <property type="gene ID" value="ENSG00000197153.5"/>
</dbReference>
<dbReference type="Ensembl" id="ENST00000369163.4">
    <property type="protein sequence ID" value="ENSP00000358160.2"/>
    <property type="gene ID" value="ENSG00000278828.2"/>
</dbReference>
<dbReference type="Ensembl" id="ENST00000612966.3">
    <property type="protein sequence ID" value="ENSP00000484658.2"/>
    <property type="gene ID" value="ENSG00000287080.2"/>
</dbReference>
<dbReference type="Ensembl" id="ENST00000613854.2">
    <property type="protein sequence ID" value="ENSP00000480826.2"/>
    <property type="gene ID" value="ENSG00000275714.2"/>
</dbReference>
<dbReference type="Ensembl" id="ENST00000614378.2">
    <property type="protein sequence ID" value="ENSP00000484638.1"/>
    <property type="gene ID" value="ENSG00000273983.2"/>
</dbReference>
<dbReference type="Ensembl" id="ENST00000614911.3">
    <property type="protein sequence ID" value="ENSP00000482271.1"/>
    <property type="gene ID" value="ENSG00000274750.3"/>
</dbReference>
<dbReference type="Ensembl" id="ENST00000616365.2">
    <property type="protein sequence ID" value="ENSP00000483283.2"/>
    <property type="gene ID" value="ENSG00000275379.2"/>
</dbReference>
<dbReference type="Ensembl" id="ENST00000618052.2">
    <property type="protein sequence ID" value="ENSP00000484095.2"/>
    <property type="gene ID" value="ENSG00000277775.2"/>
</dbReference>
<dbReference type="Ensembl" id="ENST00000621411.3">
    <property type="protein sequence ID" value="ENSP00000484841.2"/>
    <property type="gene ID" value="ENSG00000286522.2"/>
</dbReference>
<dbReference type="Ensembl" id="ENST00000634733.1">
    <property type="protein sequence ID" value="ENSP00000489282.1"/>
    <property type="gene ID" value="ENSG00000274750.3"/>
</dbReference>
<dbReference type="Ensembl" id="ENST00000685041.1">
    <property type="protein sequence ID" value="ENSP00000509120.1"/>
    <property type="gene ID" value="ENSG00000278828.2"/>
</dbReference>
<dbReference type="Ensembl" id="ENST00000718271.1">
    <property type="protein sequence ID" value="ENSP00000520711.1"/>
    <property type="gene ID" value="ENSG00000197409.9"/>
</dbReference>
<dbReference type="GeneID" id="8350"/>
<dbReference type="GeneID" id="8351"/>
<dbReference type="GeneID" id="8352"/>
<dbReference type="GeneID" id="8353"/>
<dbReference type="GeneID" id="8354"/>
<dbReference type="GeneID" id="8355"/>
<dbReference type="GeneID" id="8356"/>
<dbReference type="GeneID" id="8357"/>
<dbReference type="GeneID" id="8358"/>
<dbReference type="GeneID" id="8968"/>
<dbReference type="KEGG" id="hsa:8350"/>
<dbReference type="KEGG" id="hsa:8351"/>
<dbReference type="KEGG" id="hsa:8352"/>
<dbReference type="KEGG" id="hsa:8353"/>
<dbReference type="KEGG" id="hsa:8354"/>
<dbReference type="KEGG" id="hsa:8355"/>
<dbReference type="KEGG" id="hsa:8356"/>
<dbReference type="KEGG" id="hsa:8357"/>
<dbReference type="KEGG" id="hsa:8358"/>
<dbReference type="KEGG" id="hsa:8968"/>
<dbReference type="MANE-Select" id="ENST00000356476.3">
    <property type="protein sequence ID" value="ENSP00000366999.2"/>
    <property type="RefSeq nucleotide sequence ID" value="NM_001376937.1"/>
    <property type="RefSeq protein sequence ID" value="NP_001363866.1"/>
</dbReference>
<dbReference type="MANE-Select" id="ENST00000359303.4">
    <property type="protein sequence ID" value="ENSP00000352252.3"/>
    <property type="RefSeq nucleotide sequence ID" value="NM_003535.3"/>
    <property type="RefSeq protein sequence ID" value="NP_003526.1"/>
</dbReference>
<dbReference type="MANE-Select" id="ENST00000612966.3">
    <property type="protein sequence ID" value="ENSP00000484658.2"/>
    <property type="RefSeq nucleotide sequence ID" value="NM_003531.3"/>
    <property type="RefSeq protein sequence ID" value="NP_003522.1"/>
</dbReference>
<dbReference type="MANE-Select" id="ENST00000613854.2">
    <property type="protein sequence ID" value="ENSP00000480826.2"/>
    <property type="RefSeq nucleotide sequence ID" value="NM_003529.3"/>
    <property type="RefSeq protein sequence ID" value="NP_003520.1"/>
</dbReference>
<dbReference type="MANE-Select" id="ENST00000614378.2">
    <property type="protein sequence ID" value="ENSP00000484638.1"/>
    <property type="RefSeq nucleotide sequence ID" value="NM_003534.3"/>
    <property type="RefSeq protein sequence ID" value="NP_003525.1"/>
</dbReference>
<dbReference type="MANE-Select" id="ENST00000614911.3">
    <property type="protein sequence ID" value="ENSP00000482271.1"/>
    <property type="RefSeq nucleotide sequence ID" value="NM_003532.3"/>
    <property type="RefSeq protein sequence ID" value="NP_003523.1"/>
</dbReference>
<dbReference type="MANE-Select" id="ENST00000616365.2">
    <property type="protein sequence ID" value="ENSP00000483283.2"/>
    <property type="RefSeq nucleotide sequence ID" value="NM_003533.3"/>
    <property type="RefSeq protein sequence ID" value="NP_003524.1"/>
</dbReference>
<dbReference type="MANE-Select" id="ENST00000618052.2">
    <property type="protein sequence ID" value="ENSP00000484095.2"/>
    <property type="RefSeq nucleotide sequence ID" value="NM_021018.3"/>
    <property type="RefSeq protein sequence ID" value="NP_066298.1"/>
</dbReference>
<dbReference type="MANE-Select" id="ENST00000621411.3">
    <property type="protein sequence ID" value="ENSP00000484841.2"/>
    <property type="RefSeq nucleotide sequence ID" value="NM_003537.4"/>
    <property type="RefSeq protein sequence ID" value="NP_003528.1"/>
</dbReference>
<dbReference type="MANE-Select" id="ENST00000685041.1">
    <property type="protein sequence ID" value="ENSP00000509120.1"/>
    <property type="RefSeq nucleotide sequence ID" value="NM_003536.3"/>
    <property type="RefSeq protein sequence ID" value="NP_003527.1"/>
</dbReference>
<dbReference type="UCSC" id="uc003nfp.2">
    <property type="organism name" value="human"/>
</dbReference>
<dbReference type="AGR" id="HGNC:4766"/>
<dbReference type="AGR" id="HGNC:4767"/>
<dbReference type="AGR" id="HGNC:4768"/>
<dbReference type="AGR" id="HGNC:4769"/>
<dbReference type="AGR" id="HGNC:4771"/>
<dbReference type="AGR" id="HGNC:4772"/>
<dbReference type="AGR" id="HGNC:4773"/>
<dbReference type="AGR" id="HGNC:4774"/>
<dbReference type="AGR" id="HGNC:4775"/>
<dbReference type="AGR" id="HGNC:4776"/>
<dbReference type="CTD" id="8350"/>
<dbReference type="CTD" id="8351"/>
<dbReference type="CTD" id="8352"/>
<dbReference type="CTD" id="8353"/>
<dbReference type="CTD" id="8354"/>
<dbReference type="CTD" id="8355"/>
<dbReference type="CTD" id="8356"/>
<dbReference type="CTD" id="8357"/>
<dbReference type="CTD" id="8358"/>
<dbReference type="CTD" id="8968"/>
<dbReference type="DisGeNET" id="8350"/>
<dbReference type="DisGeNET" id="8351"/>
<dbReference type="DisGeNET" id="8352"/>
<dbReference type="DisGeNET" id="8353"/>
<dbReference type="DisGeNET" id="8354"/>
<dbReference type="DisGeNET" id="8355"/>
<dbReference type="DisGeNET" id="8356"/>
<dbReference type="DisGeNET" id="8357"/>
<dbReference type="DisGeNET" id="8358"/>
<dbReference type="DisGeNET" id="8968"/>
<dbReference type="GeneCards" id="H3C1"/>
<dbReference type="GeneCards" id="H3C10"/>
<dbReference type="GeneCards" id="H3C11"/>
<dbReference type="GeneCards" id="H3C12"/>
<dbReference type="GeneCards" id="H3C2"/>
<dbReference type="GeneCards" id="H3C3"/>
<dbReference type="GeneCards" id="H3C4"/>
<dbReference type="GeneCards" id="H3C6"/>
<dbReference type="GeneCards" id="H3C7"/>
<dbReference type="GeneCards" id="H3C8"/>
<dbReference type="HGNC" id="HGNC:4766">
    <property type="gene designation" value="H3C1"/>
</dbReference>
<dbReference type="HGNC" id="HGNC:4775">
    <property type="gene designation" value="H3C10"/>
</dbReference>
<dbReference type="HGNC" id="HGNC:4771">
    <property type="gene designation" value="H3C11"/>
</dbReference>
<dbReference type="HGNC" id="HGNC:4774">
    <property type="gene designation" value="H3C12"/>
</dbReference>
<dbReference type="HGNC" id="HGNC:4776">
    <property type="gene designation" value="H3C2"/>
</dbReference>
<dbReference type="HGNC" id="HGNC:4768">
    <property type="gene designation" value="H3C3"/>
</dbReference>
<dbReference type="HGNC" id="HGNC:4767">
    <property type="gene designation" value="H3C4"/>
</dbReference>
<dbReference type="HGNC" id="HGNC:4769">
    <property type="gene designation" value="H3C6"/>
</dbReference>
<dbReference type="HGNC" id="HGNC:4773">
    <property type="gene designation" value="H3C7"/>
</dbReference>
<dbReference type="HGNC" id="HGNC:4772">
    <property type="gene designation" value="H3C8"/>
</dbReference>
<dbReference type="HPA" id="ENSG00000197153">
    <property type="expression patterns" value="Tissue enhanced (bone marrow, lymphoid tissue)"/>
</dbReference>
<dbReference type="HPA" id="ENSG00000197409">
    <property type="expression patterns" value="Tissue enriched (bone)"/>
</dbReference>
<dbReference type="HPA" id="ENSG00000273983">
    <property type="expression patterns" value="Tissue enhanced (bone marrow, lymphoid tissue)"/>
</dbReference>
<dbReference type="HPA" id="ENSG00000274750">
    <property type="expression patterns" value="Low tissue specificity"/>
</dbReference>
<dbReference type="HPA" id="ENSG00000275379">
    <property type="expression patterns" value="Tissue enhanced (bone)"/>
</dbReference>
<dbReference type="HPA" id="ENSG00000275714">
    <property type="expression patterns" value="Group enriched (bone marrow, testis)"/>
</dbReference>
<dbReference type="HPA" id="ENSG00000277775">
    <property type="expression patterns" value="Tissue enhanced (bone)"/>
</dbReference>
<dbReference type="HPA" id="ENSG00000278828">
    <property type="expression patterns" value="Low tissue specificity"/>
</dbReference>
<dbReference type="HPA" id="ENSG00000286522">
    <property type="expression patterns" value="Group enriched (bone marrow, lymphoid tissue)"/>
</dbReference>
<dbReference type="HPA" id="ENSG00000287080">
    <property type="expression patterns" value="Tissue enhanced (bone marrow, lymphoid tissue)"/>
</dbReference>
<dbReference type="MalaCards" id="H3C1"/>
<dbReference type="MalaCards" id="H3C2"/>
<dbReference type="MalaCards" id="H3C3"/>
<dbReference type="MIM" id="137800">
    <property type="type" value="phenotype"/>
</dbReference>
<dbReference type="MIM" id="602810">
    <property type="type" value="gene"/>
</dbReference>
<dbReference type="MIM" id="602811">
    <property type="type" value="gene"/>
</dbReference>
<dbReference type="MIM" id="602812">
    <property type="type" value="gene"/>
</dbReference>
<dbReference type="MIM" id="602813">
    <property type="type" value="gene"/>
</dbReference>
<dbReference type="MIM" id="602814">
    <property type="type" value="gene"/>
</dbReference>
<dbReference type="MIM" id="602815">
    <property type="type" value="gene"/>
</dbReference>
<dbReference type="MIM" id="602816">
    <property type="type" value="gene"/>
</dbReference>
<dbReference type="MIM" id="602817">
    <property type="type" value="gene"/>
</dbReference>
<dbReference type="MIM" id="602818">
    <property type="type" value="gene"/>
</dbReference>
<dbReference type="MIM" id="602819">
    <property type="type" value="gene"/>
</dbReference>
<dbReference type="neXtProt" id="NX_P68431"/>
<dbReference type="OpenTargets" id="ENSG00000197153"/>
<dbReference type="OpenTargets" id="ENSG00000197409"/>
<dbReference type="OpenTargets" id="ENSG00000273983"/>
<dbReference type="OpenTargets" id="ENSG00000274750"/>
<dbReference type="OpenTargets" id="ENSG00000275379"/>
<dbReference type="OpenTargets" id="ENSG00000275714"/>
<dbReference type="OpenTargets" id="ENSG00000277775"/>
<dbReference type="OpenTargets" id="ENSG00000278828"/>
<dbReference type="VEuPathDB" id="HostDB:ENSG00000197153"/>
<dbReference type="VEuPathDB" id="HostDB:ENSG00000197409"/>
<dbReference type="VEuPathDB" id="HostDB:ENSG00000273983"/>
<dbReference type="VEuPathDB" id="HostDB:ENSG00000274750"/>
<dbReference type="VEuPathDB" id="HostDB:ENSG00000275379"/>
<dbReference type="VEuPathDB" id="HostDB:ENSG00000275714"/>
<dbReference type="VEuPathDB" id="HostDB:ENSG00000277775"/>
<dbReference type="VEuPathDB" id="HostDB:ENSG00000278828"/>
<dbReference type="VEuPathDB" id="HostDB:ENSG00000286522"/>
<dbReference type="VEuPathDB" id="HostDB:ENSG00000287080"/>
<dbReference type="eggNOG" id="KOG1745">
    <property type="taxonomic scope" value="Eukaryota"/>
</dbReference>
<dbReference type="GeneTree" id="ENSGT01130000278271"/>
<dbReference type="HOGENOM" id="CLU_078295_4_0_1"/>
<dbReference type="InParanoid" id="P68431"/>
<dbReference type="OMA" id="ICIVICK"/>
<dbReference type="OrthoDB" id="9992679at2759"/>
<dbReference type="PAN-GO" id="P68431">
    <property type="GO annotations" value="0 GO annotations based on evolutionary models"/>
</dbReference>
<dbReference type="PhylomeDB" id="P68431"/>
<dbReference type="TreeFam" id="TF314241"/>
<dbReference type="PathwayCommons" id="P68431"/>
<dbReference type="Reactome" id="R-HSA-1266695">
    <property type="pathway name" value="Interleukin-7 signaling"/>
</dbReference>
<dbReference type="Reactome" id="R-HSA-1912408">
    <property type="pathway name" value="Pre-NOTCH Transcription and Translation"/>
</dbReference>
<dbReference type="Reactome" id="R-HSA-201722">
    <property type="pathway name" value="Formation of the beta-catenin:TCF transactivating complex"/>
</dbReference>
<dbReference type="Reactome" id="R-HSA-212300">
    <property type="pathway name" value="PRC2 methylates histones and DNA"/>
</dbReference>
<dbReference type="Reactome" id="R-HSA-2299718">
    <property type="pathway name" value="Condensation of Prophase Chromosomes"/>
</dbReference>
<dbReference type="Reactome" id="R-HSA-2559580">
    <property type="pathway name" value="Oxidative Stress Induced Senescence"/>
</dbReference>
<dbReference type="Reactome" id="R-HSA-2559582">
    <property type="pathway name" value="Senescence-Associated Secretory Phenotype (SASP)"/>
</dbReference>
<dbReference type="Reactome" id="R-HSA-3214815">
    <property type="pathway name" value="HDACs deacetylate histones"/>
</dbReference>
<dbReference type="Reactome" id="R-HSA-3214841">
    <property type="pathway name" value="PKMTs methylate histone lysines"/>
</dbReference>
<dbReference type="Reactome" id="R-HSA-3214842">
    <property type="pathway name" value="HDMs demethylate histones"/>
</dbReference>
<dbReference type="Reactome" id="R-HSA-3214847">
    <property type="pathway name" value="HATs acetylate histones"/>
</dbReference>
<dbReference type="Reactome" id="R-HSA-3214858">
    <property type="pathway name" value="RMTs methylate histone arginines"/>
</dbReference>
<dbReference type="Reactome" id="R-HSA-3247509">
    <property type="pathway name" value="Chromatin modifying enzymes"/>
</dbReference>
<dbReference type="Reactome" id="R-HSA-427359">
    <property type="pathway name" value="SIRT1 negatively regulates rRNA expression"/>
</dbReference>
<dbReference type="Reactome" id="R-HSA-427389">
    <property type="pathway name" value="ERCC6 (CSB) and EHMT2 (G9a) positively regulate rRNA expression"/>
</dbReference>
<dbReference type="Reactome" id="R-HSA-427413">
    <property type="pathway name" value="NoRC negatively regulates rRNA expression"/>
</dbReference>
<dbReference type="Reactome" id="R-HSA-5250924">
    <property type="pathway name" value="B-WICH complex positively regulates rRNA expression"/>
</dbReference>
<dbReference type="Reactome" id="R-HSA-5334118">
    <property type="pathway name" value="DNA methylation"/>
</dbReference>
<dbReference type="Reactome" id="R-HSA-5578749">
    <property type="pathway name" value="Transcriptional regulation by small RNAs"/>
</dbReference>
<dbReference type="Reactome" id="R-HSA-5617472">
    <property type="pathway name" value="Activation of anterior HOX genes in hindbrain development during early embryogenesis"/>
</dbReference>
<dbReference type="Reactome" id="R-HSA-5625886">
    <property type="pathway name" value="Activated PKN1 stimulates transcription of AR (androgen receptor) regulated genes KLK2 and KLK3"/>
</dbReference>
<dbReference type="Reactome" id="R-HSA-68616">
    <property type="pathway name" value="Assembly of the ORC complex at the origin of replication"/>
</dbReference>
<dbReference type="Reactome" id="R-HSA-73728">
    <property type="pathway name" value="RNA Polymerase I Promoter Opening"/>
</dbReference>
<dbReference type="Reactome" id="R-HSA-73772">
    <property type="pathway name" value="RNA Polymerase I Promoter Escape"/>
</dbReference>
<dbReference type="Reactome" id="R-HSA-8936459">
    <property type="pathway name" value="RUNX1 regulates genes involved in megakaryocyte differentiation and platelet function"/>
</dbReference>
<dbReference type="Reactome" id="R-HSA-8939236">
    <property type="pathway name" value="RUNX1 regulates transcription of genes involved in differentiation of HSCs"/>
</dbReference>
<dbReference type="Reactome" id="R-HSA-9018519">
    <property type="pathway name" value="Estrogen-dependent gene expression"/>
</dbReference>
<dbReference type="Reactome" id="R-HSA-912446">
    <property type="pathway name" value="Meiotic recombination"/>
</dbReference>
<dbReference type="Reactome" id="R-HSA-9609690">
    <property type="pathway name" value="HCMV Early Events"/>
</dbReference>
<dbReference type="Reactome" id="R-HSA-9610379">
    <property type="pathway name" value="HCMV Late Events"/>
</dbReference>
<dbReference type="Reactome" id="R-HSA-9616222">
    <property type="pathway name" value="Transcriptional regulation of granulopoiesis"/>
</dbReference>
<dbReference type="Reactome" id="R-HSA-9710421">
    <property type="pathway name" value="Defective pyroptosis"/>
</dbReference>
<dbReference type="Reactome" id="R-HSA-977225">
    <property type="pathway name" value="Amyloid fiber formation"/>
</dbReference>
<dbReference type="Reactome" id="R-HSA-9821002">
    <property type="pathway name" value="Chromatin modifications during the maternal to zygotic transition (MZT)"/>
</dbReference>
<dbReference type="Reactome" id="R-HSA-983231">
    <property type="pathway name" value="Factors involved in megakaryocyte development and platelet production"/>
</dbReference>
<dbReference type="Reactome" id="R-HSA-9841922">
    <property type="pathway name" value="MLL4 and MLL3 complexes regulate expression of PPARG target genes in adipogenesis and hepatic steatosis"/>
</dbReference>
<dbReference type="Reactome" id="R-HSA-9843940">
    <property type="pathway name" value="Regulation of endogenous retroelements by KRAB-ZFP proteins"/>
</dbReference>
<dbReference type="Reactome" id="R-HSA-9843970">
    <property type="pathway name" value="Regulation of endogenous retroelements by the Human Silencing Hub (HUSH) complex"/>
</dbReference>
<dbReference type="Reactome" id="R-HSA-9845323">
    <property type="pathway name" value="Regulation of endogenous retroelements by Piwi-interacting RNAs (piRNAs)"/>
</dbReference>
<dbReference type="SignaLink" id="P68431"/>
<dbReference type="SIGNOR" id="P68431"/>
<dbReference type="BioGRID-ORCS" id="8350">
    <property type="hits" value="68 hits in 1139 CRISPR screens"/>
</dbReference>
<dbReference type="BioGRID-ORCS" id="8351">
    <property type="hits" value="20 hits in 1065 CRISPR screens"/>
</dbReference>
<dbReference type="BioGRID-ORCS" id="8352">
    <property type="hits" value="35 hits in 1136 CRISPR screens"/>
</dbReference>
<dbReference type="BioGRID-ORCS" id="8353">
    <property type="hits" value="14 hits in 1092 CRISPR screens"/>
</dbReference>
<dbReference type="BioGRID-ORCS" id="8354">
    <property type="hits" value="75 hits in 1128 CRISPR screens"/>
</dbReference>
<dbReference type="BioGRID-ORCS" id="8355">
    <property type="hits" value="54 hits in 1101 CRISPR screens"/>
</dbReference>
<dbReference type="BioGRID-ORCS" id="8356">
    <property type="hits" value="23 hits in 1133 CRISPR screens"/>
</dbReference>
<dbReference type="BioGRID-ORCS" id="8357">
    <property type="hits" value="23 hits in 1138 CRISPR screens"/>
</dbReference>
<dbReference type="BioGRID-ORCS" id="8358">
    <property type="hits" value="41 hits in 1134 CRISPR screens"/>
</dbReference>
<dbReference type="BioGRID-ORCS" id="8968">
    <property type="hits" value="18 hits in 1124 CRISPR screens"/>
</dbReference>
<dbReference type="CD-CODE" id="4F7E7B13">
    <property type="entry name" value="Synthetic Condensate 000323"/>
</dbReference>
<dbReference type="CD-CODE" id="7230F6EA">
    <property type="entry name" value="Synthetic Condensate 000328"/>
</dbReference>
<dbReference type="CD-CODE" id="76F9ED9B">
    <property type="entry name" value="Synthetic Condensate 000325"/>
</dbReference>
<dbReference type="CD-CODE" id="8BB8BA7F">
    <property type="entry name" value="Synthetic Condensate 000324"/>
</dbReference>
<dbReference type="CD-CODE" id="91857CE7">
    <property type="entry name" value="Nucleolus"/>
</dbReference>
<dbReference type="CD-CODE" id="AF287C13">
    <property type="entry name" value="Synthetic Condensate 000326"/>
</dbReference>
<dbReference type="CD-CODE" id="F5834E66">
    <property type="entry name" value="Synthetic Condensate 000310"/>
</dbReference>
<dbReference type="ChiTaRS" id="HIST1H3B">
    <property type="organism name" value="human"/>
</dbReference>
<dbReference type="ChiTaRS" id="HIST1H3F">
    <property type="organism name" value="human"/>
</dbReference>
<dbReference type="ChiTaRS" id="HIST1H3H">
    <property type="organism name" value="human"/>
</dbReference>
<dbReference type="ChiTaRS" id="HIST1H3J">
    <property type="organism name" value="human"/>
</dbReference>
<dbReference type="EvolutionaryTrace" id="P68431"/>
<dbReference type="GeneWiki" id="HIST1H3A"/>
<dbReference type="GeneWiki" id="HIST1H3B"/>
<dbReference type="GeneWiki" id="HIST1H3C"/>
<dbReference type="GeneWiki" id="HIST1H3D"/>
<dbReference type="GeneWiki" id="HIST1H3E"/>
<dbReference type="GeneWiki" id="HIST1H3F"/>
<dbReference type="GeneWiki" id="HIST1H3G"/>
<dbReference type="GeneWiki" id="HIST1H3H"/>
<dbReference type="GeneWiki" id="HIST1H3I"/>
<dbReference type="GeneWiki" id="HIST1H3J"/>
<dbReference type="Pharos" id="P68431">
    <property type="development level" value="Tbio"/>
</dbReference>
<dbReference type="PRO" id="PR:P68431"/>
<dbReference type="Proteomes" id="UP000005640">
    <property type="component" value="Chromosome 6"/>
</dbReference>
<dbReference type="RNAct" id="P68431">
    <property type="molecule type" value="protein"/>
</dbReference>
<dbReference type="Bgee" id="ENSG00000197153">
    <property type="expression patterns" value="Expressed in bone marrow cell and 75 other cell types or tissues"/>
</dbReference>
<dbReference type="GO" id="GO:0070062">
    <property type="term" value="C:extracellular exosome"/>
    <property type="evidence" value="ECO:0007005"/>
    <property type="project" value="UniProtKB"/>
</dbReference>
<dbReference type="GO" id="GO:0005576">
    <property type="term" value="C:extracellular region"/>
    <property type="evidence" value="ECO:0000304"/>
    <property type="project" value="Reactome"/>
</dbReference>
<dbReference type="GO" id="GO:0016020">
    <property type="term" value="C:membrane"/>
    <property type="evidence" value="ECO:0007005"/>
    <property type="project" value="UniProtKB"/>
</dbReference>
<dbReference type="GO" id="GO:0005654">
    <property type="term" value="C:nucleoplasm"/>
    <property type="evidence" value="ECO:0000314"/>
    <property type="project" value="HPA"/>
</dbReference>
<dbReference type="GO" id="GO:0000786">
    <property type="term" value="C:nucleosome"/>
    <property type="evidence" value="ECO:0000314"/>
    <property type="project" value="UniProtKB"/>
</dbReference>
<dbReference type="GO" id="GO:0005634">
    <property type="term" value="C:nucleus"/>
    <property type="evidence" value="ECO:0000314"/>
    <property type="project" value="UniProtKB"/>
</dbReference>
<dbReference type="GO" id="GO:0032991">
    <property type="term" value="C:protein-containing complex"/>
    <property type="evidence" value="ECO:0000314"/>
    <property type="project" value="UniProtKB"/>
</dbReference>
<dbReference type="GO" id="GO:0045296">
    <property type="term" value="F:cadherin binding"/>
    <property type="evidence" value="ECO:0007005"/>
    <property type="project" value="BHF-UCL"/>
</dbReference>
<dbReference type="GO" id="GO:0003677">
    <property type="term" value="F:DNA binding"/>
    <property type="evidence" value="ECO:0007669"/>
    <property type="project" value="UniProtKB-KW"/>
</dbReference>
<dbReference type="GO" id="GO:0046982">
    <property type="term" value="F:protein heterodimerization activity"/>
    <property type="evidence" value="ECO:0007669"/>
    <property type="project" value="InterPro"/>
</dbReference>
<dbReference type="GO" id="GO:0030527">
    <property type="term" value="F:structural constituent of chromatin"/>
    <property type="evidence" value="ECO:0007669"/>
    <property type="project" value="InterPro"/>
</dbReference>
<dbReference type="GO" id="GO:0006325">
    <property type="term" value="P:chromatin organization"/>
    <property type="evidence" value="ECO:0000303"/>
    <property type="project" value="ComplexPortal"/>
</dbReference>
<dbReference type="GO" id="GO:0040029">
    <property type="term" value="P:epigenetic regulation of gene expression"/>
    <property type="evidence" value="ECO:0000314"/>
    <property type="project" value="BHF-UCL"/>
</dbReference>
<dbReference type="GO" id="GO:0010467">
    <property type="term" value="P:gene expression"/>
    <property type="evidence" value="ECO:0000314"/>
    <property type="project" value="UniProt"/>
</dbReference>
<dbReference type="GO" id="GO:0006334">
    <property type="term" value="P:nucleosome assembly"/>
    <property type="evidence" value="ECO:0000314"/>
    <property type="project" value="UniProtKB"/>
</dbReference>
<dbReference type="GO" id="GO:0032200">
    <property type="term" value="P:telomere organization"/>
    <property type="evidence" value="ECO:0000304"/>
    <property type="project" value="BHF-UCL"/>
</dbReference>
<dbReference type="CDD" id="cd22911">
    <property type="entry name" value="HFD_H3"/>
    <property type="match status" value="1"/>
</dbReference>
<dbReference type="FunFam" id="1.10.20.10:FF:000078">
    <property type="entry name" value="Histone H3"/>
    <property type="match status" value="1"/>
</dbReference>
<dbReference type="FunFam" id="1.10.20.10:FF:000044">
    <property type="entry name" value="Histone H3.3"/>
    <property type="match status" value="1"/>
</dbReference>
<dbReference type="Gene3D" id="1.10.20.10">
    <property type="entry name" value="Histone, subunit A"/>
    <property type="match status" value="1"/>
</dbReference>
<dbReference type="IDEAL" id="IID00062"/>
<dbReference type="InterPro" id="IPR009072">
    <property type="entry name" value="Histone-fold"/>
</dbReference>
<dbReference type="InterPro" id="IPR007125">
    <property type="entry name" value="Histone_H2A/H2B/H3"/>
</dbReference>
<dbReference type="InterPro" id="IPR000164">
    <property type="entry name" value="Histone_H3/CENP-A"/>
</dbReference>
<dbReference type="PANTHER" id="PTHR11426">
    <property type="entry name" value="HISTONE H3"/>
    <property type="match status" value="1"/>
</dbReference>
<dbReference type="Pfam" id="PF00125">
    <property type="entry name" value="Histone"/>
    <property type="match status" value="1"/>
</dbReference>
<dbReference type="PRINTS" id="PR00622">
    <property type="entry name" value="HISTONEH3"/>
</dbReference>
<dbReference type="SMART" id="SM00428">
    <property type="entry name" value="H3"/>
    <property type="match status" value="1"/>
</dbReference>
<dbReference type="SUPFAM" id="SSF47113">
    <property type="entry name" value="Histone-fold"/>
    <property type="match status" value="1"/>
</dbReference>
<dbReference type="PROSITE" id="PS00322">
    <property type="entry name" value="HISTONE_H3_1"/>
    <property type="match status" value="1"/>
</dbReference>
<dbReference type="PROSITE" id="PS00959">
    <property type="entry name" value="HISTONE_H3_2"/>
    <property type="match status" value="1"/>
</dbReference>
<reference key="1">
    <citation type="journal article" date="1983" name="Nucleic Acids Res.">
        <title>The primary structure and expression of four cloned human histone genes.</title>
        <authorList>
            <person name="Zhong R."/>
            <person name="Roeder R.G."/>
            <person name="Heintz N."/>
        </authorList>
    </citation>
    <scope>NUCLEOTIDE SEQUENCE [GENOMIC DNA] (H3C2)</scope>
</reference>
<reference key="2">
    <citation type="journal article" date="1986" name="Biochem. Cell Biol.">
        <title>Enhancer-facilitated expression of prokaryotic and eukaryotic genes using human histone gene 5' regulatory sequences.</title>
        <authorList>
            <person name="Marashi F."/>
            <person name="Helms S."/>
            <person name="Shiels A."/>
            <person name="Silverstein S."/>
            <person name="Greenspan D.S."/>
            <person name="Stein G."/>
            <person name="Stein J."/>
        </authorList>
    </citation>
    <scope>NUCLEOTIDE SEQUENCE [GENOMIC DNA]</scope>
</reference>
<reference key="3">
    <citation type="journal article" date="1991" name="Genomics">
        <title>Isolation and characterization of two human H1 histone genes within clusters of core histone genes.</title>
        <authorList>
            <person name="Albig W."/>
            <person name="Kardalinou E."/>
            <person name="Drabent B."/>
            <person name="Zimmer A."/>
            <person name="Doenecke D."/>
        </authorList>
    </citation>
    <scope>NUCLEOTIDE SEQUENCE [GENOMIC DNA] (H3C6)</scope>
</reference>
<reference key="4">
    <citation type="journal article" date="1993" name="J. Cell. Biochem.">
        <title>Association of a human H1 histone gene with an H2A pseudogene and genes encoding H2B.1 and H3.1 histones.</title>
        <authorList>
            <person name="Kardalinou E."/>
            <person name="Eick S."/>
            <person name="Albig W."/>
            <person name="Doenecke D."/>
        </authorList>
    </citation>
    <scope>NUCLEOTIDE SEQUENCE [GENOMIC DNA]</scope>
</reference>
<reference key="5">
    <citation type="submission" date="1994-10" db="EMBL/GenBank/DDBJ databases">
        <title>Expression of human histone h1.1 and the nearby core histones.</title>
        <authorList>
            <person name="Runge D."/>
            <person name="Eick S."/>
            <person name="Doenecke D."/>
        </authorList>
    </citation>
    <scope>NUCLEOTIDE SEQUENCE [GENOMIC DNA]</scope>
    <source>
        <tissue>Blood</tissue>
    </source>
</reference>
<reference key="6">
    <citation type="journal article" date="1997" name="Gene">
        <title>Characterization of the H1.5 gene completes the set of human H1 subtype genes.</title>
        <authorList>
            <person name="Albig W."/>
            <person name="Meergans T."/>
            <person name="Doenecke D."/>
        </authorList>
    </citation>
    <scope>NUCLEOTIDE SEQUENCE [GENOMIC DNA] (H3C11)</scope>
</reference>
<reference key="7">
    <citation type="journal article" date="1997" name="Genomics">
        <title>Human histone gene organization: nonregular arrangement within a large cluster.</title>
        <authorList>
            <person name="Albig W."/>
            <person name="Kioschis P."/>
            <person name="Poustka A."/>
            <person name="Meergans K."/>
            <person name="Doenecke D."/>
        </authorList>
    </citation>
    <scope>NUCLEOTIDE SEQUENCE [GENOMIC DNA] (H3C4; H3C7 AND H3C8)</scope>
</reference>
<reference key="8">
    <citation type="journal article" date="1997" name="Hum. Genet.">
        <title>The human histone gene cluster at the D6S105 locus.</title>
        <authorList>
            <person name="Albig W."/>
            <person name="Doenecke D."/>
        </authorList>
    </citation>
    <scope>NUCLEOTIDE SEQUENCE [GENOMIC DNA] (H3C10 AND H3C12)</scope>
</reference>
<reference key="9">
    <citation type="journal article" date="2002" name="Genomics">
        <title>The human and mouse replication-dependent histone genes.</title>
        <authorList>
            <person name="Marzluff W.F."/>
            <person name="Gongidi P."/>
            <person name="Woods K.R."/>
            <person name="Jin J."/>
            <person name="Maltais L.J."/>
        </authorList>
    </citation>
    <scope>NUCLEOTIDE SEQUENCE [GENOMIC DNA] (H3C1; H3C2; H3C3; H3C4; H3C6; H3C7; H3C8; H3C10; H3C11; H3C12)</scope>
</reference>
<reference key="10">
    <citation type="journal article" date="2004" name="Nat. Genet.">
        <title>Complete sequencing and characterization of 21,243 full-length human cDNAs.</title>
        <authorList>
            <person name="Ota T."/>
            <person name="Suzuki Y."/>
            <person name="Nishikawa T."/>
            <person name="Otsuki T."/>
            <person name="Sugiyama T."/>
            <person name="Irie R."/>
            <person name="Wakamatsu A."/>
            <person name="Hayashi K."/>
            <person name="Sato H."/>
            <person name="Nagai K."/>
            <person name="Kimura K."/>
            <person name="Makita H."/>
            <person name="Sekine M."/>
            <person name="Obayashi M."/>
            <person name="Nishi T."/>
            <person name="Shibahara T."/>
            <person name="Tanaka T."/>
            <person name="Ishii S."/>
            <person name="Yamamoto J."/>
            <person name="Saito K."/>
            <person name="Kawai Y."/>
            <person name="Isono Y."/>
            <person name="Nakamura Y."/>
            <person name="Nagahari K."/>
            <person name="Murakami K."/>
            <person name="Yasuda T."/>
            <person name="Iwayanagi T."/>
            <person name="Wagatsuma M."/>
            <person name="Shiratori A."/>
            <person name="Sudo H."/>
            <person name="Hosoiri T."/>
            <person name="Kaku Y."/>
            <person name="Kodaira H."/>
            <person name="Kondo H."/>
            <person name="Sugawara M."/>
            <person name="Takahashi M."/>
            <person name="Kanda K."/>
            <person name="Yokoi T."/>
            <person name="Furuya T."/>
            <person name="Kikkawa E."/>
            <person name="Omura Y."/>
            <person name="Abe K."/>
            <person name="Kamihara K."/>
            <person name="Katsuta N."/>
            <person name="Sato K."/>
            <person name="Tanikawa M."/>
            <person name="Yamazaki M."/>
            <person name="Ninomiya K."/>
            <person name="Ishibashi T."/>
            <person name="Yamashita H."/>
            <person name="Murakawa K."/>
            <person name="Fujimori K."/>
            <person name="Tanai H."/>
            <person name="Kimata M."/>
            <person name="Watanabe M."/>
            <person name="Hiraoka S."/>
            <person name="Chiba Y."/>
            <person name="Ishida S."/>
            <person name="Ono Y."/>
            <person name="Takiguchi S."/>
            <person name="Watanabe S."/>
            <person name="Yosida M."/>
            <person name="Hotuta T."/>
            <person name="Kusano J."/>
            <person name="Kanehori K."/>
            <person name="Takahashi-Fujii A."/>
            <person name="Hara H."/>
            <person name="Tanase T.-O."/>
            <person name="Nomura Y."/>
            <person name="Togiya S."/>
            <person name="Komai F."/>
            <person name="Hara R."/>
            <person name="Takeuchi K."/>
            <person name="Arita M."/>
            <person name="Imose N."/>
            <person name="Musashino K."/>
            <person name="Yuuki H."/>
            <person name="Oshima A."/>
            <person name="Sasaki N."/>
            <person name="Aotsuka S."/>
            <person name="Yoshikawa Y."/>
            <person name="Matsunawa H."/>
            <person name="Ichihara T."/>
            <person name="Shiohata N."/>
            <person name="Sano S."/>
            <person name="Moriya S."/>
            <person name="Momiyama H."/>
            <person name="Satoh N."/>
            <person name="Takami S."/>
            <person name="Terashima Y."/>
            <person name="Suzuki O."/>
            <person name="Nakagawa S."/>
            <person name="Senoh A."/>
            <person name="Mizoguchi H."/>
            <person name="Goto Y."/>
            <person name="Shimizu F."/>
            <person name="Wakebe H."/>
            <person name="Hishigaki H."/>
            <person name="Watanabe T."/>
            <person name="Sugiyama A."/>
            <person name="Takemoto M."/>
            <person name="Kawakami B."/>
            <person name="Yamazaki M."/>
            <person name="Watanabe K."/>
            <person name="Kumagai A."/>
            <person name="Itakura S."/>
            <person name="Fukuzumi Y."/>
            <person name="Fujimori Y."/>
            <person name="Komiyama M."/>
            <person name="Tashiro H."/>
            <person name="Tanigami A."/>
            <person name="Fujiwara T."/>
            <person name="Ono T."/>
            <person name="Yamada K."/>
            <person name="Fujii Y."/>
            <person name="Ozaki K."/>
            <person name="Hirao M."/>
            <person name="Ohmori Y."/>
            <person name="Kawabata A."/>
            <person name="Hikiji T."/>
            <person name="Kobatake N."/>
            <person name="Inagaki H."/>
            <person name="Ikema Y."/>
            <person name="Okamoto S."/>
            <person name="Okitani R."/>
            <person name="Kawakami T."/>
            <person name="Noguchi S."/>
            <person name="Itoh T."/>
            <person name="Shigeta K."/>
            <person name="Senba T."/>
            <person name="Matsumura K."/>
            <person name="Nakajima Y."/>
            <person name="Mizuno T."/>
            <person name="Morinaga M."/>
            <person name="Sasaki M."/>
            <person name="Togashi T."/>
            <person name="Oyama M."/>
            <person name="Hata H."/>
            <person name="Watanabe M."/>
            <person name="Komatsu T."/>
            <person name="Mizushima-Sugano J."/>
            <person name="Satoh T."/>
            <person name="Shirai Y."/>
            <person name="Takahashi Y."/>
            <person name="Nakagawa K."/>
            <person name="Okumura K."/>
            <person name="Nagase T."/>
            <person name="Nomura N."/>
            <person name="Kikuchi H."/>
            <person name="Masuho Y."/>
            <person name="Yamashita R."/>
            <person name="Nakai K."/>
            <person name="Yada T."/>
            <person name="Nakamura Y."/>
            <person name="Ohara O."/>
            <person name="Isogai T."/>
            <person name="Sugano S."/>
        </authorList>
    </citation>
    <scope>NUCLEOTIDE SEQUENCE [LARGE SCALE MRNA]</scope>
    <source>
        <tissue>Caudate nucleus</tissue>
        <tissue>Stomach</tissue>
        <tissue>Thymus</tissue>
    </source>
</reference>
<reference key="11">
    <citation type="submission" date="2004-06" db="EMBL/GenBank/DDBJ databases">
        <title>Cloning of human full open reading frames in Gateway(TM) system entry vector (pDONR201).</title>
        <authorList>
            <person name="Halleck A."/>
            <person name="Ebert L."/>
            <person name="Mkoundinya M."/>
            <person name="Schick M."/>
            <person name="Eisenstein S."/>
            <person name="Neubert P."/>
            <person name="Kstrang K."/>
            <person name="Schatten R."/>
            <person name="Shen B."/>
            <person name="Henze S."/>
            <person name="Mar W."/>
            <person name="Korn B."/>
            <person name="Zuo D."/>
            <person name="Hu Y."/>
            <person name="LaBaer J."/>
        </authorList>
    </citation>
    <scope>NUCLEOTIDE SEQUENCE [LARGE SCALE MRNA]</scope>
</reference>
<reference key="12">
    <citation type="journal article" date="2003" name="Nature">
        <title>The DNA sequence and analysis of human chromosome 6.</title>
        <authorList>
            <person name="Mungall A.J."/>
            <person name="Palmer S.A."/>
            <person name="Sims S.K."/>
            <person name="Edwards C.A."/>
            <person name="Ashurst J.L."/>
            <person name="Wilming L."/>
            <person name="Jones M.C."/>
            <person name="Horton R."/>
            <person name="Hunt S.E."/>
            <person name="Scott C.E."/>
            <person name="Gilbert J.G.R."/>
            <person name="Clamp M.E."/>
            <person name="Bethel G."/>
            <person name="Milne S."/>
            <person name="Ainscough R."/>
            <person name="Almeida J.P."/>
            <person name="Ambrose K.D."/>
            <person name="Andrews T.D."/>
            <person name="Ashwell R.I.S."/>
            <person name="Babbage A.K."/>
            <person name="Bagguley C.L."/>
            <person name="Bailey J."/>
            <person name="Banerjee R."/>
            <person name="Barker D.J."/>
            <person name="Barlow K.F."/>
            <person name="Bates K."/>
            <person name="Beare D.M."/>
            <person name="Beasley H."/>
            <person name="Beasley O."/>
            <person name="Bird C.P."/>
            <person name="Blakey S.E."/>
            <person name="Bray-Allen S."/>
            <person name="Brook J."/>
            <person name="Brown A.J."/>
            <person name="Brown J.Y."/>
            <person name="Burford D.C."/>
            <person name="Burrill W."/>
            <person name="Burton J."/>
            <person name="Carder C."/>
            <person name="Carter N.P."/>
            <person name="Chapman J.C."/>
            <person name="Clark S.Y."/>
            <person name="Clark G."/>
            <person name="Clee C.M."/>
            <person name="Clegg S."/>
            <person name="Cobley V."/>
            <person name="Collier R.E."/>
            <person name="Collins J.E."/>
            <person name="Colman L.K."/>
            <person name="Corby N.R."/>
            <person name="Coville G.J."/>
            <person name="Culley K.M."/>
            <person name="Dhami P."/>
            <person name="Davies J."/>
            <person name="Dunn M."/>
            <person name="Earthrowl M.E."/>
            <person name="Ellington A.E."/>
            <person name="Evans K.A."/>
            <person name="Faulkner L."/>
            <person name="Francis M.D."/>
            <person name="Frankish A."/>
            <person name="Frankland J."/>
            <person name="French L."/>
            <person name="Garner P."/>
            <person name="Garnett J."/>
            <person name="Ghori M.J."/>
            <person name="Gilby L.M."/>
            <person name="Gillson C.J."/>
            <person name="Glithero R.J."/>
            <person name="Grafham D.V."/>
            <person name="Grant M."/>
            <person name="Gribble S."/>
            <person name="Griffiths C."/>
            <person name="Griffiths M.N.D."/>
            <person name="Hall R."/>
            <person name="Halls K.S."/>
            <person name="Hammond S."/>
            <person name="Harley J.L."/>
            <person name="Hart E.A."/>
            <person name="Heath P.D."/>
            <person name="Heathcott R."/>
            <person name="Holmes S.J."/>
            <person name="Howden P.J."/>
            <person name="Howe K.L."/>
            <person name="Howell G.R."/>
            <person name="Huckle E."/>
            <person name="Humphray S.J."/>
            <person name="Humphries M.D."/>
            <person name="Hunt A.R."/>
            <person name="Johnson C.M."/>
            <person name="Joy A.A."/>
            <person name="Kay M."/>
            <person name="Keenan S.J."/>
            <person name="Kimberley A.M."/>
            <person name="King A."/>
            <person name="Laird G.K."/>
            <person name="Langford C."/>
            <person name="Lawlor S."/>
            <person name="Leongamornlert D.A."/>
            <person name="Leversha M."/>
            <person name="Lloyd C.R."/>
            <person name="Lloyd D.M."/>
            <person name="Loveland J.E."/>
            <person name="Lovell J."/>
            <person name="Martin S."/>
            <person name="Mashreghi-Mohammadi M."/>
            <person name="Maslen G.L."/>
            <person name="Matthews L."/>
            <person name="McCann O.T."/>
            <person name="McLaren S.J."/>
            <person name="McLay K."/>
            <person name="McMurray A."/>
            <person name="Moore M.J.F."/>
            <person name="Mullikin J.C."/>
            <person name="Niblett D."/>
            <person name="Nickerson T."/>
            <person name="Novik K.L."/>
            <person name="Oliver K."/>
            <person name="Overton-Larty E.K."/>
            <person name="Parker A."/>
            <person name="Patel R."/>
            <person name="Pearce A.V."/>
            <person name="Peck A.I."/>
            <person name="Phillimore B.J.C.T."/>
            <person name="Phillips S."/>
            <person name="Plumb R.W."/>
            <person name="Porter K.M."/>
            <person name="Ramsey Y."/>
            <person name="Ranby S.A."/>
            <person name="Rice C.M."/>
            <person name="Ross M.T."/>
            <person name="Searle S.M."/>
            <person name="Sehra H.K."/>
            <person name="Sheridan E."/>
            <person name="Skuce C.D."/>
            <person name="Smith S."/>
            <person name="Smith M."/>
            <person name="Spraggon L."/>
            <person name="Squares S.L."/>
            <person name="Steward C.A."/>
            <person name="Sycamore N."/>
            <person name="Tamlyn-Hall G."/>
            <person name="Tester J."/>
            <person name="Theaker A.J."/>
            <person name="Thomas D.W."/>
            <person name="Thorpe A."/>
            <person name="Tracey A."/>
            <person name="Tromans A."/>
            <person name="Tubby B."/>
            <person name="Wall M."/>
            <person name="Wallis J.M."/>
            <person name="West A.P."/>
            <person name="White S.S."/>
            <person name="Whitehead S.L."/>
            <person name="Whittaker H."/>
            <person name="Wild A."/>
            <person name="Willey D.J."/>
            <person name="Wilmer T.E."/>
            <person name="Wood J.M."/>
            <person name="Wray P.W."/>
            <person name="Wyatt J.C."/>
            <person name="Young L."/>
            <person name="Younger R.M."/>
            <person name="Bentley D.R."/>
            <person name="Coulson A."/>
            <person name="Durbin R.M."/>
            <person name="Hubbard T."/>
            <person name="Sulston J.E."/>
            <person name="Dunham I."/>
            <person name="Rogers J."/>
            <person name="Beck S."/>
        </authorList>
    </citation>
    <scope>NUCLEOTIDE SEQUENCE [LARGE SCALE GENOMIC DNA]</scope>
</reference>
<reference key="13">
    <citation type="journal article" date="2004" name="Genome Res.">
        <title>The status, quality, and expansion of the NIH full-length cDNA project: the Mammalian Gene Collection (MGC).</title>
        <authorList>
            <consortium name="The MGC Project Team"/>
        </authorList>
    </citation>
    <scope>NUCLEOTIDE SEQUENCE [LARGE SCALE MRNA]</scope>
    <source>
        <tissue>Uterus</tissue>
    </source>
</reference>
<reference key="14">
    <citation type="journal article" date="1981" name="J. Biochem.">
        <title>Human spleen histone H3. Isolation and amino acid sequence.</title>
        <authorList>
            <person name="Ohe Y."/>
            <person name="Iwai K."/>
        </authorList>
    </citation>
    <scope>PARTIAL PROTEIN SEQUENCE</scope>
    <source>
        <tissue>Spleen</tissue>
    </source>
</reference>
<reference key="15">
    <citation type="journal article" date="2005" name="Biochemistry">
        <title>Modifications of human histone H3 variants during mitosis.</title>
        <authorList>
            <person name="Garcia B.A."/>
            <person name="Barber C.M."/>
            <person name="Hake S.B."/>
            <person name="Ptak C."/>
            <person name="Turner F.B."/>
            <person name="Busby S.A."/>
            <person name="Shabanowitz J."/>
            <person name="Moran R.G."/>
            <person name="Allis C.D."/>
            <person name="Hunt D.F."/>
        </authorList>
    </citation>
    <scope>PROTEIN SEQUENCE OF 2-20</scope>
    <scope>CLEAVAGE OF INITIATOR METHIONINE</scope>
    <scope>METHYLATION AT LYS-10; LYS-28 AND LYS-37</scope>
    <scope>PHOSPHORYLATION AT THR-4; SER-11 AND SER-29</scope>
    <scope>ACETYLATION AT LYS-10 AND LYS-15</scope>
    <scope>IDENTIFICATION BY MASS SPECTROMETRY</scope>
</reference>
<reference key="16">
    <citation type="journal article" date="1999" name="J. Biol. Chem.">
        <title>Identification of a novel phosphorylation site on histone H3 coupled with mitotic chromosome condensation.</title>
        <authorList>
            <person name="Goto H."/>
            <person name="Tomono Y."/>
            <person name="Ajiro K."/>
            <person name="Kosako H."/>
            <person name="Fujita M."/>
            <person name="Sakurai M."/>
            <person name="Okawa K."/>
            <person name="Iwamatsu A."/>
            <person name="Okigaki T."/>
            <person name="Takahashi T."/>
            <person name="Inagaki M."/>
        </authorList>
    </citation>
    <scope>PROTEIN SEQUENCE OF 58-64; 117-120 AND 124-135</scope>
    <scope>PHOSPHORYLATION AT SER-11 AND SER-29</scope>
</reference>
<reference key="17">
    <citation type="journal article" date="2001" name="Nature">
        <title>Methylation of histone H3 lysine 9 creates a binding site for HP1 proteins.</title>
        <authorList>
            <person name="Lachner M."/>
            <person name="O'Carroll D."/>
            <person name="Rea S."/>
            <person name="Mechtler K."/>
            <person name="Jenuwein T."/>
        </authorList>
    </citation>
    <scope>METHYLATION AT LYS-10</scope>
</reference>
<reference key="18">
    <citation type="journal article" date="2002" name="Genes Cells">
        <title>Aurora-B phosphorylates Histone H3 at serine28 with regard to the mitotic chromosome condensation.</title>
        <authorList>
            <person name="Goto H."/>
            <person name="Yasui Y."/>
            <person name="Nigg E.A."/>
            <person name="Inagaki M."/>
        </authorList>
    </citation>
    <scope>PHOSPHORYLATION AT SER-11 AND SER-29</scope>
</reference>
<reference key="19">
    <citation type="journal article" date="2003" name="Nucleic Acids Res.">
        <title>Novel mitosis-specific phosphorylation of histone H3 at Thr11 mediated by Dlk/ZIP kinase.</title>
        <authorList>
            <person name="Preuss U."/>
            <person name="Landsberg G."/>
            <person name="Scheidtmann K.H."/>
        </authorList>
    </citation>
    <scope>PHOSPHORYLATION AT SER-11 AND THR-12</scope>
</reference>
<reference key="20">
    <citation type="journal article" date="2004" name="J. Biol. Chem.">
        <title>Ligand-dependent activation of the farnesoid X-receptor directs arginine methylation of histone H3 by CARM1.</title>
        <authorList>
            <person name="Ananthanarayanan M."/>
            <person name="Li S."/>
            <person name="Balasubramaniyan N."/>
            <person name="Suchy F.J."/>
            <person name="Walsh M.J."/>
        </authorList>
    </citation>
    <scope>METHYLATION AT ARG-18</scope>
</reference>
<reference key="21">
    <citation type="journal article" date="2004" name="Nature">
        <title>Methylated lysine 79 of histone H3 targets 53BP1 to DNA double-strand breaks.</title>
        <authorList>
            <person name="Huyen Y."/>
            <person name="Zgheib O."/>
            <person name="Ditullio R.A. Jr."/>
            <person name="Gorgoulis V.G."/>
            <person name="Zacharatos P."/>
            <person name="Petty T.J."/>
            <person name="Sheston E.A."/>
            <person name="Mellert H.S."/>
            <person name="Stavridi E.S."/>
            <person name="Halazonetis T.D."/>
        </authorList>
    </citation>
    <scope>METHYLATION AT LYS-80</scope>
</reference>
<reference key="22">
    <citation type="journal article" date="2004" name="Science">
        <title>Human PAD4 regulates histone arginine methylation levels via demethylimination.</title>
        <authorList>
            <person name="Wang Y."/>
            <person name="Wysocka J."/>
            <person name="Sayegh J."/>
            <person name="Lee Y.-H."/>
            <person name="Perlin J.R."/>
            <person name="Leonelli L."/>
            <person name="Sonbuchner L.S."/>
            <person name="McDonald C.H."/>
            <person name="Cook R.G."/>
            <person name="Dou Y."/>
            <person name="Roeder R.G."/>
            <person name="Clarke S."/>
            <person name="Stallcup M.R."/>
            <person name="Allis C.D."/>
            <person name="Coonrod S.A."/>
        </authorList>
    </citation>
    <scope>CITRULLINATION AT ARG-9 AND ARG-18</scope>
    <scope>METHYLATION AT ARG-18</scope>
</reference>
<reference key="23">
    <citation type="journal article" date="2005" name="Genes Dev.">
        <title>The kinase haspin is required for mitotic histone H3 Thr 3 phosphorylation and normal metaphase chromosome alignment.</title>
        <authorList>
            <person name="Dai J."/>
            <person name="Sultan S."/>
            <person name="Taylor S.S."/>
            <person name="Higgins J.M.G."/>
        </authorList>
    </citation>
    <scope>PHOSPHORYLATION AT THR-4; SER-11 AND SER-29</scope>
</reference>
<reference key="24">
    <citation type="journal article" date="2005" name="J. Biol. Chem.">
        <title>Phosphorylation of Ser28 in histone H3 mediated by mixed lineage kinase-like mitogen-activated protein triple kinase alpha.</title>
        <authorList>
            <person name="Choi H.S."/>
            <person name="Choi B.Y."/>
            <person name="Cho Y.-Y."/>
            <person name="Zhu F."/>
            <person name="Bode A.M."/>
            <person name="Dong Z."/>
        </authorList>
    </citation>
    <scope>PHOSPHORYLATION AT SER-29</scope>
</reference>
<reference key="25">
    <citation type="journal article" date="2005" name="Proc. Natl. Acad. Sci. U.S.A.">
        <title>Protein identification using sequential ion/ion reactions and tandem mass spectrometry.</title>
        <authorList>
            <person name="Coon J.J."/>
            <person name="Ueberheide B."/>
            <person name="Syka J.E.P."/>
            <person name="Dryhurst D.D."/>
            <person name="Ausio J."/>
            <person name="Shabanowitz J."/>
            <person name="Hunt D.F."/>
        </authorList>
    </citation>
    <scope>METHYLATION AT LYS-37 AND LYS-38</scope>
    <scope>IDENTIFICATION BY MASS SPECTROMETRY</scope>
</reference>
<reference key="26">
    <citation type="journal article" date="2006" name="J. Biol. Chem.">
        <title>Expression patterns and post-translational modifications associated with mammalian histone H3 variants.</title>
        <authorList>
            <person name="Hake S.B."/>
            <person name="Garcia B.A."/>
            <person name="Duncan E.M."/>
            <person name="Kauer M."/>
            <person name="Dellaire G."/>
            <person name="Shabanowitz J."/>
            <person name="Bazett-Jones D.P."/>
            <person name="Allis C.D."/>
            <person name="Hunt D.F."/>
        </authorList>
    </citation>
    <scope>ACETYLATION AT LYS-10; LYS-15; LYS-19 AND LYS-24</scope>
    <scope>METHYLATION AT LYS-5; LYS-10; LYS-19; LYS-28; LYS-37; LYS-65; LYS-80 AND LYS-123</scope>
    <scope>IDENTIFICATION BY MASS SPECTROMETRY</scope>
</reference>
<reference key="27">
    <citation type="journal article" date="2006" name="J. Proteome Res.">
        <title>Mass spectrometric characterization of human histone H3: a bird's eye view.</title>
        <authorList>
            <person name="Thomas C.E."/>
            <person name="Kelleher N.L."/>
            <person name="Mizzen C.A."/>
        </authorList>
    </citation>
    <scope>METHYLATION AT LYS-5 AND LYS-10</scope>
    <scope>ACETYLATION AT LYS-10; LYS-15 AND LYS-24</scope>
    <scope>PHOSPHORYLATION AT SER-11 AND SER-29</scope>
    <scope>IDENTIFICATION BY MASS SPECTROMETRY</scope>
</reference>
<reference key="28">
    <citation type="journal article" date="2006" name="Mol. Cell">
        <title>Histone H3 and H4 ubiquitylation by the CUL4-DDB-ROC1 ubiquitin ligase facilitates cellular response to DNA damage.</title>
        <authorList>
            <person name="Wang H."/>
            <person name="Zhai L."/>
            <person name="Xu J."/>
            <person name="Joo H.-Y."/>
            <person name="Jackson S."/>
            <person name="Erdjument-Bromage H."/>
            <person name="Tempst P."/>
            <person name="Xiong Y."/>
            <person name="Zhang Y."/>
        </authorList>
    </citation>
    <scope>UBIQUITINATION</scope>
</reference>
<reference key="29">
    <citation type="journal article" date="2006" name="Mol. Cell. Proteomics">
        <title>Quantitative proteomic analysis of post-translational modifications of human histones.</title>
        <authorList>
            <person name="Beck H.C."/>
            <person name="Nielsen E.C."/>
            <person name="Matthiesen R."/>
            <person name="Jensen L.H."/>
            <person name="Sehested M."/>
            <person name="Finn P."/>
            <person name="Grauslund M."/>
            <person name="Hansen A.M."/>
            <person name="Jensen O.N."/>
        </authorList>
    </citation>
    <scope>ACETYLATION AT LYS-10; LYS-15; LYS-19; LYS-24 AND LYS-28</scope>
    <scope>METHYLATION AT LYS-28; LYS-37 AND LYS-80</scope>
    <scope>IDENTIFICATION BY MASS SPECTROMETRY</scope>
</reference>
<reference key="30">
    <citation type="journal article" date="2006" name="Mol. Endocrinol.">
        <title>Coactivator-associated arginine methyltransferase-1 enhances nuclear factor-kappaB-mediated gene transcription through methylation of histone H3 at arginine 17.</title>
        <authorList>
            <person name="Miao F."/>
            <person name="Li S."/>
            <person name="Chavez V."/>
            <person name="Lanting L."/>
            <person name="Natarajan R."/>
        </authorList>
    </citation>
    <scope>ACETYLATION AT LYS-10 AND LYS-15</scope>
    <scope>METHYLATION AT ARG-18</scope>
    <scope>CITRULLINATION AT ARG-18</scope>
</reference>
<reference key="31">
    <citation type="journal article" date="2006" name="Proc. Natl. Acad. Sci. U.S.A.">
        <title>Structural basis for histone N-terminal recognition by human peptidylarginine deiminase 4.</title>
        <authorList>
            <person name="Arita K."/>
            <person name="Shimizu T."/>
            <person name="Hashimoto H."/>
            <person name="Hidaka Y."/>
            <person name="Yamada M."/>
            <person name="Sato M."/>
        </authorList>
    </citation>
    <scope>CITRULLINATION AT ARG-3; ARG-9; ARG-18 AND ARG-27</scope>
</reference>
<reference key="32">
    <citation type="journal article" date="2007" name="Genes Dev.">
        <title>PRMT6-mediated methylation of R2 in histone H3 antagonizes H3 K4 trimethylation.</title>
        <authorList>
            <person name="Hyllus D."/>
            <person name="Stein C."/>
            <person name="Schnabel K."/>
            <person name="Schiltz E."/>
            <person name="Imhof A."/>
            <person name="Dou Y."/>
            <person name="Hsieh J."/>
            <person name="Bauer U.M."/>
        </authorList>
    </citation>
    <scope>METHYLATION AT ARG-3 BY PRMT6</scope>
</reference>
<reference key="33">
    <citation type="journal article" date="2007" name="J. Biol. Chem.">
        <title>Organismal differences in post-translational modifications in histones H3 and H4.</title>
        <authorList>
            <person name="Garcia B.A."/>
            <person name="Hake S.B."/>
            <person name="Diaz R.L."/>
            <person name="Kauer M."/>
            <person name="Morris S.A."/>
            <person name="Recht J."/>
            <person name="Shabanowitz J."/>
            <person name="Mishra N."/>
            <person name="Strahl B.D."/>
            <person name="Allis C.D."/>
            <person name="Hunt D.F."/>
        </authorList>
    </citation>
    <scope>ACETYLATION AT LYS-5; LYS-10; LYS-15; LYS-19; LYS-24; LYS-28; LYS-37; LYS-57 AND LYS-80</scope>
    <scope>METHYLATION AT LYS-5; LYS-10; LYS-19; LYS-24; LYS-28; LYS-37; LYS-57; LYS-65; LYS-80 AND LYS-123</scope>
    <scope>IDENTIFICATION BY MASS SPECTROMETRY</scope>
</reference>
<reference key="34">
    <citation type="journal article" date="2007" name="J. Biol. Chem.">
        <title>Identification of histone H3 lysine 36 acetylation as a highly conserved histone modification.</title>
        <authorList>
            <person name="Morris S.A."/>
            <person name="Rao B."/>
            <person name="Garcia B.A."/>
            <person name="Hake S.B."/>
            <person name="Diaz R.L."/>
            <person name="Shabanowitz J."/>
            <person name="Hunt D.F."/>
            <person name="Allis C.D."/>
            <person name="Lieb J.D."/>
            <person name="Strahl B.D."/>
        </authorList>
    </citation>
    <scope>ACETYLATION AT LYS-37</scope>
</reference>
<reference key="35">
    <citation type="journal article" date="2007" name="Nature">
        <title>Methylation of histone H3R2 by PRMT6 and H3K4 by an MLL complex are mutually exclusive.</title>
        <authorList>
            <person name="Guccione E."/>
            <person name="Bassi C."/>
            <person name="Casadio F."/>
            <person name="Martinato F."/>
            <person name="Cesaroni M."/>
            <person name="Schuchlautz H."/>
            <person name="Luescher B."/>
            <person name="Amati B."/>
        </authorList>
    </citation>
    <scope>METHYLATION AT ARG-3 BY PRMT6</scope>
</reference>
<reference key="36">
    <citation type="journal article" date="2008" name="Cell">
        <title>Chk1 is a histone H3 threonine 11 kinase that regulates DNA damage-induced transcriptional repression.</title>
        <authorList>
            <person name="Shimada M."/>
            <person name="Niida H."/>
            <person name="Zineldeen D.H."/>
            <person name="Tagami H."/>
            <person name="Tanaka M."/>
            <person name="Saito H."/>
            <person name="Nakanishi M."/>
        </authorList>
    </citation>
    <scope>PHOSPHORYLATION AT THR-12 BY CHEK1</scope>
</reference>
<reference key="37">
    <citation type="journal article" date="2008" name="J. Biol. Chem.">
        <title>Arginine methylation of the histone H3 tail impedes effector binding.</title>
        <authorList>
            <person name="Iberg A.N."/>
            <person name="Espejo A."/>
            <person name="Cheng D."/>
            <person name="Kim D."/>
            <person name="Michaud-Levesque J."/>
            <person name="Richard S."/>
            <person name="Bedford M.T."/>
        </authorList>
    </citation>
    <scope>METHYLATION AT ARG-3 BY PRMT6</scope>
</reference>
<reference key="38">
    <citation type="journal article" date="2008" name="Nat. Cell Biol.">
        <title>Phosphorylation of histone H3 at threonine 11 establishes a novel chromatin mark for transcriptional regulation.</title>
        <authorList>
            <person name="Metzger E."/>
            <person name="Yin N."/>
            <person name="Wissmann M."/>
            <person name="Kunowska N."/>
            <person name="Fischer K."/>
            <person name="Friedrichs N."/>
            <person name="Patnaik D."/>
            <person name="Higgins J.M."/>
            <person name="Potier N."/>
            <person name="Scheidtmann K.H."/>
            <person name="Buettner R."/>
            <person name="Schule R."/>
        </authorList>
    </citation>
    <scope>PHOSPHORYLATION AT THR-12</scope>
</reference>
<reference key="39">
    <citation type="journal article" date="2009" name="J. Biol. Chem.">
        <title>Acetylation of histone H3 at the nucleosome dyad alters DNA-histone binding.</title>
        <authorList>
            <person name="Manohar M."/>
            <person name="Mooney A.M."/>
            <person name="North J.A."/>
            <person name="Nakkula R.J."/>
            <person name="Picking J.W."/>
            <person name="Edon A."/>
            <person name="Fishel R."/>
            <person name="Poirier M.G."/>
            <person name="Ottesen J.J."/>
        </authorList>
    </citation>
    <scope>ACETYLATION AT LYS-116 AND LYS-123</scope>
</reference>
<reference key="40">
    <citation type="journal article" date="2009" name="Nature">
        <title>JAK2 phosphorylates histone H3Y41 and excludes HP1alpha from chromatin.</title>
        <authorList>
            <person name="Dawson M.A."/>
            <person name="Bannister A.J."/>
            <person name="Gottgens B."/>
            <person name="Foster S.D."/>
            <person name="Bartke T."/>
            <person name="Green A.R."/>
            <person name="Kouzarides T."/>
        </authorList>
    </citation>
    <scope>PHOSPHORYLATION AT TYR-42</scope>
</reference>
<reference key="41">
    <citation type="journal article" date="2010" name="Cell">
        <title>Quantitative interaction proteomics and genome-wide profiling of epigenetic histone marks and their readers.</title>
        <authorList>
            <person name="Vermeulen M."/>
            <person name="Eberl H.C."/>
            <person name="Matarese F."/>
            <person name="Marks H."/>
            <person name="Denissov S."/>
            <person name="Butter F."/>
            <person name="Lee K.K."/>
            <person name="Olsen J.V."/>
            <person name="Hyman A.A."/>
            <person name="Stunnenberg H.G."/>
            <person name="Mann M."/>
        </authorList>
    </citation>
    <scope>PHOSPHORYLATION AT SER-58 AND THR-81</scope>
</reference>
<reference key="42">
    <citation type="journal article" date="2010" name="Nature">
        <title>Phosphorylation of histone H3T6 by PKCbeta(I) controls demethylation at histone H3K4.</title>
        <authorList>
            <person name="Metzger E."/>
            <person name="Imhof A."/>
            <person name="Patel D."/>
            <person name="Kahl P."/>
            <person name="Hoffmeyer K."/>
            <person name="Friedrichs N."/>
            <person name="Muller J.M."/>
            <person name="Greschik H."/>
            <person name="Kirfel J."/>
            <person name="Ji S."/>
            <person name="Kunowska N."/>
            <person name="Beisenherz-Huss C."/>
            <person name="Gunther T."/>
            <person name="Buettner R."/>
            <person name="Schule R."/>
        </authorList>
    </citation>
    <scope>PHOSPHORYLATION AT THR-7</scope>
</reference>
<reference key="43">
    <citation type="journal article" date="2011" name="Cell">
        <title>Identification of 67 histone marks and histone lysine crotonylation as a new type of histone modification.</title>
        <authorList>
            <person name="Tan M."/>
            <person name="Luo H."/>
            <person name="Lee S."/>
            <person name="Jin F."/>
            <person name="Yang J.S."/>
            <person name="Montellier E."/>
            <person name="Buchou T."/>
            <person name="Cheng Z."/>
            <person name="Rousseaux S."/>
            <person name="Rajagopal N."/>
            <person name="Lu Z."/>
            <person name="Ye Z."/>
            <person name="Zhu Q."/>
            <person name="Wysocka J."/>
            <person name="Ye Y."/>
            <person name="Khochbin S."/>
            <person name="Ren B."/>
            <person name="Zhao Y."/>
        </authorList>
    </citation>
    <scope>CROTONYLATION AT LYS-5; LYS-10; LYS-19; LYS-24; LYS-28 AND LYS-57</scope>
</reference>
<reference key="44">
    <citation type="journal article" date="2012" name="Cell">
        <title>PKM2 phosphorylates histone H3 and promotes gene transcription and tumorigenesis.</title>
        <authorList>
            <person name="Yang W."/>
            <person name="Xia Y."/>
            <person name="Hawke D."/>
            <person name="Li X."/>
            <person name="Liang J."/>
            <person name="Xing D."/>
            <person name="Aldape K."/>
            <person name="Hunter T."/>
            <person name="Alfred Yung W.K."/>
            <person name="Lu Z."/>
        </authorList>
    </citation>
    <scope>PHOSPHORYLATION AT THR-12</scope>
</reference>
<reference key="45">
    <citation type="journal article" date="2012" name="Mol. Cell">
        <title>Histone H3 lysine 56 methylation regulates DNA replication through its interaction with PCNA.</title>
        <authorList>
            <person name="Yu Y."/>
            <person name="Song C."/>
            <person name="Zhang Q."/>
            <person name="Dimaggio P.A."/>
            <person name="Garcia B.A."/>
            <person name="York A."/>
            <person name="Carey M.F."/>
            <person name="Grunstein M."/>
        </authorList>
    </citation>
    <scope>METHYLATION AT LYS-57</scope>
</reference>
<reference key="46">
    <citation type="journal article" date="2012" name="Mol. Cell">
        <title>Lysyl oxidase-like 2 deaminates lysine 4 in histone H3.</title>
        <authorList>
            <person name="Herranz N."/>
            <person name="Dave N."/>
            <person name="Millanes-Romero A."/>
            <person name="Morey L."/>
            <person name="Diaz V.M."/>
            <person name="Lorenz-Fonfria V."/>
            <person name="Gutierrez-Gallego R."/>
            <person name="Jeronimo C."/>
            <person name="Di Croce L."/>
            <person name="Garcia de Herreros A."/>
            <person name="Peiro S."/>
        </authorList>
    </citation>
    <scope>RETRACTED PAPER</scope>
</reference>
<reference key="47">
    <citation type="journal article" date="2016" name="Mol. Cell">
        <authorList>
            <person name="Herranz N."/>
            <person name="Dave N."/>
            <person name="Millanes-Romero A."/>
            <person name="Morey L."/>
            <person name="Diaz V.M."/>
            <person name="Lorenz-Fonfria V."/>
            <person name="Gutierrez-Gallego R."/>
            <person name="Jeronimo C."/>
            <person name="Di Croce L."/>
            <person name="Garcia de Herreros A."/>
            <person name="Peiro S."/>
        </authorList>
    </citation>
    <scope>RETRACTION NOTICE OF PUBMED:22483618</scope>
</reference>
<reference key="48">
    <citation type="journal article" date="2012" name="Mol. Cell. Proteomics">
        <title>Lysine succinylation and lysine malonylation in histones.</title>
        <authorList>
            <person name="Xie Z."/>
            <person name="Dai J."/>
            <person name="Dai L."/>
            <person name="Tan M."/>
            <person name="Cheng Z."/>
            <person name="Wu Y."/>
            <person name="Boeke J.D."/>
            <person name="Zhao Y."/>
        </authorList>
    </citation>
    <scope>SUCCINYLATION AT LYS-15; LYS-57; LYS-80 AND LYS-123</scope>
</reference>
<reference key="49">
    <citation type="journal article" date="2015" name="Proteomics">
        <title>N-terminome analysis of the human mitochondrial proteome.</title>
        <authorList>
            <person name="Vaca Jacome A.S."/>
            <person name="Rabilloud T."/>
            <person name="Schaeffer-Reiss C."/>
            <person name="Rompais M."/>
            <person name="Ayoub D."/>
            <person name="Lane L."/>
            <person name="Bairoch A."/>
            <person name="Van Dorsselaer A."/>
            <person name="Carapito C."/>
        </authorList>
    </citation>
    <scope>IDENTIFICATION BY MASS SPECTROMETRY [LARGE SCALE ANALYSIS]</scope>
</reference>
<reference key="50">
    <citation type="journal article" date="2012" name="Nat. Genet.">
        <title>Somatic histone H3 alterations in pediatric diffuse intrinsic pontine gliomas and non-brainstem glioblastomas.</title>
        <authorList>
            <consortium name="St. Jude Children's Research Hospital-Washington University Pediatric Cancer Genome Project"/>
            <person name="Wu G."/>
            <person name="Broniscer A."/>
            <person name="McEachron T.A."/>
            <person name="Lu C."/>
            <person name="Paugh B.S."/>
            <person name="Becksfort J."/>
            <person name="Qu C."/>
            <person name="Ding L."/>
            <person name="Huether R."/>
            <person name="Parker M."/>
            <person name="Zhang J."/>
            <person name="Gajjar A."/>
            <person name="Dyer M.A."/>
            <person name="Mullighan C.G."/>
            <person name="Gilbertson R.J."/>
            <person name="Mardis E.R."/>
            <person name="Wilson R.K."/>
            <person name="Downing J.R."/>
            <person name="Ellison D.W."/>
            <person name="Zhang J."/>
            <person name="Baker S.J."/>
        </authorList>
    </citation>
    <scope>INVOLVEMENT IN GLM</scope>
    <scope>VARIANT GLM MET-28</scope>
</reference>
<reference key="51">
    <citation type="journal article" date="2013" name="Cell">
        <title>Regulation of transcription through acetylation of H3K122 on the lateral surface of the histone octamer.</title>
        <authorList>
            <person name="Tropberger P."/>
            <person name="Pott S."/>
            <person name="Keller C."/>
            <person name="Kamieniarz-Gdula K."/>
            <person name="Caron M."/>
            <person name="Richter F."/>
            <person name="Li G."/>
            <person name="Mittler G."/>
            <person name="Liu E.T."/>
            <person name="Buhler M."/>
            <person name="Margueron R."/>
            <person name="Schneider R."/>
        </authorList>
    </citation>
    <scope>ACETYLATION AT LYS-123</scope>
</reference>
<reference key="52">
    <citation type="journal article" date="2014" name="Nat. Chem. Biol.">
        <title>Lysine 2-hydroxyisobutyrylation is a widely distributed active histone mark.</title>
        <authorList>
            <person name="Dai L."/>
            <person name="Peng C."/>
            <person name="Montellier E."/>
            <person name="Lu Z."/>
            <person name="Chen Y."/>
            <person name="Ishii H."/>
            <person name="Debernardi A."/>
            <person name="Buchou T."/>
            <person name="Rousseaux S."/>
            <person name="Jin F."/>
            <person name="Sabari B.R."/>
            <person name="Deng Z."/>
            <person name="Allis C.D."/>
            <person name="Ren B."/>
            <person name="Khochbin S."/>
            <person name="Zhao Y."/>
        </authorList>
    </citation>
    <scope>HYDROXYBUTYRYLATION AT LYS-5; LYS-10; LYS-15; LYS-19; LYS-24; LYS-28; LYS-37; LYS-57; LYS-65; LYS-80 AND LYS-123</scope>
</reference>
<reference key="53">
    <citation type="journal article" date="2016" name="FEBS J.">
        <title>Lysyl oxidase-like 2 (LOXL2) oxidizes trimethylated lysine 4 in histone H3.</title>
        <authorList>
            <person name="Herranz N."/>
            <person name="Dave N."/>
            <person name="Millanes-Romero A."/>
            <person name="Pascual-Reguant L."/>
            <person name="Morey L."/>
            <person name="Diaz V.M."/>
            <person name="Lorenz-Fonfria V."/>
            <person name="Gutierrez-Gallego R."/>
            <person name="Jeronimo C."/>
            <person name="Iturbide A."/>
            <person name="Di Croce L."/>
            <person name="Garcia de Herreros A."/>
            <person name="Peiro S."/>
        </authorList>
    </citation>
    <scope>ALLYSINE AT LYS-5</scope>
</reference>
<reference key="54">
    <citation type="journal article" date="2016" name="Mol. Cell">
        <title>Dynamic competing histone H4 K5K8 acetylation and butyrylation are hallmarks of highly active gene promoters.</title>
        <authorList>
            <person name="Goudarzi A."/>
            <person name="Zhang D."/>
            <person name="Huang H."/>
            <person name="Barral S."/>
            <person name="Kwon O.K."/>
            <person name="Qi S."/>
            <person name="Tang Z."/>
            <person name="Buchou T."/>
            <person name="Vitte A.L."/>
            <person name="He T."/>
            <person name="Cheng Z."/>
            <person name="Montellier E."/>
            <person name="Gaucher J."/>
            <person name="Curtet S."/>
            <person name="Debernardi A."/>
            <person name="Charbonnier G."/>
            <person name="Puthier D."/>
            <person name="Petosa C."/>
            <person name="Panne D."/>
            <person name="Rousseaux S."/>
            <person name="Roeder R.G."/>
            <person name="Zhao Y."/>
            <person name="Khochbin S."/>
        </authorList>
    </citation>
    <scope>BUTYRYLATION AT LYS-10; LYS-19 AND LYS-24</scope>
</reference>
<reference key="55">
    <citation type="journal article" date="2016" name="Mol. Cell">
        <title>Metabolic regulation of gene expression by histone lysine beta-hydroxybutyrylation.</title>
        <authorList>
            <person name="Xie Z."/>
            <person name="Zhang D."/>
            <person name="Chung D."/>
            <person name="Tang Z."/>
            <person name="Huang H."/>
            <person name="Dai L."/>
            <person name="Qi S."/>
            <person name="Li J."/>
            <person name="Colak G."/>
            <person name="Chen Y."/>
            <person name="Xia C."/>
            <person name="Peng C."/>
            <person name="Ruan H."/>
            <person name="Kirkey M."/>
            <person name="Wang D."/>
            <person name="Jensen L.M."/>
            <person name="Kwon O.K."/>
            <person name="Lee S."/>
            <person name="Pletcher S.D."/>
            <person name="Tan M."/>
            <person name="Lombard D.B."/>
            <person name="White K.P."/>
            <person name="Zhao H."/>
            <person name="Li J."/>
            <person name="Roeder R.G."/>
            <person name="Yang X."/>
            <person name="Zhao Y."/>
        </authorList>
    </citation>
    <scope>HYDROXYBUTYRYLATION AT LYS-5; LYS-10; LYS-15; LYS-19; LYS-24; LYS-28; LYS-57; LYS-80 AND LYS-123</scope>
</reference>
<reference key="56">
    <citation type="journal article" date="2016" name="Nat. Commun.">
        <title>SIRT7 is a histone desuccinylase that functionally links to chromatin compaction and genome stability.</title>
        <authorList>
            <person name="Li L."/>
            <person name="Shi L."/>
            <person name="Yang S."/>
            <person name="Yan R."/>
            <person name="Zhang D."/>
            <person name="Yang J."/>
            <person name="He L."/>
            <person name="Li W."/>
            <person name="Yi X."/>
            <person name="Sun L."/>
            <person name="Liang J."/>
            <person name="Cheng Z."/>
            <person name="Shi L."/>
            <person name="Shang Y."/>
            <person name="Yu W."/>
        </authorList>
    </citation>
    <scope>SUCCINYLATION AT LYS-123</scope>
    <scope>DESUSUCCINYLATION</scope>
</reference>
<reference key="57">
    <citation type="journal article" date="2016" name="Science">
        <title>Histone H3K36 mutations promote sarcomagenesis through altered histone methylation landscape.</title>
        <authorList>
            <person name="Lu C."/>
            <person name="Jain S.U."/>
            <person name="Hoelper D."/>
            <person name="Bechet D."/>
            <person name="Molden R.C."/>
            <person name="Ran L."/>
            <person name="Murphy D."/>
            <person name="Venneti S."/>
            <person name="Hameed M."/>
            <person name="Pawel B.R."/>
            <person name="Wunder J.S."/>
            <person name="Dickson B.C."/>
            <person name="Lundgren S.M."/>
            <person name="Jani K.S."/>
            <person name="De Jay N."/>
            <person name="Papillon-Cavanagh S."/>
            <person name="Andrulis I.L."/>
            <person name="Sawyer S.L."/>
            <person name="Grynspan D."/>
            <person name="Turcotte R.E."/>
            <person name="Nadaf J."/>
            <person name="Fahiminiyah S."/>
            <person name="Muir T.W."/>
            <person name="Majewski J."/>
            <person name="Thompson C.B."/>
            <person name="Chi P."/>
            <person name="Garcia B.A."/>
            <person name="Allis C.D."/>
            <person name="Jabado N."/>
            <person name="Lewis P.W."/>
        </authorList>
    </citation>
    <scope>INVOLVEMENT IN SOFT TISSUE SARCOMAS</scope>
    <scope>VARIANTS ILE-37 AND MET-37</scope>
    <scope>CHARACTERIZATION OF VARIANTS ILE-37 AND MET-37</scope>
</reference>
<reference key="58">
    <citation type="journal article" date="2017" name="Cell Res.">
        <title>Class I histone deacetylases are major histone decrotonylases: evidence for critical and broad function of histone crotonylation in transcription.</title>
        <authorList>
            <person name="Wei W."/>
            <person name="Liu X."/>
            <person name="Chen J."/>
            <person name="Gao S."/>
            <person name="Lu L."/>
            <person name="Zhang H."/>
            <person name="Ding G."/>
            <person name="Wang Z."/>
            <person name="Chen Z."/>
            <person name="Shi T."/>
            <person name="Li J."/>
            <person name="Yu J."/>
            <person name="Wong J."/>
        </authorList>
    </citation>
    <scope>CROTONYLATION AT LYS-5; LYS-10 AND LYS-24</scope>
</reference>
<reference key="59">
    <citation type="journal article" date="2017" name="Mol. Cell">
        <title>Serine ADP-ribosylation depends on HPF1.</title>
        <authorList>
            <person name="Bonfiglio J.J."/>
            <person name="Fontana P."/>
            <person name="Zhang Q."/>
            <person name="Colby T."/>
            <person name="Gibbs-Seymour I."/>
            <person name="Atanassov I."/>
            <person name="Bartlett E."/>
            <person name="Zaja R."/>
            <person name="Ahel I."/>
            <person name="Matic I."/>
        </authorList>
    </citation>
    <scope>ADP-RIBOSYLATION AT SER-11 AND SER-29</scope>
</reference>
<reference key="60">
    <citation type="journal article" date="2017" name="Nature">
        <title>KAT2A coupled with the alpha-KGDH complex acts as a histone H3 succinyltransferase.</title>
        <authorList>
            <person name="Wang Y."/>
            <person name="Guo Y.R."/>
            <person name="Liu K."/>
            <person name="Yin Z."/>
            <person name="Liu R."/>
            <person name="Xia Y."/>
            <person name="Tan L."/>
            <person name="Yang P."/>
            <person name="Lee J.H."/>
            <person name="Li X.J."/>
            <person name="Hawke D."/>
            <person name="Zheng Y."/>
            <person name="Qian X."/>
            <person name="Lyu J."/>
            <person name="He J."/>
            <person name="Xing D."/>
            <person name="Tao Y.J."/>
            <person name="Lu Z."/>
        </authorList>
    </citation>
    <scope>SUCCINYLATION AT LYS-80</scope>
</reference>
<reference key="61">
    <citation type="journal article" date="2018" name="Cell Rep.">
        <title>Interplay of histone marks with serine ADP-ribosylation.</title>
        <authorList>
            <person name="Bartlett E."/>
            <person name="Bonfiglio J.J."/>
            <person name="Prokhorova E."/>
            <person name="Colby T."/>
            <person name="Zobel F."/>
            <person name="Ahel I."/>
            <person name="Matic I."/>
        </authorList>
    </citation>
    <scope>ADP-RIBOSYLATION AT SER-11</scope>
</reference>
<reference key="62">
    <citation type="journal article" date="2018" name="Elife">
        <title>Serine is the major residue for ADP-ribosylation upon DNA damage.</title>
        <authorList>
            <person name="Palazzo L."/>
            <person name="Leidecker O."/>
            <person name="Prokhorova E."/>
            <person name="Dauben H."/>
            <person name="Matic I."/>
            <person name="Ahel I."/>
        </authorList>
    </citation>
    <scope>ADP-RIBOSYLATION AT SER-11 AND SER-29</scope>
</reference>
<reference key="63">
    <citation type="journal article" date="2019" name="Mol. Cell">
        <title>Glutarylation of histone H4 lysine 91 regulates chromatin dynamics.</title>
        <authorList>
            <person name="Bao X."/>
            <person name="Liu Z."/>
            <person name="Zhang W."/>
            <person name="Gladysz K."/>
            <person name="Fung Y.M.E."/>
            <person name="Tian G."/>
            <person name="Xiong Y."/>
            <person name="Wong J.W.H."/>
            <person name="Yuen K.W.Y."/>
            <person name="Li X.D."/>
        </authorList>
    </citation>
    <scope>GLUTARYLATION AT LYS-15; LYS-19; LYS-24; LYS-28; LYS-57; LYS-80; LYS-116 AND LYS-123</scope>
</reference>
<reference key="64">
    <citation type="journal article" date="2019" name="Nature">
        <title>Histone serotonylation is a permissive modification that enhances TFIID binding to H3K4me3.</title>
        <authorList>
            <person name="Farrelly L.A."/>
            <person name="Thompson R.E."/>
            <person name="Zhao S."/>
            <person name="Lepack A.E."/>
            <person name="Lyu Y."/>
            <person name="Bhanu N.V."/>
            <person name="Zhang B."/>
            <person name="Loh Y.E."/>
            <person name="Ramakrishnan A."/>
            <person name="Vadodaria K.C."/>
            <person name="Heard K.J."/>
            <person name="Erikson G."/>
            <person name="Nakadai T."/>
            <person name="Bastle R.M."/>
            <person name="Lukasak B.J."/>
            <person name="Zebroski H. III"/>
            <person name="Alenina N."/>
            <person name="Bader M."/>
            <person name="Berton O."/>
            <person name="Roeder R.G."/>
            <person name="Molina H."/>
            <person name="Gage F.H."/>
            <person name="Shen L."/>
            <person name="Garcia B.A."/>
            <person name="Li H."/>
            <person name="Muir T.W."/>
            <person name="Maze I."/>
        </authorList>
    </citation>
    <scope>SEROTONYLATION AT GLN-6</scope>
</reference>
<reference key="65">
    <citation type="journal article" date="2019" name="Nature">
        <title>Metabolic regulation of gene expression by histone lactylation.</title>
        <authorList>
            <person name="Zhang D."/>
            <person name="Tang Z."/>
            <person name="Huang H."/>
            <person name="Zhou G."/>
            <person name="Cui C."/>
            <person name="Weng Y."/>
            <person name="Liu W."/>
            <person name="Kim S."/>
            <person name="Lee S."/>
            <person name="Perez-Neut M."/>
            <person name="Ding J."/>
            <person name="Czyz D."/>
            <person name="Hu R."/>
            <person name="Ye Z."/>
            <person name="He M."/>
            <person name="Zheng Y.G."/>
            <person name="Shuman H.A."/>
            <person name="Dai L."/>
            <person name="Ren B."/>
            <person name="Roeder R.G."/>
            <person name="Becker L."/>
            <person name="Zhao Y."/>
        </authorList>
    </citation>
    <scope>LACTYLATION AT LYS-9; LYS-19; LYS-24; LYS-28 AND LYS-80</scope>
</reference>
<reference key="66">
    <citation type="journal article" date="2019" name="Sci. Rep.">
        <title>VRK1 functional insufficiency due to alterations in protein stability or kinase activity of human VRK1 pathogenic variants implicated in neuromotor syndromes.</title>
        <authorList>
            <person name="Martin-Doncel E."/>
            <person name="Rojas A.M."/>
            <person name="Cantarero L."/>
            <person name="Lazo P.A."/>
        </authorList>
    </citation>
    <scope>PHOSPHORYLATION AT THR-4 BY VRK1</scope>
</reference>
<reference key="67">
    <citation type="journal article" date="2020" name="Science">
        <title>Dopaminylation of histone H3 in ventral tegmental area regulates cocaine seeking.</title>
        <authorList>
            <person name="Lepack A.E."/>
            <person name="Werner C.T."/>
            <person name="Stewart A.F."/>
            <person name="Fulton S.L."/>
            <person name="Zhong P."/>
            <person name="Farrelly L.A."/>
            <person name="Smith A.C.W."/>
            <person name="Ramakrishnan A."/>
            <person name="Lyu Y."/>
            <person name="Bastle R.M."/>
            <person name="Martin J.A."/>
            <person name="Mitra S."/>
            <person name="O'Connor R.M."/>
            <person name="Wang Z.J."/>
            <person name="Molina H."/>
            <person name="Turecki G."/>
            <person name="Shen L."/>
            <person name="Yan Z."/>
            <person name="Calipari E.S."/>
            <person name="Dietz D.M."/>
            <person name="Kenny P.J."/>
            <person name="Maze I."/>
        </authorList>
    </citation>
    <scope>DOPAMINYLATION AT GLN-6</scope>
</reference>
<reference key="68">
    <citation type="journal article" date="2021" name="Elife">
        <title>Serine ADP-ribosylation marks nucleosomes for ALC1-dependent chromatin remodeling.</title>
        <authorList>
            <person name="Mohapatra J."/>
            <person name="Tashiro K."/>
            <person name="Beckner R.L."/>
            <person name="Sierra J."/>
            <person name="Kilgore J.A."/>
            <person name="Williams N.S."/>
            <person name="Liszczak G."/>
        </authorList>
    </citation>
    <scope>ADP-RIBOSYLATION AT SER-11</scope>
</reference>
<reference key="69">
    <citation type="journal article" date="2021" name="Mol. Cell">
        <title>DNAJC9 integrates heat shock molecular chaperones into the histone chaperone network.</title>
        <authorList>
            <person name="Hammond C.M."/>
            <person name="Bao H."/>
            <person name="Hendriks I.A."/>
            <person name="Carraro M."/>
            <person name="Garcia-Nieto A."/>
            <person name="Liu Y."/>
            <person name="Reveron-Gomez N."/>
            <person name="Spanos C."/>
            <person name="Chen L."/>
            <person name="Rappsilber J."/>
            <person name="Nielsen M.L."/>
            <person name="Patel D.J."/>
            <person name="Huang H."/>
            <person name="Groth A."/>
        </authorList>
    </citation>
    <scope>INTERACTION WITH TONSL; CHAF1A; CHAF1B; MCM2 AND DNAJC9</scope>
</reference>
<reference key="70">
    <citation type="journal article" date="2022" name="ACS Chem. Biol.">
        <title>Potent Activation of NAD+-Dependent Deacetylase Sirt7 by Nucleosome Binding.</title>
        <authorList>
            <person name="Kuznetsov V.I."/>
            <person name="Liu W.H."/>
            <person name="Klein M.A."/>
            <person name="Denu J.M."/>
        </authorList>
    </citation>
    <scope>ACETYLATION AT LYS-19</scope>
    <scope>ACYLATION AT LYS-19</scope>
</reference>
<reference key="71">
    <citation type="journal article" date="2005" name="Mol. Cell">
        <title>Molecular basis for the recognition of phosphorylated and phosphoacetylated histone h3 by 14-3-3.</title>
        <authorList>
            <person name="Macdonald N."/>
            <person name="Welburn J.P.I."/>
            <person name="Noble M.E.M."/>
            <person name="Nguyen A."/>
            <person name="Yaffe M.B."/>
            <person name="Clynes D."/>
            <person name="Moggs J.G."/>
            <person name="Orphanides G."/>
            <person name="Thomson S."/>
            <person name="Edmunds J.W."/>
            <person name="Clayton A.L."/>
            <person name="Endicott J.A."/>
            <person name="Mahadevan L.C."/>
        </authorList>
    </citation>
    <scope>X-RAY CRYSTALLOGRAPHY (2.0 ANGSTROMS) OF 8-15 IN COMPLEX WITH YWHAZ</scope>
</reference>
<reference key="72">
    <citation type="journal article" date="2005" name="Nature">
        <title>Double chromodomains cooperate to recognize the methylated histone H3 tail.</title>
        <authorList>
            <person name="Flanagan J.F."/>
            <person name="Mi L.-Z."/>
            <person name="Chruszcz M."/>
            <person name="Cymborowski M."/>
            <person name="Clines K.L."/>
            <person name="Kim Y."/>
            <person name="Minor W."/>
            <person name="Rastinejad F."/>
            <person name="Khorasanizadeh S."/>
        </authorList>
    </citation>
    <scope>X-RAY CRYSTALLOGRAPHY (2.45 ANGSTROMS) OF 2-20 IN COMPLEX WITH CHD1</scope>
</reference>
<reference key="73">
    <citation type="journal article" date="2005" name="Nucleic Acids Res.">
        <title>Alteration of the nucleosomal DNA path in the crystal structure of a human nucleosome core particle.</title>
        <authorList>
            <person name="Tsunaka Y."/>
            <person name="Kajimura N."/>
            <person name="Tate S."/>
            <person name="Morikawa K."/>
        </authorList>
    </citation>
    <scope>X-RAY CRYSTALLOGRAPHY (2.5 ANGSTROMS)</scope>
</reference>
<reference key="74">
    <citation type="journal article" date="2011" name="Mol. Cell">
        <title>A specific function for the histone chaperone NASP to fine-tune a reservoir of soluble H3-H4 in the histone supply chain.</title>
        <authorList>
            <person name="Cook A.J."/>
            <person name="Gurard-Levin Z.A."/>
            <person name="Vassias I."/>
            <person name="Almouzni G."/>
        </authorList>
    </citation>
    <scope>INTERACTION WITH NASP</scope>
</reference>
<reference evidence="79 80" key="75">
    <citation type="journal article" date="2020" name="Cell Res.">
        <title>Structural basis for nucleosome-mediated inhibition of cGAS activity.</title>
        <authorList>
            <person name="Cao D."/>
            <person name="Han X."/>
            <person name="Fan X."/>
            <person name="Xu R.M."/>
            <person name="Zhang X."/>
        </authorList>
    </citation>
    <scope>STRUCTURE BY ELECTRON MICROSCOPY (3.80 ANGSTROMS) OF 39-136 IN COMPLEX WITH NUCLEOSOME CORE AND CGAS</scope>
</reference>
<reference evidence="77" key="76">
    <citation type="journal article" date="2020" name="PLoS ONE">
        <title>Bridging of nucleosome-proximal DNA double-strand breaks by PARP2 enhances its interaction with HPF1.</title>
        <authorList>
            <person name="Gaullier G."/>
            <person name="Roberts G."/>
            <person name="Muthurajan U.M."/>
            <person name="Bowerman S."/>
            <person name="Rudolph J."/>
            <person name="Mahadevan J."/>
            <person name="Jha A."/>
            <person name="Rae P.S."/>
            <person name="Luger K."/>
        </authorList>
    </citation>
    <scope>STRUCTURE BY ELECTRON MICROSCOPY (10.50 ANGSTROMS) OF NUCLEOSOME CORE COMPLEX IN COMPLEX WITH PARP2</scope>
</reference>
<reference evidence="78" key="77">
    <citation type="journal article" date="2020" name="Science">
        <title>Structural basis for the inhibition of cGAS by nucleosomes.</title>
        <authorList>
            <person name="Kujirai T."/>
            <person name="Zierhut C."/>
            <person name="Takizawa Y."/>
            <person name="Kim R."/>
            <person name="Negishi L."/>
            <person name="Uruma N."/>
            <person name="Hirai S."/>
            <person name="Funabiki H."/>
            <person name="Kurumizaka H."/>
        </authorList>
    </citation>
    <scope>STRUCTURE BY ELECTRON MICROSCOPY (3.90 ANGSTROMS) OF 2-136 IN COMPLEX WITH NUCLEOSOME CORE AND CGAS</scope>
</reference>
<reference key="78">
    <citation type="journal article" date="2013" name="Genes Dev.">
        <title>The histone H3.3K27M mutation in pediatric glioma reprograms H3K27 methylation and gene expression.</title>
        <authorList>
            <person name="Chan K.M."/>
            <person name="Fang D."/>
            <person name="Gan H."/>
            <person name="Hashizume R."/>
            <person name="Yu C."/>
            <person name="Schroeder M."/>
            <person name="Gupta N."/>
            <person name="Mueller S."/>
            <person name="James C.D."/>
            <person name="Jenkins R."/>
            <person name="Sarkaria J."/>
            <person name="Zhang Z."/>
        </authorList>
    </citation>
    <scope>CHARACTERIZATION OF VARIANT GLM MET-28</scope>
</reference>
<reference key="79">
    <citation type="journal article" date="2017" name="Nat. Genet.">
        <title>Impaired H3K36 methylation defines a subset of head and neck squamous cell carcinomas.</title>
        <authorList>
            <person name="Papillon-Cavanagh S."/>
            <person name="Lu C."/>
            <person name="Gayden T."/>
            <person name="Mikael L.G."/>
            <person name="Bechet D."/>
            <person name="Karamboulas C."/>
            <person name="Ailles L."/>
            <person name="Karamchandani J."/>
            <person name="Marchione D.M."/>
            <person name="Garcia B.A."/>
            <person name="Weinreb I."/>
            <person name="Goldstein D."/>
            <person name="Lewis P.W."/>
            <person name="Dancu O.M."/>
            <person name="Dhaliwal S."/>
            <person name="Stecho W."/>
            <person name="Howlett C.J."/>
            <person name="Mymryk J.S."/>
            <person name="Barrett J.W."/>
            <person name="Nichols A.C."/>
            <person name="Allis C.D."/>
            <person name="Majewski J."/>
            <person name="Jabado N."/>
        </authorList>
    </citation>
    <scope>VARIANT MET-37</scope>
</reference>
<comment type="function">
    <text>Core component of nucleosome. Nucleosomes wrap and compact DNA into chromatin, limiting DNA accessibility to the cellular machineries which require DNA as a template. Histones thereby play a central role in transcription regulation, DNA repair, DNA replication and chromosomal stability. DNA accessibility is regulated via a complex set of post-translational modifications of histones, also called histone code, and nucleosome remodeling.</text>
</comment>
<comment type="subunit">
    <text evidence="17 19 37 61">The nucleosome is a histone octamer containing two molecules each of H2A, H2B, H3 and H4 assembled in one H3-H4 heterotetramer and two H2A-H2B heterodimers. The octamer wraps approximately 147 bp of DNA. Interacts with TONSL; CHAF1A; CHAF1B; MCM2 and DNAJC9 (PubMed:33857403). Interacts with NASP; NASP is a histone chaperone that stabilizes and maintains a soluble pool of Histone H3-H4 dimers (PubMed:22195965).</text>
</comment>
<comment type="interaction">
    <interactant intactId="EBI-79722">
        <id>P68431</id>
    </interactant>
    <interactant intactId="EBI-640741">
        <id>P01023</id>
        <label>A2M</label>
    </interactant>
    <organismsDiffer>false</organismsDiffer>
    <experiments>3</experiments>
</comment>
<comment type="interaction">
    <interactant intactId="EBI-79722">
        <id>P68431</id>
    </interactant>
    <interactant intactId="EBI-1753081">
        <id>O43918</id>
        <label>AIRE</label>
    </interactant>
    <organismsDiffer>false</organismsDiffer>
    <experiments>20</experiments>
</comment>
<comment type="interaction">
    <interactant intactId="EBI-79722">
        <id>P68431</id>
    </interactant>
    <interactant intactId="EBI-946046">
        <id>P54252</id>
        <label>ATXN3</label>
    </interactant>
    <organismsDiffer>false</organismsDiffer>
    <experiments>3</experiments>
</comment>
<comment type="interaction">
    <interactant intactId="EBI-79722">
        <id>P68431</id>
    </interactant>
    <interactant intactId="EBI-78129">
        <id>P83916</id>
        <label>CBX1</label>
    </interactant>
    <organismsDiffer>false</organismsDiffer>
    <experiments>12</experiments>
</comment>
<comment type="interaction">
    <interactant intactId="EBI-79722">
        <id>P68431</id>
    </interactant>
    <interactant intactId="EBI-78176">
        <id>Q13185</id>
        <label>CBX3</label>
    </interactant>
    <organismsDiffer>false</organismsDiffer>
    <experiments>6</experiments>
</comment>
<comment type="interaction">
    <interactant intactId="EBI-79722">
        <id>P68431</id>
    </interactant>
    <interactant intactId="EBI-78219">
        <id>P45973</id>
        <label>CBX5</label>
    </interactant>
    <organismsDiffer>false</organismsDiffer>
    <experiments>11</experiments>
</comment>
<comment type="interaction">
    <interactant intactId="EBI-79722">
        <id>P68431</id>
    </interactant>
    <interactant intactId="EBI-1387386">
        <id>Q9Y232</id>
        <label>CDYL</label>
    </interactant>
    <organismsDiffer>false</organismsDiffer>
    <experiments>5</experiments>
</comment>
<comment type="interaction">
    <interactant intactId="EBI-79722">
        <id>P68431</id>
    </interactant>
    <interactant intactId="EBI-2115097">
        <id>P07339</id>
        <label>CTSD</label>
    </interactant>
    <organismsDiffer>false</organismsDiffer>
    <experiments>3</experiments>
</comment>
<comment type="interaction">
    <interactant intactId="EBI-79722">
        <id>P68431</id>
    </interactant>
    <interactant intactId="EBI-287635">
        <id>Q9UER7-1</id>
        <label>DAXX</label>
    </interactant>
    <organismsDiffer>false</organismsDiffer>
    <experiments>6</experiments>
</comment>
<comment type="interaction">
    <interactant intactId="EBI-79722">
        <id>P68431</id>
    </interactant>
    <interactant intactId="EBI-2349100">
        <id>Q8WXX5</id>
        <label>DNAJC9</label>
    </interactant>
    <organismsDiffer>false</organismsDiffer>
    <experiments>7</experiments>
</comment>
<comment type="interaction">
    <interactant intactId="EBI-79722">
        <id>P68431</id>
    </interactant>
    <interactant intactId="EBI-10968534">
        <id>P50570-2</id>
        <label>DNM2</label>
    </interactant>
    <organismsDiffer>false</organismsDiffer>
    <experiments>3</experiments>
</comment>
<comment type="interaction">
    <interactant intactId="EBI-79722">
        <id>P68431</id>
    </interactant>
    <interactant intactId="EBI-3864120">
        <id>Q8WUP2</id>
        <label>FBLIM1</label>
    </interactant>
    <organismsDiffer>false</organismsDiffer>
    <experiments>3</experiments>
</comment>
<comment type="interaction">
    <interactant intactId="EBI-79722">
        <id>P68431</id>
    </interactant>
    <interactant intactId="EBI-747754">
        <id>P28799</id>
        <label>GRN</label>
    </interactant>
    <organismsDiffer>false</organismsDiffer>
    <experiments>3</experiments>
</comment>
<comment type="interaction">
    <interactant intactId="EBI-79722">
        <id>P68431</id>
    </interactant>
    <interactant intactId="EBI-302023">
        <id>P62805</id>
        <label>H4C9</label>
    </interactant>
    <organismsDiffer>false</organismsDiffer>
    <experiments>7</experiments>
</comment>
<comment type="interaction">
    <interactant intactId="EBI-79722">
        <id>P68431</id>
    </interactant>
    <interactant intactId="EBI-466029">
        <id>P42858</id>
        <label>HTT</label>
    </interactant>
    <organismsDiffer>false</organismsDiffer>
    <experiments>20</experiments>
</comment>
<comment type="interaction">
    <interactant intactId="EBI-79722">
        <id>P68431</id>
    </interactant>
    <interactant intactId="EBI-2866661">
        <id>Q9UNL4</id>
        <label>ING4</label>
    </interactant>
    <organismsDiffer>false</organismsDiffer>
    <experiments>3</experiments>
</comment>
<comment type="interaction">
    <interactant intactId="EBI-79722">
        <id>P68431</id>
    </interactant>
    <interactant intactId="EBI-936709">
        <id>O75164</id>
        <label>KDM4A</label>
    </interactant>
    <organismsDiffer>false</organismsDiffer>
    <experiments>7</experiments>
</comment>
<comment type="interaction">
    <interactant intactId="EBI-79722">
        <id>P68431</id>
    </interactant>
    <interactant intactId="EBI-591370">
        <id>Q03164</id>
        <label>KMT2A</label>
    </interactant>
    <organismsDiffer>false</organismsDiffer>
    <experiments>11</experiments>
</comment>
<comment type="interaction">
    <interactant intactId="EBI-79722">
        <id>P68431</id>
    </interactant>
    <interactant intactId="EBI-1265089">
        <id>Q9Y468</id>
        <label>L3MBTL1</label>
    </interactant>
    <organismsDiffer>false</organismsDiffer>
    <experiments>2</experiments>
</comment>
<comment type="interaction">
    <interactant intactId="EBI-79722">
        <id>P68431</id>
    </interactant>
    <interactant intactId="EBI-21591415">
        <id>P13473-2</id>
        <label>LAMP2</label>
    </interactant>
    <organismsDiffer>false</organismsDiffer>
    <experiments>3</experiments>
</comment>
<comment type="interaction">
    <interactant intactId="EBI-79722">
        <id>P68431</id>
    </interactant>
    <interactant intactId="EBI-374819">
        <id>P49736</id>
        <label>MCM2</label>
    </interactant>
    <organismsDiffer>false</organismsDiffer>
    <experiments>8</experiments>
</comment>
<comment type="interaction">
    <interactant intactId="EBI-79722">
        <id>P68431</id>
    </interactant>
    <interactant intactId="EBI-2653928">
        <id>Q99549</id>
        <label>MPHOSPH8</label>
    </interactant>
    <organismsDiffer>false</organismsDiffer>
    <experiments>5</experiments>
</comment>
<comment type="interaction">
    <interactant intactId="EBI-79722">
        <id>P68431</id>
    </interactant>
    <interactant intactId="EBI-716205">
        <id>P49321</id>
        <label>NASP</label>
    </interactant>
    <organismsDiffer>false</organismsDiffer>
    <experiments>10</experiments>
</comment>
<comment type="interaction">
    <interactant intactId="EBI-79722">
        <id>P68431</id>
    </interactant>
    <interactant intactId="EBI-7038920">
        <id>P49321-2</id>
        <label>NASP</label>
    </interactant>
    <organismsDiffer>false</organismsDiffer>
    <experiments>7</experiments>
</comment>
<comment type="interaction">
    <interactant intactId="EBI-79722">
        <id>P68431</id>
    </interactant>
    <interactant intactId="EBI-988601">
        <id>O43933</id>
        <label>PEX1</label>
    </interactant>
    <organismsDiffer>false</organismsDiffer>
    <experiments>3</experiments>
</comment>
<comment type="interaction">
    <interactant intactId="EBI-79722">
        <id>P68431</id>
    </interactant>
    <interactant intactId="EBI-2560802">
        <id>Q9BVI0</id>
        <label>PHF20</label>
    </interactant>
    <organismsDiffer>false</organismsDiffer>
    <experiments>6</experiments>
</comment>
<comment type="interaction">
    <interactant intactId="EBI-79722">
        <id>P68431</id>
    </interactant>
    <interactant intactId="EBI-2560834">
        <id>A8MW92</id>
        <label>PHF20L1</label>
    </interactant>
    <organismsDiffer>false</organismsDiffer>
    <experiments>2</experiments>
</comment>
<comment type="interaction">
    <interactant intactId="EBI-79722">
        <id>P68431</id>
    </interactant>
    <interactant intactId="EBI-4304679">
        <id>P14618-1</id>
        <label>PKM</label>
    </interactant>
    <organismsDiffer>false</organismsDiffer>
    <experiments>3</experiments>
</comment>
<comment type="interaction">
    <interactant intactId="EBI-79722">
        <id>P68431</id>
    </interactant>
    <interactant intactId="EBI-21251460">
        <id>O60260-5</id>
        <label>PRKN</label>
    </interactant>
    <organismsDiffer>false</organismsDiffer>
    <experiments>3</experiments>
</comment>
<comment type="interaction">
    <interactant intactId="EBI-79722">
        <id>P68431</id>
    </interactant>
    <interactant intactId="EBI-11047108">
        <id>P49768-2</id>
        <label>PSEN1</label>
    </interactant>
    <organismsDiffer>false</organismsDiffer>
    <experiments>6</experiments>
</comment>
<comment type="interaction">
    <interactant intactId="EBI-79722">
        <id>P68431</id>
    </interactant>
    <interactant intactId="EBI-2010251">
        <id>P49810</id>
        <label>PSEN2</label>
    </interactant>
    <organismsDiffer>false</organismsDiffer>
    <experiments>3</experiments>
</comment>
<comment type="interaction">
    <interactant intactId="EBI-79722">
        <id>P68431</id>
    </interactant>
    <interactant intactId="EBI-396669">
        <id>Q9Y3C5</id>
        <label>RNF11</label>
    </interactant>
    <organismsDiffer>false</organismsDiffer>
    <experiments>3</experiments>
</comment>
<comment type="interaction">
    <interactant intactId="EBI-79722">
        <id>P68431</id>
    </interactant>
    <interactant intactId="EBI-1268586">
        <id>Q8WTS6</id>
        <label>SETD7</label>
    </interactant>
    <organismsDiffer>false</organismsDiffer>
    <experiments>3</experiments>
</comment>
<comment type="interaction">
    <interactant intactId="EBI-79722">
        <id>P68431</id>
    </interactant>
    <interactant intactId="EBI-743117">
        <id>Q96ES7</id>
        <label>SGF29</label>
    </interactant>
    <organismsDiffer>false</organismsDiffer>
    <experiments>25</experiments>
</comment>
<comment type="interaction">
    <interactant intactId="EBI-79722">
        <id>P68431</id>
    </interactant>
    <interactant intactId="EBI-2623095">
        <id>Q9Y371</id>
        <label>SH3GLB1</label>
    </interactant>
    <organismsDiffer>false</organismsDiffer>
    <experiments>3</experiments>
</comment>
<comment type="interaction">
    <interactant intactId="EBI-79722">
        <id>P68431</id>
    </interactant>
    <interactant intactId="EBI-358419">
        <id>Q12824</id>
        <label>SMARCB1</label>
    </interactant>
    <organismsDiffer>false</organismsDiffer>
    <experiments>5</experiments>
</comment>
<comment type="interaction">
    <interactant intactId="EBI-79722">
        <id>P68431</id>
    </interactant>
    <interactant intactId="EBI-985879">
        <id>P37840</id>
        <label>SNCA</label>
    </interactant>
    <organismsDiffer>false</organismsDiffer>
    <experiments>3</experiments>
</comment>
<comment type="interaction">
    <interactant intactId="EBI-79722">
        <id>P68431</id>
    </interactant>
    <interactant intactId="EBI-396540">
        <id>Q12888</id>
        <label>TP53BP1</label>
    </interactant>
    <organismsDiffer>false</organismsDiffer>
    <experiments>5</experiments>
</comment>
<comment type="interaction">
    <interactant intactId="EBI-79722">
        <id>P68431</id>
    </interactant>
    <interactant intactId="EBI-711909">
        <id>P02766</id>
        <label>TTR</label>
    </interactant>
    <organismsDiffer>false</organismsDiffer>
    <experiments>3</experiments>
</comment>
<comment type="interaction">
    <interactant intactId="EBI-79722">
        <id>P68431</id>
    </interactant>
    <interactant intactId="EBI-540834">
        <id>P61964</id>
        <label>WDR5</label>
    </interactant>
    <organismsDiffer>false</organismsDiffer>
    <experiments>11</experiments>
</comment>
<comment type="interaction">
    <interactant intactId="EBI-79722">
        <id>P68431</id>
    </interactant>
    <interactant intactId="EBI-720609">
        <id>O76024</id>
        <label>WFS1</label>
    </interactant>
    <organismsDiffer>false</organismsDiffer>
    <experiments>3</experiments>
</comment>
<comment type="interaction">
    <interactant intactId="EBI-79722">
        <id>P68431</id>
    </interactant>
    <interactant intactId="EBI-347088">
        <id>P63104</id>
        <label>YWHAZ</label>
    </interactant>
    <organismsDiffer>false</organismsDiffer>
    <experiments>3</experiments>
</comment>
<comment type="interaction">
    <interactant intactId="EBI-79722">
        <id>P68431</id>
    </interactant>
    <interactant intactId="EBI-9319">
        <id>P38991</id>
        <label>IPL1</label>
    </interactant>
    <organismsDiffer>true</organismsDiffer>
    <experiments>2</experiments>
</comment>
<comment type="interaction">
    <interactant intactId="EBI-79722">
        <id>P68431</id>
    </interactant>
    <interactant intactId="EBI-149916">
        <id>Q7JXA8</id>
        <label>rhi</label>
    </interactant>
    <organismsDiffer>true</organismsDiffer>
    <experiments>2</experiments>
</comment>
<comment type="interaction">
    <interactant intactId="EBI-79722">
        <id>P68431</id>
    </interactant>
    <interactant intactId="EBI-21678">
        <id>P25554</id>
        <label>SGF29</label>
    </interactant>
    <organismsDiffer>true</organismsDiffer>
    <experiments>11</experiments>
</comment>
<comment type="interaction">
    <interactant intactId="EBI-79722">
        <id>P68431</id>
    </interactant>
    <interactant intactId="EBI-647813">
        <id>Q8R5C8</id>
        <label>Zmynd11</label>
    </interactant>
    <organismsDiffer>true</organismsDiffer>
    <experiments>4</experiments>
</comment>
<comment type="subcellular location">
    <subcellularLocation>
        <location>Nucleus</location>
    </subcellularLocation>
    <subcellularLocation>
        <location>Chromosome</location>
    </subcellularLocation>
</comment>
<comment type="developmental stage">
    <text>Expressed during S phase, then expression strongly decreases as cell division slows down during the process of differentiation.</text>
</comment>
<comment type="PTM">
    <text evidence="7 10 11 16 18 20 21 23 26 32 42">Acetylation is generally linked to gene activation. Acetylation on Lys-10 (H3K9ac) impairs methylation at Arg-9 (H3R8me2s). Acetylation on Lys-19 (H3K18ac) and Lys-24 (H3K24ac) favors methylation at Arg-18 (H3R17me). Acetylation at Lys-123 (H3K122ac) by EP300/p300 plays a central role in chromatin structure: localizes at the surface of the histone octamer and stimulates transcription, possibly by promoting nucleosome instability.</text>
</comment>
<comment type="PTM">
    <text evidence="10 11 21 22">Citrullination at Arg-9 (H3R8ci) and/or Arg-18 (H3R17ci) by PADI4 impairs methylation and represses transcription.</text>
</comment>
<comment type="PTM">
    <text evidence="10 11 18 20 21 26 27 29 30">Asymmetric dimethylation at Arg-18 (H3R17me2a) by CARM1 is linked to gene activation. Symmetric dimethylation at Arg-9 (H3R8me2s) by PRMT5 is linked to gene repression. Asymmetric dimethylation at Arg-3 (H3R2me2a) by PRMT6 is linked to gene repression and is mutually exclusive with H3 Lys-5 methylation (H3K4me2 and H3K4me3). H3R2me2a is present at the 3' of genes regardless of their transcription state and is enriched on inactive promoters, while it is absent on active promoters.</text>
</comment>
<comment type="PTM">
    <text evidence="6 7 8 9 12 13 15 16 18 20 21 23 25 26 39">Methylation at Lys-5 (H3K4me), Lys-37 (H3K36me) and Lys-80 (H3K79me) are linked to gene activation. Methylation at Lys-5 (H3K4me) facilitates subsequent acetylation of H3 and H4. Methylation at Lys-80 (H3K79me) is associated with DNA double-strand break (DSB) responses and is a specific target for TP53BP1. Methylation at Lys-10 (H3K9me) and Lys-28 (H3K27me) are linked to gene repression. Methylation at Lys-10 (H3K9me) is a specific target for HP1 proteins (CBX1, CBX3 and CBX5) and prevents subsequent phosphorylation at Ser-11 (H3S10ph) and acetylation of H3 and H4. Methylation at Lys-5 (H3K4me) and Lys-80 (H3K79me) require preliminary monoubiquitination of H2B at 'Lys-120'. Methylation at Lys-10 (H3K9me) and Lys-28 (H3K27me) are enriched in inactive X chromosome chromatin. Monomethylation at Lys-57 (H3K56me1) by EHMT2/G9A in G1 phase promotes interaction with PCNA and is required for DNA replication.</text>
</comment>
<comment type="PTM">
    <text evidence="6 7 8 9 13 14 16 18 20 21 23 26 28 31 33 34 35 41 57">Phosphorylated at Thr-4 (H3T3ph) by VRK1 (PubMed:31527692). Phosphorylated at Thr-4 (H3T3ph) by HASPIN during prophase and dephosphorylated during anaphase (PubMed:15681610, PubMed:16185088). Phosphorylation at Ser-11 (H3S10ph) by AURKB is crucial for chromosome condensation and cell-cycle progression during mitosis and meiosis. In addition phosphorylation at Ser-11 (H3S10ph) by RPS6KA4 and RPS6KA5 is important during interphase because it enables the transcription of genes following external stimulation, like mitogens, stress, growth factors or UV irradiation and result in the activation of genes, such as c-fos and c-jun. Phosphorylation at Ser-11 (H3S10ph), which is linked to gene activation, prevents methylation at Lys-10 (H3K9me) but facilitates acetylation of H3 and H4. Phosphorylation at Ser-11 (H3S10ph) by AURKB mediates the dissociation of HP1 proteins (CBX1, CBX3 and CBX5) from heterochromatin. Phosphorylation at Ser-11 (H3S10ph) is also an essential regulatory mechanism for neoplastic cell transformation. Phosphorylated at Ser-29 (H3S28ph) by MAP3K20 isoform 1, RPS6KA5 or AURKB during mitosis or upon ultraviolet B irradiation. Phosphorylation at Thr-7 (H3T6ph) by PRKCB is a specific tag for epigenetic transcriptional activation that prevents demethylation of Lys-5 (H3K4me) by LSD1/KDM1A. At centromeres, specifically phosphorylated at Thr-12 (H3T11ph) from prophase to early anaphase, by DAPK3 and PKN1. Phosphorylation at Thr-12 (H3T11ph) by PKN1 or isoform M2 of PKM (PKM2) is a specific tag for epigenetic transcriptional activation that promotes demethylation of Lys-10 (H3K9me) by KDM4C/JMJD2C. Phosphorylation at Thr-12 (H3T11ph) by chromatin-associated CHEK1 regulates the transcription of cell cycle regulatory genes by modulating acetylation of Lys-10 (H3K9ac). Phosphorylation at Tyr-42 (H3Y41ph) by JAK2 promotes exclusion of CBX5 (HP1 alpha) from chromatin.</text>
</comment>
<comment type="PTM">
    <text evidence="3 24">Monoubiquitinated by RAG1 in lymphoid cells, monoubiquitination is required for V(D)J recombination (By similarity). Ubiquitinated by the CUL4-DDB-RBX1 complex in response to ultraviolet irradiation. This may weaken the interaction between histones and DNA and facilitate DNA accessibility to repair proteins.</text>
</comment>
<comment type="PTM">
    <text evidence="49">Lysine deamination at Lys-5 (H3K4all) to form allysine is mediated by LOXL2. Allysine formation by LOXL2 only takes place on H3K4me3 and results in gene repression.</text>
</comment>
<comment type="PTM">
    <text evidence="36">Crotonylation (Kcr) is specifically present in male germ cells and marks testis-specific genes in post-meiotic cells, including X-linked genes that escape sex chromosome inactivation in haploid cells. Crotonylation marks active promoters and enhancers and confers resistance to transcriptional repressors. It is also associated with post-meiotically activated genes on autosomes.</text>
</comment>
<comment type="PTM">
    <text evidence="1">Butyrylation of histones marks active promoters and competes with histone acetylation. It is present during late spermatogenesis.</text>
</comment>
<comment type="PTM">
    <text evidence="48 53">Succinylation at Lys-80 (H3K79succ) by KAT2A takes place with a maximum frequency around the transcription start sites of genes (PubMed:29211711). It gives a specific tag for epigenetic transcription activation (PubMed:29211711). Desuccinylation at Lys-123 (H3K122succ) by SIRT7 in response to DNA damage promotes chromatin condensation and double-strand breaks (DSBs) repair (PubMed:27436229).</text>
</comment>
<comment type="PTM">
    <text evidence="55 62">Serine ADP-ribosylation by PARP1 or PARP2 constitutes the primary form of ADP-ribosylation of proteins in response to DNA damage (PubMed:30257210, PubMed:34874266). Serine ADP-ribosylation at Ser-11 (H3S10ADPr) promotes recruitment of CHD1L (PubMed:34874266). H3S10ADPr is mutually exclusive with phosphorylation at Ser-11 (H3S10ph) and impairs acetylation at Lys-10 (H3K9ac) (PubMed:30257210).</text>
</comment>
<comment type="PTM">
    <text evidence="56">Serotonylated by TGM2 at Gln-6 (H3Q5ser) during serotonergic neuron differentiation (PubMed:30867594). H3Q5ser is associated with trimethylation of Lys-5 (H3K4me3) and enhances general transcription factor IID (TFIID) complex-binding to H3K4me3, thereby facilitating transcription (PubMed:30867594).</text>
</comment>
<comment type="PTM">
    <text evidence="3 60">Dopaminylated by TGM2 at Gln-6 (H3Q5dop) in ventral tegmental area (VTA) neurons (PubMed:32273471). H3Q5dop mediates neurotransmission-independent role of nuclear dopamine by regulating relapse-related transcriptional plasticity in the reward system (By similarity).</text>
</comment>
<comment type="PTM">
    <text evidence="59">Lactylated in macrophages by EP300/P300 by using lactoyl-CoA directly derived from endogenous or exogenous lactate, leading to stimulates gene transcription.</text>
</comment>
<comment type="disease" evidence="38">
    <disease id="DI-02566">
        <name>Glioma</name>
        <acronym>GLM</acronym>
        <description>Gliomas are benign or malignant central nervous system neoplasms derived from glial cells. They comprise astrocytomas and glioblastoma multiforme that are derived from astrocytes, oligodendrogliomas derived from oligodendrocytes and ependymomas derived from ependymocytes.</description>
        <dbReference type="MIM" id="137800"/>
    </disease>
    <text evidence="38 43">The gene represented in this entry is involved in disease pathogenesis. HIST1H3B mutations affecting residue Lys-28 involved in post-translational modifications of histone H3.1 are recurrent in malignant, aggressive gliomas including pediatric non-brain stem glioblastoma and diffuse intrinsic pontine glioma (DIPG) (PubMed:22286216). The mechanism through which mutations lead to tumorigenesis involves altered histone methylation, impaired regulation of Polycomb repressive complex 2 (PRC2) activity, and aberrant epigenetic regulation of gene expression (PubMed:23603901).</text>
</comment>
<comment type="disease">
    <text evidence="47">HIST1H3B or HIST1H3C mutations affecting residue Lys-37 of histone H3.1 are involved in the pathogenesis of pediatric undifferentiated soft tissue sarcomas. The mechanism through which mutations lead to tumorigenesis involves altered histones methylation with gain of global H3K27 methylation, altered Polycomb repressive complex 1 (PRC1) activity, aberrant epigenetic regulation of gene expression and impaired differentiation of mesenchimal progenitor cells.</text>
</comment>
<comment type="miscellaneous">
    <text>This histone is only present in mammals and is enriched in acetylation of Lys-15 and dimethylation of Lys-10 (H3K9me2).</text>
</comment>
<comment type="similarity">
    <text evidence="64">Belongs to the histone H3 family.</text>
</comment>
<comment type="caution">
    <text evidence="49 65 66">The original paper reporting lysine deamination at Lys-5 by LOXL2 has been retracted due to inappropriate manipulation of figure data (PubMed:22483618, PubMed:27392148). However, this modification was confirmed in a subsequent publication (PubMed:27735137).</text>
</comment>
<proteinExistence type="evidence at protein level"/>
<evidence type="ECO:0000250" key="1">
    <source>
        <dbReference type="UniProtKB" id="P68433"/>
    </source>
</evidence>
<evidence type="ECO:0000250" key="2">
    <source>
        <dbReference type="UniProtKB" id="P84243"/>
    </source>
</evidence>
<evidence type="ECO:0000250" key="3">
    <source>
        <dbReference type="UniProtKB" id="Q6LED0"/>
    </source>
</evidence>
<evidence type="ECO:0000250" key="4">
    <source>
        <dbReference type="UniProtKB" id="Q71DI3"/>
    </source>
</evidence>
<evidence type="ECO:0000256" key="5">
    <source>
        <dbReference type="SAM" id="MobiDB-lite"/>
    </source>
</evidence>
<evidence type="ECO:0000269" key="6">
    <source>
    </source>
</evidence>
<evidence type="ECO:0000269" key="7">
    <source>
    </source>
</evidence>
<evidence type="ECO:0000269" key="8">
    <source>
    </source>
</evidence>
<evidence type="ECO:0000269" key="9">
    <source>
    </source>
</evidence>
<evidence type="ECO:0000269" key="10">
    <source>
    </source>
</evidence>
<evidence type="ECO:0000269" key="11">
    <source>
    </source>
</evidence>
<evidence type="ECO:0000269" key="12">
    <source>
    </source>
</evidence>
<evidence type="ECO:0000269" key="13">
    <source>
    </source>
</evidence>
<evidence type="ECO:0000269" key="14">
    <source>
    </source>
</evidence>
<evidence type="ECO:0000269" key="15">
    <source>
    </source>
</evidence>
<evidence type="ECO:0000269" key="16">
    <source>
    </source>
</evidence>
<evidence type="ECO:0000269" key="17">
    <source>
    </source>
</evidence>
<evidence type="ECO:0000269" key="18">
    <source>
    </source>
</evidence>
<evidence type="ECO:0000269" key="19">
    <source>
    </source>
</evidence>
<evidence type="ECO:0000269" key="20">
    <source>
    </source>
</evidence>
<evidence type="ECO:0000269" key="21">
    <source>
    </source>
</evidence>
<evidence type="ECO:0000269" key="22">
    <source>
    </source>
</evidence>
<evidence type="ECO:0000269" key="23">
    <source>
    </source>
</evidence>
<evidence type="ECO:0000269" key="24">
    <source>
    </source>
</evidence>
<evidence type="ECO:0000269" key="25">
    <source>
    </source>
</evidence>
<evidence type="ECO:0000269" key="26">
    <source>
    </source>
</evidence>
<evidence type="ECO:0000269" key="27">
    <source>
    </source>
</evidence>
<evidence type="ECO:0000269" key="28">
    <source>
    </source>
</evidence>
<evidence type="ECO:0000269" key="29">
    <source>
    </source>
</evidence>
<evidence type="ECO:0000269" key="30">
    <source>
    </source>
</evidence>
<evidence type="ECO:0000269" key="31">
    <source>
    </source>
</evidence>
<evidence type="ECO:0000269" key="32">
    <source>
    </source>
</evidence>
<evidence type="ECO:0000269" key="33">
    <source>
    </source>
</evidence>
<evidence type="ECO:0000269" key="34">
    <source>
    </source>
</evidence>
<evidence type="ECO:0000269" key="35">
    <source>
    </source>
</evidence>
<evidence type="ECO:0000269" key="36">
    <source>
    </source>
</evidence>
<evidence type="ECO:0000269" key="37">
    <source>
    </source>
</evidence>
<evidence type="ECO:0000269" key="38">
    <source>
    </source>
</evidence>
<evidence type="ECO:0000269" key="39">
    <source>
    </source>
</evidence>
<evidence type="ECO:0000269" key="40">
    <source>
    </source>
</evidence>
<evidence type="ECO:0000269" key="41">
    <source>
    </source>
</evidence>
<evidence type="ECO:0000269" key="42">
    <source>
    </source>
</evidence>
<evidence type="ECO:0000269" key="43">
    <source>
    </source>
</evidence>
<evidence type="ECO:0000269" key="44">
    <source>
    </source>
</evidence>
<evidence type="ECO:0000269" key="45">
    <source>
    </source>
</evidence>
<evidence type="ECO:0000269" key="46">
    <source>
    </source>
</evidence>
<evidence type="ECO:0000269" key="47">
    <source>
    </source>
</evidence>
<evidence type="ECO:0000269" key="48">
    <source>
    </source>
</evidence>
<evidence type="ECO:0000269" key="49">
    <source>
    </source>
</evidence>
<evidence type="ECO:0000269" key="50">
    <source>
    </source>
</evidence>
<evidence type="ECO:0000269" key="51">
    <source>
    </source>
</evidence>
<evidence type="ECO:0000269" key="52">
    <source>
    </source>
</evidence>
<evidence type="ECO:0000269" key="53">
    <source>
    </source>
</evidence>
<evidence type="ECO:0000269" key="54">
    <source>
    </source>
</evidence>
<evidence type="ECO:0000269" key="55">
    <source>
    </source>
</evidence>
<evidence type="ECO:0000269" key="56">
    <source>
    </source>
</evidence>
<evidence type="ECO:0000269" key="57">
    <source>
    </source>
</evidence>
<evidence type="ECO:0000269" key="58">
    <source>
    </source>
</evidence>
<evidence type="ECO:0000269" key="59">
    <source>
    </source>
</evidence>
<evidence type="ECO:0000269" key="60">
    <source>
    </source>
</evidence>
<evidence type="ECO:0000269" key="61">
    <source>
    </source>
</evidence>
<evidence type="ECO:0000269" key="62">
    <source>
    </source>
</evidence>
<evidence type="ECO:0000269" key="63">
    <source>
    </source>
</evidence>
<evidence type="ECO:0000305" key="64"/>
<evidence type="ECO:0000305" key="65">
    <source>
    </source>
</evidence>
<evidence type="ECO:0000305" key="66">
    <source>
    </source>
</evidence>
<evidence type="ECO:0000312" key="67">
    <source>
        <dbReference type="HGNC" id="HGNC:4766"/>
    </source>
</evidence>
<evidence type="ECO:0000312" key="68">
    <source>
        <dbReference type="HGNC" id="HGNC:4767"/>
    </source>
</evidence>
<evidence type="ECO:0000312" key="69">
    <source>
        <dbReference type="HGNC" id="HGNC:4768"/>
    </source>
</evidence>
<evidence type="ECO:0000312" key="70">
    <source>
        <dbReference type="HGNC" id="HGNC:4769"/>
    </source>
</evidence>
<evidence type="ECO:0000312" key="71">
    <source>
        <dbReference type="HGNC" id="HGNC:4771"/>
    </source>
</evidence>
<evidence type="ECO:0000312" key="72">
    <source>
        <dbReference type="HGNC" id="HGNC:4772"/>
    </source>
</evidence>
<evidence type="ECO:0000312" key="73">
    <source>
        <dbReference type="HGNC" id="HGNC:4773"/>
    </source>
</evidence>
<evidence type="ECO:0000312" key="74">
    <source>
        <dbReference type="HGNC" id="HGNC:4774"/>
    </source>
</evidence>
<evidence type="ECO:0000312" key="75">
    <source>
        <dbReference type="HGNC" id="HGNC:4775"/>
    </source>
</evidence>
<evidence type="ECO:0000312" key="76">
    <source>
        <dbReference type="HGNC" id="HGNC:4776"/>
    </source>
</evidence>
<evidence type="ECO:0007744" key="77">
    <source>
        <dbReference type="PDB" id="6USJ"/>
    </source>
</evidence>
<evidence type="ECO:0007744" key="78">
    <source>
        <dbReference type="PDB" id="7C0M"/>
    </source>
</evidence>
<evidence type="ECO:0007744" key="79">
    <source>
        <dbReference type="PDB" id="7CCQ"/>
    </source>
</evidence>
<evidence type="ECO:0007744" key="80">
    <source>
        <dbReference type="PDB" id="7CCR"/>
    </source>
</evidence>
<evidence type="ECO:0007829" key="81">
    <source>
        <dbReference type="PDB" id="4X3K"/>
    </source>
</evidence>
<evidence type="ECO:0007829" key="82">
    <source>
        <dbReference type="PDB" id="5C3I"/>
    </source>
</evidence>
<evidence type="ECO:0007829" key="83">
    <source>
        <dbReference type="PDB" id="5SVY"/>
    </source>
</evidence>
<evidence type="ECO:0007829" key="84">
    <source>
        <dbReference type="PDB" id="5T1I"/>
    </source>
</evidence>
<evidence type="ECO:0007829" key="85">
    <source>
        <dbReference type="PDB" id="5V22"/>
    </source>
</evidence>
<evidence type="ECO:0007829" key="86">
    <source>
        <dbReference type="PDB" id="5VA6"/>
    </source>
</evidence>
<evidence type="ECO:0007829" key="87">
    <source>
        <dbReference type="PDB" id="5WVO"/>
    </source>
</evidence>
<evidence type="ECO:0007829" key="88">
    <source>
        <dbReference type="PDB" id="6IPU"/>
    </source>
</evidence>
<evidence type="ECO:0007829" key="89">
    <source>
        <dbReference type="PDB" id="7VZ4"/>
    </source>
</evidence>
<gene>
    <name evidence="67" type="primary">H3C1</name>
    <name type="synonym">H3FA</name>
    <name type="synonym">HIST1H3A</name>
</gene>
<gene>
    <name evidence="76" type="primary">H3C2</name>
    <name type="synonym">H3FL</name>
    <name type="synonym">HIST1H3B</name>
</gene>
<gene>
    <name evidence="69" type="primary">H3C3</name>
    <name type="synonym">H3FC HIST1H3C</name>
</gene>
<gene>
    <name evidence="68" type="primary">H3C4</name>
    <name type="synonym">H3FB</name>
    <name type="synonym">HIST1H3D</name>
</gene>
<gene>
    <name evidence="70" type="primary">H3C6</name>
    <name type="synonym">H3FD</name>
    <name type="synonym">HIST1H3E</name>
</gene>
<gene>
    <name evidence="73" type="primary">H3C7</name>
    <name type="synonym">H3FI</name>
    <name type="synonym">HIST1H3F</name>
</gene>
<gene>
    <name evidence="72" type="primary">H3C8</name>
    <name type="synonym">H3FH</name>
    <name type="synonym">HIST1H3G</name>
</gene>
<gene>
    <name evidence="75" type="primary">H3C10</name>
    <name type="synonym">H3FK</name>
    <name type="synonym">HIST1H3H</name>
</gene>
<gene>
    <name evidence="71" type="primary">H3C11</name>
    <name type="synonym">H3FF</name>
    <name type="synonym">HIST1H3I</name>
</gene>
<gene>
    <name evidence="74" type="primary">H3C12</name>
    <name type="synonym">H3FJ</name>
    <name type="synonym">HIST1H3J</name>
</gene>
<accession>P68431</accession>
<accession>A0PJT7</accession>
<accession>A5PLR1</accession>
<accession>P02295</accession>
<accession>P02296</accession>
<accession>P16106</accession>
<accession>Q6ISV8</accession>
<accession>Q6NWP8</accession>
<accession>Q6NWP9</accession>
<accession>Q6NXU4</accession>
<accession>Q71DJ3</accession>
<accession>Q93081</accession>
<name>H31_HUMAN</name>
<feature type="initiator methionine" description="Removed" evidence="16">
    <location>
        <position position="1"/>
    </location>
</feature>
<feature type="chain" id="PRO_0000221245" description="Histone H3.1">
    <location>
        <begin position="2"/>
        <end position="136"/>
    </location>
</feature>
<feature type="region of interest" description="Disordered" evidence="5">
    <location>
        <begin position="1"/>
        <end position="43"/>
    </location>
</feature>
<feature type="modified residue" description="Asymmetric dimethylarginine; by PRMT6; alternate" evidence="27 29 30">
    <location>
        <position position="3"/>
    </location>
</feature>
<feature type="modified residue" description="Citrulline; alternate" evidence="22">
    <location>
        <position position="3"/>
    </location>
</feature>
<feature type="modified residue" description="Phosphothreonine; by HASPIN and VRK1" evidence="13 16 57">
    <location>
        <position position="4"/>
    </location>
</feature>
<feature type="modified residue" description="Allysine; alternate" evidence="49">
    <location>
        <position position="5"/>
    </location>
</feature>
<feature type="modified residue" description="N6,N6,N6-trimethyllysine; alternate" evidence="18 20 26">
    <location>
        <position position="5"/>
    </location>
</feature>
<feature type="modified residue" description="N6,N6-dimethyllysine; alternate" evidence="18 20 26">
    <location>
        <position position="5"/>
    </location>
</feature>
<feature type="modified residue" description="N6-(2-hydroxyisobutyryl)lysine; alternate" evidence="44">
    <location>
        <position position="5"/>
    </location>
</feature>
<feature type="modified residue" description="N6-(beta-hydroxybutyryl)lysine; alternate" evidence="46">
    <location>
        <position position="5"/>
    </location>
</feature>
<feature type="modified residue" description="N6-acetyllysine; alternate" evidence="26">
    <location>
        <position position="5"/>
    </location>
</feature>
<feature type="modified residue" description="N6-crotonyllysine; alternate" evidence="36 52">
    <location>
        <position position="5"/>
    </location>
</feature>
<feature type="modified residue" description="N6-methyllysine; alternate" evidence="18 20 26">
    <location>
        <position position="5"/>
    </location>
</feature>
<feature type="modified residue" description="5-glutamyl dopamine; alternate" evidence="60">
    <location>
        <position position="6"/>
    </location>
</feature>
<feature type="modified residue" description="5-glutamyl serotonin; alternate" evidence="56">
    <location>
        <position position="6"/>
    </location>
</feature>
<feature type="modified residue" description="Phosphothreonine; by PKC" evidence="34">
    <location>
        <position position="7"/>
    </location>
</feature>
<feature type="modified residue" description="Citrulline; alternate" evidence="10 22">
    <location>
        <position position="9"/>
    </location>
</feature>
<feature type="modified residue" description="Symmetric dimethylarginine; by PRMT5; alternate" evidence="1">
    <location>
        <position position="9"/>
    </location>
</feature>
<feature type="modified residue" description="N6,N6,N6-trimethyllysine; alternate" evidence="7 16 18 20 26">
    <location>
        <position position="10"/>
    </location>
</feature>
<feature type="modified residue" description="N6,N6-dimethyllysine; alternate" evidence="7 16 18 20 26">
    <location>
        <position position="10"/>
    </location>
</feature>
<feature type="modified residue" description="N6-(2-hydroxyisobutyryl)lysine; alternate" evidence="44">
    <location>
        <position position="10"/>
    </location>
</feature>
<feature type="modified residue" description="N6-(beta-hydroxybutyryl)lysine; alternate" evidence="46">
    <location>
        <position position="10"/>
    </location>
</feature>
<feature type="modified residue" description="N6-acetyllysine; alternate" evidence="16 18 20 21 23 26">
    <location>
        <position position="10"/>
    </location>
</feature>
<feature type="modified residue" description="N6-butyryllysine; alternate" evidence="45">
    <location>
        <position position="10"/>
    </location>
</feature>
<feature type="modified residue" description="N6-crotonyllysine; alternate" evidence="36 52">
    <location>
        <position position="10"/>
    </location>
</feature>
<feature type="modified residue" description="N6-lactoyllysine; alternate" evidence="59">
    <location>
        <position position="10"/>
    </location>
</feature>
<feature type="modified residue" description="N6-methyllysine; alternate" evidence="7 16 18 20 26">
    <location>
        <position position="10"/>
    </location>
</feature>
<feature type="modified residue" description="ADP-ribosylserine; alternate" evidence="51 54 62">
    <location>
        <position position="11"/>
    </location>
</feature>
<feature type="modified residue" description="Phosphoserine; alternate; by AURKB, AURKC, RPS6KA3, RPS6KA4 and RPS6KA5" evidence="6 8 9 13 16 20">
    <location>
        <position position="11"/>
    </location>
</feature>
<feature type="modified residue" description="Phosphothreonine; by PKC and CHEK1" evidence="9 28 31 41">
    <location>
        <position position="12"/>
    </location>
</feature>
<feature type="modified residue" description="N6-(2-hydroxyisobutyryl)lysine; alternate" evidence="44">
    <location>
        <position position="15"/>
    </location>
</feature>
<feature type="modified residue" description="N6-(beta-hydroxybutyryl)lysine; alternate" evidence="46">
    <location>
        <position position="15"/>
    </location>
</feature>
<feature type="modified residue" description="N6-acetyllysine; alternate" evidence="16 18 20 21 23 26">
    <location>
        <position position="15"/>
    </location>
</feature>
<feature type="modified residue" description="N6-glutaryllysine; alternate" evidence="58">
    <location>
        <position position="15"/>
    </location>
</feature>
<feature type="modified residue" description="N6-lactoyllysine; alternate" evidence="1">
    <location>
        <position position="15"/>
    </location>
</feature>
<feature type="modified residue" description="N6-succinyllysine; alternate" evidence="40">
    <location>
        <position position="15"/>
    </location>
</feature>
<feature type="modified residue" description="Asymmetric dimethylarginine; by CARM1; alternate" evidence="10 11 21">
    <location>
        <position position="18"/>
    </location>
</feature>
<feature type="modified residue" description="Citrulline; alternate" evidence="10 21 22">
    <location>
        <position position="18"/>
    </location>
</feature>
<feature type="modified residue" description="N6-(2-hydroxyisobutyryl)lysine; alternate" evidence="44">
    <location>
        <position position="19"/>
    </location>
</feature>
<feature type="modified residue" description="N6-(beta-hydroxybutyryl)lysine; alternate" evidence="46">
    <location>
        <position position="19"/>
    </location>
</feature>
<feature type="modified residue" description="N6-acetyllysine; alternate" evidence="18 23 26 63">
    <location>
        <position position="19"/>
    </location>
</feature>
<feature type="modified residue" description="N6-butyryllysine; alternate" evidence="45">
    <location>
        <position position="19"/>
    </location>
</feature>
<feature type="modified residue" description="N6-crotonyllysine; alternate" evidence="36">
    <location>
        <position position="19"/>
    </location>
</feature>
<feature type="modified residue" description="N6-glutaryllysine; alternate" evidence="58">
    <location>
        <position position="19"/>
    </location>
</feature>
<feature type="modified residue" description="N6-lactoyllysine; alternate" evidence="59">
    <location>
        <position position="19"/>
    </location>
</feature>
<feature type="modified residue" description="N6-methyllysine; alternate" evidence="18 26">
    <location>
        <position position="19"/>
    </location>
</feature>
<feature type="modified residue" description="N6-(2-hydroxyisobutyryl)lysine; alternate" evidence="44">
    <location>
        <position position="24"/>
    </location>
</feature>
<feature type="modified residue" description="N6-(beta-hydroxybutyryl)lysine; alternate" evidence="46">
    <location>
        <position position="24"/>
    </location>
</feature>
<feature type="modified residue" description="N6-acetyllysine; alternate" evidence="18 20 23 26">
    <location>
        <position position="24"/>
    </location>
</feature>
<feature type="modified residue" description="N6-butyryllysine; alternate" evidence="45">
    <location>
        <position position="24"/>
    </location>
</feature>
<feature type="modified residue" description="N6-crotonyllysine; alternate" evidence="36 52">
    <location>
        <position position="24"/>
    </location>
</feature>
<feature type="modified residue" description="N6-glutaryllysine; alternate" evidence="58">
    <location>
        <position position="24"/>
    </location>
</feature>
<feature type="modified residue" description="N6-lactoyllysine; alternate" evidence="59">
    <location>
        <position position="24"/>
    </location>
</feature>
<feature type="modified residue" description="N6-methyllysine; alternate" evidence="26">
    <location>
        <position position="24"/>
    </location>
</feature>
<feature type="modified residue" description="Citrulline" evidence="22">
    <location>
        <position position="27"/>
    </location>
</feature>
<feature type="modified residue" description="N6,N6,N6-trimethyllysine; alternate" evidence="16 18 23 26">
    <location>
        <position position="28"/>
    </location>
</feature>
<feature type="modified residue" description="N6,N6-dimethyllysine; alternate" evidence="16 18 23 26">
    <location>
        <position position="28"/>
    </location>
</feature>
<feature type="modified residue" description="N6-(2-hydroxyisobutyryl)lysine; alternate" evidence="44">
    <location>
        <position position="28"/>
    </location>
</feature>
<feature type="modified residue" description="N6-(beta-hydroxybutyryl)lysine; alternate" evidence="46">
    <location>
        <position position="28"/>
    </location>
</feature>
<feature type="modified residue" description="N6-acetyllysine; alternate" evidence="23 26">
    <location>
        <position position="28"/>
    </location>
</feature>
<feature type="modified residue" description="N6-crotonyllysine; alternate" evidence="36">
    <location>
        <position position="28"/>
    </location>
</feature>
<feature type="modified residue" description="N6-glutaryllysine; alternate" evidence="58">
    <location>
        <position position="28"/>
    </location>
</feature>
<feature type="modified residue" description="N6-lactoyllysine; alternate" evidence="59">
    <location>
        <position position="28"/>
    </location>
</feature>
<feature type="modified residue" description="N6-methyllysine; alternate" evidence="16 18 23 26">
    <location>
        <position position="28"/>
    </location>
</feature>
<feature type="modified residue" description="ADP-ribosylserine; alternate" evidence="51 54">
    <location>
        <position position="29"/>
    </location>
</feature>
<feature type="modified residue" description="Phosphoserine; alternate; by AURKB, AURKC and RPS6KA5" evidence="6 8 13 14 16 20">
    <location>
        <position position="29"/>
    </location>
</feature>
<feature type="modified residue" description="N6,N6,N6-trimethyllysine; alternate" evidence="15 16 18 23 26">
    <location>
        <position position="37"/>
    </location>
</feature>
<feature type="modified residue" description="N6,N6-dimethyllysine; alternate" evidence="15 16 18 23 26">
    <location>
        <position position="37"/>
    </location>
</feature>
<feature type="modified residue" description="N6-(2-hydroxyisobutyryl)lysine; alternate" evidence="44">
    <location>
        <position position="37"/>
    </location>
</feature>
<feature type="modified residue" description="N6-acetyllysine; alternate" evidence="25 26">
    <location>
        <position position="37"/>
    </location>
</feature>
<feature type="modified residue" description="N6-methyllysine; alternate" evidence="15 16 18 23 26">
    <location>
        <position position="37"/>
    </location>
</feature>
<feature type="modified residue" description="N6-methyllysine" evidence="15">
    <location>
        <position position="38"/>
    </location>
</feature>
<feature type="modified residue" description="Phosphotyrosine" evidence="33">
    <location>
        <position position="42"/>
    </location>
</feature>
<feature type="modified residue" description="N6,N6,N6-trimethyllysine; alternate" evidence="26 39">
    <location>
        <position position="57"/>
    </location>
</feature>
<feature type="modified residue" description="N6-(2-hydroxyisobutyryl)lysine; alternate" evidence="44">
    <location>
        <position position="57"/>
    </location>
</feature>
<feature type="modified residue" description="N6-(beta-hydroxybutyryl)lysine; alternate" evidence="46">
    <location>
        <position position="57"/>
    </location>
</feature>
<feature type="modified residue" description="N6-acetyllysine; alternate" evidence="26">
    <location>
        <position position="57"/>
    </location>
</feature>
<feature type="modified residue" description="N6-crotonyllysine; alternate" evidence="36">
    <location>
        <position position="57"/>
    </location>
</feature>
<feature type="modified residue" description="N6-glutaryllysine; alternate" evidence="58">
    <location>
        <position position="57"/>
    </location>
</feature>
<feature type="modified residue" description="N6-lactoyllysine; alternate" evidence="1">
    <location>
        <position position="57"/>
    </location>
</feature>
<feature type="modified residue" description="N6-methyllysine; by EHMT2; alternate" evidence="26 39">
    <location>
        <position position="57"/>
    </location>
</feature>
<feature type="modified residue" description="N6-succinyllysine; alternate" evidence="40">
    <location>
        <position position="57"/>
    </location>
</feature>
<feature type="modified residue" description="Phosphoserine" evidence="35">
    <location>
        <position position="58"/>
    </location>
</feature>
<feature type="modified residue" description="N6-(2-hydroxyisobutyryl)lysine; alternate" evidence="44">
    <location>
        <position position="65"/>
    </location>
</feature>
<feature type="modified residue" description="N6-methyllysine; alternate" evidence="18 26">
    <location>
        <position position="65"/>
    </location>
</feature>
<feature type="modified residue" description="N6,N6,N6-trimethyllysine; alternate" evidence="1">
    <location>
        <position position="80"/>
    </location>
</feature>
<feature type="modified residue" description="N6,N6-dimethyllysine; alternate" evidence="12 18 23 26">
    <location>
        <position position="80"/>
    </location>
</feature>
<feature type="modified residue" description="N6-(2-hydroxyisobutyryl)lysine; alternate" evidence="44">
    <location>
        <position position="80"/>
    </location>
</feature>
<feature type="modified residue" description="N6-(beta-hydroxybutyryl)lysine; alternate" evidence="46">
    <location>
        <position position="80"/>
    </location>
</feature>
<feature type="modified residue" description="N6-acetyllysine; alternate" evidence="26">
    <location>
        <position position="80"/>
    </location>
</feature>
<feature type="modified residue" description="N6-glutaryllysine; alternate" evidence="58">
    <location>
        <position position="80"/>
    </location>
</feature>
<feature type="modified residue" description="N6-lactoyllysine; alternate" evidence="59">
    <location>
        <position position="80"/>
    </location>
</feature>
<feature type="modified residue" description="N6-methyllysine; alternate" evidence="12 18 23 26">
    <location>
        <position position="80"/>
    </location>
</feature>
<feature type="modified residue" description="N6-succinyllysine; alternate" evidence="40 53">
    <location>
        <position position="80"/>
    </location>
</feature>
<feature type="modified residue" description="Phosphothreonine" evidence="35">
    <location>
        <position position="81"/>
    </location>
</feature>
<feature type="modified residue" description="Phosphoserine" evidence="2">
    <location>
        <position position="87"/>
    </location>
</feature>
<feature type="modified residue" description="Phosphothreonine" evidence="4">
    <location>
        <position position="108"/>
    </location>
</feature>
<feature type="modified residue" description="N6-acetyllysine; alternate" evidence="32">
    <location>
        <position position="116"/>
    </location>
</feature>
<feature type="modified residue" description="N6-glutaryllysine; alternate" evidence="58">
    <location>
        <position position="116"/>
    </location>
</feature>
<feature type="modified residue" description="N6-(2-hydroxyisobutyryl)lysine; alternate" evidence="44">
    <location>
        <position position="123"/>
    </location>
</feature>
<feature type="modified residue" description="N6-(beta-hydroxybutyryl)lysine; alternate" evidence="46">
    <location>
        <position position="123"/>
    </location>
</feature>
<feature type="modified residue" description="N6-acetyllysine; alternate" evidence="32 42">
    <location>
        <position position="123"/>
    </location>
</feature>
<feature type="modified residue" description="N6-glutaryllysine; alternate" evidence="58">
    <location>
        <position position="123"/>
    </location>
</feature>
<feature type="modified residue" description="N6-methyllysine; alternate" evidence="18 26">
    <location>
        <position position="123"/>
    </location>
</feature>
<feature type="modified residue" description="N6-succinyllysine; alternate" evidence="40 48">
    <location>
        <position position="123"/>
    </location>
</feature>
<feature type="lipid moiety-binding region" description="N6-decanoyllysine" evidence="63">
    <location>
        <position position="19"/>
    </location>
</feature>
<feature type="sequence variant" id="VAR_079018" description="In GLM; non-brain stem pediatric glioblastoma and diffuse intrinsic pontine glioma; somatic mutation; results in a global decrease of H3K27me3 levels; dbSNP:rs1057519904." evidence="38 43">
    <original>K</original>
    <variation>M</variation>
    <location>
        <position position="28"/>
    </location>
</feature>
<feature type="sequence variant" id="VAR_079019" description="Found in pediatric undifferentiated soft tissue sarcoma samples; uncertain significance; somatic mutation; results in global decrease of H3K36me2 and H3K36me3 levels and increased H3K27me3 levels." evidence="47">
    <original>K</original>
    <variation>I</variation>
    <location>
        <position position="37"/>
    </location>
</feature>
<feature type="sequence variant" id="VAR_079020" description="Found in pediatric undifferentiated soft tissue sarcoma samples; uncertain significance; somatic mutation; also found in a subset of human papillomavirus-negative head and neck squamous cell carcinomas; uncertain significance; results in global decrease of H3K36me2 and H3K36me3 levels and increased H3K27me3 levels." evidence="47 50">
    <original>K</original>
    <variation>M</variation>
    <location>
        <position position="37"/>
    </location>
</feature>
<feature type="sequence conflict" description="In Ref. 13; AAH67493." evidence="64" ref="13">
    <original>R</original>
    <variation>C</variation>
    <location>
        <position position="70"/>
    </location>
</feature>
<feature type="sequence conflict" description="In Ref. 7; CAB02546." evidence="64" ref="7">
    <original>Y</original>
    <variation>T</variation>
    <location>
        <position position="100"/>
    </location>
</feature>
<feature type="sequence conflict" description="In Ref. 13; AAH66884." evidence="64" ref="13">
    <original>P</original>
    <variation>L</variation>
    <location>
        <position position="122"/>
    </location>
</feature>
<feature type="sequence conflict" description="In Ref. 2; AAA52651." evidence="64" ref="2">
    <location>
        <position position="135"/>
    </location>
</feature>
<feature type="strand" evidence="83">
    <location>
        <begin position="4"/>
        <end position="7"/>
    </location>
</feature>
<feature type="strand" evidence="87">
    <location>
        <begin position="9"/>
        <end position="15"/>
    </location>
</feature>
<feature type="strand" evidence="81">
    <location>
        <begin position="25"/>
        <end position="27"/>
    </location>
</feature>
<feature type="strand" evidence="86">
    <location>
        <begin position="32"/>
        <end position="34"/>
    </location>
</feature>
<feature type="strand" evidence="85">
    <location>
        <begin position="35"/>
        <end position="37"/>
    </location>
</feature>
<feature type="strand" evidence="84">
    <location>
        <begin position="45"/>
        <end position="49"/>
    </location>
</feature>
<feature type="helix" evidence="82">
    <location>
        <begin position="50"/>
        <end position="58"/>
    </location>
</feature>
<feature type="helix" evidence="89">
    <location>
        <begin position="65"/>
        <end position="77"/>
    </location>
</feature>
<feature type="strand" evidence="88">
    <location>
        <begin position="80"/>
        <end position="82"/>
    </location>
</feature>
<feature type="helix" evidence="89">
    <location>
        <begin position="87"/>
        <end position="114"/>
    </location>
</feature>
<feature type="strand" evidence="89">
    <location>
        <begin position="118"/>
        <end position="120"/>
    </location>
</feature>
<feature type="helix" evidence="89">
    <location>
        <begin position="122"/>
        <end position="132"/>
    </location>
</feature>
<keyword id="KW-0002">3D-structure</keyword>
<keyword id="KW-0007">Acetylation</keyword>
<keyword id="KW-0013">ADP-ribosylation</keyword>
<keyword id="KW-0158">Chromosome</keyword>
<keyword id="KW-0164">Citrullination</keyword>
<keyword id="KW-0903">Direct protein sequencing</keyword>
<keyword id="KW-0225">Disease variant</keyword>
<keyword id="KW-0238">DNA-binding</keyword>
<keyword id="KW-0379">Hydroxylation</keyword>
<keyword id="KW-0449">Lipoprotein</keyword>
<keyword id="KW-0488">Methylation</keyword>
<keyword id="KW-0544">Nucleosome core</keyword>
<keyword id="KW-0539">Nucleus</keyword>
<keyword id="KW-0597">Phosphoprotein</keyword>
<keyword id="KW-1267">Proteomics identification</keyword>
<keyword id="KW-1185">Reference proteome</keyword>
<keyword id="KW-0832">Ubl conjugation</keyword>
<protein>
    <recommendedName>
        <fullName>Histone H3.1</fullName>
    </recommendedName>
    <alternativeName>
        <fullName>Histone H3/a</fullName>
    </alternativeName>
    <alternativeName>
        <fullName>Histone H3/b</fullName>
    </alternativeName>
    <alternativeName>
        <fullName>Histone H3/c</fullName>
    </alternativeName>
    <alternativeName>
        <fullName>Histone H3/d</fullName>
    </alternativeName>
    <alternativeName>
        <fullName>Histone H3/f</fullName>
    </alternativeName>
    <alternativeName>
        <fullName>Histone H3/h</fullName>
    </alternativeName>
    <alternativeName>
        <fullName>Histone H3/i</fullName>
    </alternativeName>
    <alternativeName>
        <fullName>Histone H3/j</fullName>
    </alternativeName>
    <alternativeName>
        <fullName>Histone H3/k</fullName>
    </alternativeName>
    <alternativeName>
        <fullName>Histone H3/l</fullName>
    </alternativeName>
</protein>
<sequence>MARTKQTARKSTGGKAPRKQLATKAARKSAPATGGVKKPHRYRPGTVALREIRRYQKSTELLIRKLPFQRLVREIAQDFKTDLRFQSSAVMALQEACEAYLVGLFEDTNLCAIHAKRVTIMPKDIQLARRIRGERA</sequence>
<organism>
    <name type="scientific">Homo sapiens</name>
    <name type="common">Human</name>
    <dbReference type="NCBI Taxonomy" id="9606"/>
    <lineage>
        <taxon>Eukaryota</taxon>
        <taxon>Metazoa</taxon>
        <taxon>Chordata</taxon>
        <taxon>Craniata</taxon>
        <taxon>Vertebrata</taxon>
        <taxon>Euteleostomi</taxon>
        <taxon>Mammalia</taxon>
        <taxon>Eutheria</taxon>
        <taxon>Euarchontoglires</taxon>
        <taxon>Primates</taxon>
        <taxon>Haplorrhini</taxon>
        <taxon>Catarrhini</taxon>
        <taxon>Hominidae</taxon>
        <taxon>Homo</taxon>
    </lineage>
</organism>